<organism>
    <name type="scientific">Homo sapiens</name>
    <name type="common">Human</name>
    <dbReference type="NCBI Taxonomy" id="9606"/>
    <lineage>
        <taxon>Eukaryota</taxon>
        <taxon>Metazoa</taxon>
        <taxon>Chordata</taxon>
        <taxon>Craniata</taxon>
        <taxon>Vertebrata</taxon>
        <taxon>Euteleostomi</taxon>
        <taxon>Mammalia</taxon>
        <taxon>Eutheria</taxon>
        <taxon>Euarchontoglires</taxon>
        <taxon>Primates</taxon>
        <taxon>Haplorrhini</taxon>
        <taxon>Catarrhini</taxon>
        <taxon>Hominidae</taxon>
        <taxon>Homo</taxon>
    </lineage>
</organism>
<keyword id="KW-0002">3D-structure</keyword>
<keyword id="KW-0007">Acetylation</keyword>
<keyword id="KW-1055">Congenital dyserythropoietic anemia</keyword>
<keyword id="KW-0903">Direct protein sequencing</keyword>
<keyword id="KW-0225">Disease variant</keyword>
<keyword id="KW-0971">Glycation</keyword>
<keyword id="KW-0325">Glycoprotein</keyword>
<keyword id="KW-0349">Heme</keyword>
<keyword id="KW-0360">Hereditary hemolytic anemia</keyword>
<keyword id="KW-0382">Hypotensive agent</keyword>
<keyword id="KW-0408">Iron</keyword>
<keyword id="KW-0479">Metal-binding</keyword>
<keyword id="KW-0561">Oxygen transport</keyword>
<keyword id="KW-0597">Phosphoprotein</keyword>
<keyword id="KW-1267">Proteomics identification</keyword>
<keyword id="KW-0670">Pyruvate</keyword>
<keyword id="KW-1185">Reference proteome</keyword>
<keyword id="KW-0702">S-nitrosylation</keyword>
<keyword id="KW-0813">Transport</keyword>
<keyword id="KW-0838">Vasoactive</keyword>
<accession>P68871</accession>
<accession>A4GX73</accession>
<accession>B2ZUE0</accession>
<accession>P02023</accession>
<accession>Q13852</accession>
<accession>Q14481</accession>
<accession>Q14510</accession>
<accession>Q45KT0</accession>
<accession>Q549N7</accession>
<accession>Q6FI08</accession>
<accession>Q6R7N2</accession>
<accession>Q8IZI1</accession>
<accession>Q9BX96</accession>
<accession>Q9UCD6</accession>
<accession>Q9UCP8</accession>
<accession>Q9UCP9</accession>
<sequence length="147" mass="15998">MVHLTPEEKSAVTALWGKVNVDEVGGEALGRLLVVYPWTQRFFESFGDLSTPDAVMGNPKVKAHGKKVLGAFSDGLAHLDNLKGTFATLSELHCDKLHVDPENFRLLGNVLVCVLAHHFGKEFTPPVQAAYQKVVAGVANALAHKYH</sequence>
<dbReference type="EMBL" id="M25079">
    <property type="protein sequence ID" value="AAA35597.1"/>
    <property type="molecule type" value="mRNA"/>
</dbReference>
<dbReference type="EMBL" id="V00499">
    <property type="protein sequence ID" value="CAA23758.1"/>
    <property type="molecule type" value="Genomic_DNA"/>
</dbReference>
<dbReference type="EMBL" id="DQ126270">
    <property type="protein sequence ID" value="AAZ39745.1"/>
    <property type="molecule type" value="Genomic_DNA"/>
</dbReference>
<dbReference type="EMBL" id="DQ126271">
    <property type="protein sequence ID" value="AAZ39746.1"/>
    <property type="molecule type" value="Genomic_DNA"/>
</dbReference>
<dbReference type="EMBL" id="DQ126272">
    <property type="protein sequence ID" value="AAZ39747.1"/>
    <property type="molecule type" value="Genomic_DNA"/>
</dbReference>
<dbReference type="EMBL" id="DQ126273">
    <property type="protein sequence ID" value="AAZ39748.1"/>
    <property type="molecule type" value="Genomic_DNA"/>
</dbReference>
<dbReference type="EMBL" id="DQ126274">
    <property type="protein sequence ID" value="AAZ39749.1"/>
    <property type="molecule type" value="Genomic_DNA"/>
</dbReference>
<dbReference type="EMBL" id="DQ126275">
    <property type="protein sequence ID" value="AAZ39750.1"/>
    <property type="molecule type" value="Genomic_DNA"/>
</dbReference>
<dbReference type="EMBL" id="DQ126276">
    <property type="protein sequence ID" value="AAZ39751.1"/>
    <property type="molecule type" value="Genomic_DNA"/>
</dbReference>
<dbReference type="EMBL" id="DQ126277">
    <property type="protein sequence ID" value="AAZ39752.1"/>
    <property type="molecule type" value="Genomic_DNA"/>
</dbReference>
<dbReference type="EMBL" id="DQ126278">
    <property type="protein sequence ID" value="AAZ39753.1"/>
    <property type="molecule type" value="Genomic_DNA"/>
</dbReference>
<dbReference type="EMBL" id="DQ126279">
    <property type="protein sequence ID" value="AAZ39754.1"/>
    <property type="molecule type" value="Genomic_DNA"/>
</dbReference>
<dbReference type="EMBL" id="DQ126280">
    <property type="protein sequence ID" value="AAZ39755.1"/>
    <property type="molecule type" value="Genomic_DNA"/>
</dbReference>
<dbReference type="EMBL" id="DQ126281">
    <property type="protein sequence ID" value="AAZ39756.1"/>
    <property type="molecule type" value="Genomic_DNA"/>
</dbReference>
<dbReference type="EMBL" id="DQ126282">
    <property type="protein sequence ID" value="AAZ39757.1"/>
    <property type="molecule type" value="Genomic_DNA"/>
</dbReference>
<dbReference type="EMBL" id="DQ126283">
    <property type="protein sequence ID" value="AAZ39758.1"/>
    <property type="molecule type" value="Genomic_DNA"/>
</dbReference>
<dbReference type="EMBL" id="DQ126284">
    <property type="protein sequence ID" value="AAZ39759.1"/>
    <property type="molecule type" value="Genomic_DNA"/>
</dbReference>
<dbReference type="EMBL" id="DQ126285">
    <property type="protein sequence ID" value="AAZ39760.1"/>
    <property type="molecule type" value="Genomic_DNA"/>
</dbReference>
<dbReference type="EMBL" id="DQ126286">
    <property type="protein sequence ID" value="AAZ39761.1"/>
    <property type="molecule type" value="Genomic_DNA"/>
</dbReference>
<dbReference type="EMBL" id="DQ126287">
    <property type="protein sequence ID" value="AAZ39762.1"/>
    <property type="molecule type" value="Genomic_DNA"/>
</dbReference>
<dbReference type="EMBL" id="DQ126288">
    <property type="protein sequence ID" value="AAZ39763.1"/>
    <property type="molecule type" value="Genomic_DNA"/>
</dbReference>
<dbReference type="EMBL" id="DQ126289">
    <property type="protein sequence ID" value="AAZ39764.1"/>
    <property type="molecule type" value="Genomic_DNA"/>
</dbReference>
<dbReference type="EMBL" id="DQ126290">
    <property type="protein sequence ID" value="AAZ39765.1"/>
    <property type="molecule type" value="Genomic_DNA"/>
</dbReference>
<dbReference type="EMBL" id="DQ126291">
    <property type="protein sequence ID" value="AAZ39766.1"/>
    <property type="molecule type" value="Genomic_DNA"/>
</dbReference>
<dbReference type="EMBL" id="DQ126292">
    <property type="protein sequence ID" value="AAZ39767.1"/>
    <property type="molecule type" value="Genomic_DNA"/>
</dbReference>
<dbReference type="EMBL" id="DQ126293">
    <property type="protein sequence ID" value="AAZ39768.1"/>
    <property type="molecule type" value="Genomic_DNA"/>
</dbReference>
<dbReference type="EMBL" id="DQ126294">
    <property type="protein sequence ID" value="AAZ39769.1"/>
    <property type="molecule type" value="Genomic_DNA"/>
</dbReference>
<dbReference type="EMBL" id="DQ126295">
    <property type="protein sequence ID" value="AAZ39770.1"/>
    <property type="molecule type" value="Genomic_DNA"/>
</dbReference>
<dbReference type="EMBL" id="DQ126296">
    <property type="protein sequence ID" value="AAZ39771.1"/>
    <property type="molecule type" value="Genomic_DNA"/>
</dbReference>
<dbReference type="EMBL" id="DQ126297">
    <property type="protein sequence ID" value="AAZ39772.1"/>
    <property type="molecule type" value="Genomic_DNA"/>
</dbReference>
<dbReference type="EMBL" id="DQ126298">
    <property type="protein sequence ID" value="AAZ39773.1"/>
    <property type="molecule type" value="Genomic_DNA"/>
</dbReference>
<dbReference type="EMBL" id="DQ126299">
    <property type="protein sequence ID" value="AAZ39774.1"/>
    <property type="molecule type" value="Genomic_DNA"/>
</dbReference>
<dbReference type="EMBL" id="DQ126300">
    <property type="protein sequence ID" value="AAZ39775.1"/>
    <property type="molecule type" value="Genomic_DNA"/>
</dbReference>
<dbReference type="EMBL" id="DQ126301">
    <property type="protein sequence ID" value="AAZ39776.1"/>
    <property type="molecule type" value="Genomic_DNA"/>
</dbReference>
<dbReference type="EMBL" id="DQ126302">
    <property type="protein sequence ID" value="AAZ39777.1"/>
    <property type="molecule type" value="Genomic_DNA"/>
</dbReference>
<dbReference type="EMBL" id="DQ126303">
    <property type="protein sequence ID" value="AAZ39778.1"/>
    <property type="molecule type" value="Genomic_DNA"/>
</dbReference>
<dbReference type="EMBL" id="DQ126304">
    <property type="protein sequence ID" value="AAZ39779.1"/>
    <property type="molecule type" value="Genomic_DNA"/>
</dbReference>
<dbReference type="EMBL" id="DQ126305">
    <property type="protein sequence ID" value="AAZ39780.1"/>
    <property type="molecule type" value="Genomic_DNA"/>
</dbReference>
<dbReference type="EMBL" id="DQ126306">
    <property type="protein sequence ID" value="AAZ39781.1"/>
    <property type="molecule type" value="Genomic_DNA"/>
</dbReference>
<dbReference type="EMBL" id="DQ126307">
    <property type="protein sequence ID" value="AAZ39782.1"/>
    <property type="molecule type" value="Genomic_DNA"/>
</dbReference>
<dbReference type="EMBL" id="DQ126308">
    <property type="protein sequence ID" value="AAZ39783.1"/>
    <property type="molecule type" value="Genomic_DNA"/>
</dbReference>
<dbReference type="EMBL" id="DQ126309">
    <property type="protein sequence ID" value="AAZ39784.1"/>
    <property type="molecule type" value="Genomic_DNA"/>
</dbReference>
<dbReference type="EMBL" id="DQ126310">
    <property type="protein sequence ID" value="AAZ39785.1"/>
    <property type="molecule type" value="Genomic_DNA"/>
</dbReference>
<dbReference type="EMBL" id="DQ126311">
    <property type="protein sequence ID" value="AAZ39786.1"/>
    <property type="molecule type" value="Genomic_DNA"/>
</dbReference>
<dbReference type="EMBL" id="DQ126312">
    <property type="protein sequence ID" value="AAZ39787.1"/>
    <property type="molecule type" value="Genomic_DNA"/>
</dbReference>
<dbReference type="EMBL" id="DQ126313">
    <property type="protein sequence ID" value="AAZ39788.1"/>
    <property type="molecule type" value="Genomic_DNA"/>
</dbReference>
<dbReference type="EMBL" id="DQ126314">
    <property type="protein sequence ID" value="AAZ39789.1"/>
    <property type="molecule type" value="Genomic_DNA"/>
</dbReference>
<dbReference type="EMBL" id="DQ126315">
    <property type="protein sequence ID" value="AAZ39790.1"/>
    <property type="molecule type" value="Genomic_DNA"/>
</dbReference>
<dbReference type="EMBL" id="DQ126316">
    <property type="protein sequence ID" value="AAZ39791.1"/>
    <property type="molecule type" value="Genomic_DNA"/>
</dbReference>
<dbReference type="EMBL" id="DQ126317">
    <property type="protein sequence ID" value="AAZ39792.1"/>
    <property type="molecule type" value="Genomic_DNA"/>
</dbReference>
<dbReference type="EMBL" id="DQ126318">
    <property type="protein sequence ID" value="AAZ39793.1"/>
    <property type="molecule type" value="Genomic_DNA"/>
</dbReference>
<dbReference type="EMBL" id="DQ126319">
    <property type="protein sequence ID" value="AAZ39794.1"/>
    <property type="molecule type" value="Genomic_DNA"/>
</dbReference>
<dbReference type="EMBL" id="DQ126320">
    <property type="protein sequence ID" value="AAZ39795.1"/>
    <property type="molecule type" value="Genomic_DNA"/>
</dbReference>
<dbReference type="EMBL" id="DQ126321">
    <property type="protein sequence ID" value="AAZ39796.1"/>
    <property type="molecule type" value="Genomic_DNA"/>
</dbReference>
<dbReference type="EMBL" id="DQ126322">
    <property type="protein sequence ID" value="AAZ39797.1"/>
    <property type="molecule type" value="Genomic_DNA"/>
</dbReference>
<dbReference type="EMBL" id="DQ126323">
    <property type="protein sequence ID" value="AAZ39798.1"/>
    <property type="molecule type" value="Genomic_DNA"/>
</dbReference>
<dbReference type="EMBL" id="DQ126324">
    <property type="protein sequence ID" value="AAZ39799.1"/>
    <property type="molecule type" value="Genomic_DNA"/>
</dbReference>
<dbReference type="EMBL" id="DQ126325">
    <property type="protein sequence ID" value="AAZ39800.1"/>
    <property type="molecule type" value="Genomic_DNA"/>
</dbReference>
<dbReference type="EMBL" id="AF007546">
    <property type="protein sequence ID" value="AAB62944.1"/>
    <property type="molecule type" value="Genomic_DNA"/>
</dbReference>
<dbReference type="EMBL" id="AF083883">
    <property type="protein sequence ID" value="AAL68978.1"/>
    <property type="molecule type" value="Genomic_DNA"/>
</dbReference>
<dbReference type="EMBL" id="AF117710">
    <property type="protein sequence ID" value="AAD19696.1"/>
    <property type="molecule type" value="mRNA"/>
</dbReference>
<dbReference type="EMBL" id="AF181989">
    <property type="protein sequence ID" value="AAF00489.1"/>
    <property type="molecule type" value="mRNA"/>
</dbReference>
<dbReference type="EMBL" id="AF349114">
    <property type="protein sequence ID" value="AAK29639.1"/>
    <property type="molecule type" value="mRNA"/>
</dbReference>
<dbReference type="EMBL" id="AF527577">
    <property type="protein sequence ID" value="AAM92001.1"/>
    <property type="molecule type" value="Genomic_DNA"/>
</dbReference>
<dbReference type="EMBL" id="AY136510">
    <property type="protein sequence ID" value="AAN11320.1"/>
    <property type="molecule type" value="mRNA"/>
</dbReference>
<dbReference type="EMBL" id="AY163866">
    <property type="protein sequence ID" value="AAN84548.1"/>
    <property type="molecule type" value="Genomic_DNA"/>
</dbReference>
<dbReference type="EMBL" id="AY260740">
    <property type="protein sequence ID" value="AAP21062.1"/>
    <property type="molecule type" value="Genomic_DNA"/>
</dbReference>
<dbReference type="EMBL" id="AY509193">
    <property type="protein sequence ID" value="AAR96398.1"/>
    <property type="molecule type" value="mRNA"/>
</dbReference>
<dbReference type="EMBL" id="EF450778">
    <property type="protein sequence ID" value="ABO36678.1"/>
    <property type="molecule type" value="Genomic_DNA"/>
</dbReference>
<dbReference type="EMBL" id="EU694432">
    <property type="protein sequence ID" value="ACD39349.1"/>
    <property type="molecule type" value="mRNA"/>
</dbReference>
<dbReference type="EMBL" id="AK311825">
    <property type="protein sequence ID" value="BAG34767.1"/>
    <property type="molecule type" value="mRNA"/>
</dbReference>
<dbReference type="EMBL" id="CR536530">
    <property type="protein sequence ID" value="CAG38767.1"/>
    <property type="molecule type" value="mRNA"/>
</dbReference>
<dbReference type="EMBL" id="CR541913">
    <property type="protein sequence ID" value="CAG46711.1"/>
    <property type="molecule type" value="mRNA"/>
</dbReference>
<dbReference type="EMBL" id="CH471064">
    <property type="protein sequence ID" value="EAW68806.1"/>
    <property type="molecule type" value="Genomic_DNA"/>
</dbReference>
<dbReference type="EMBL" id="BC007075">
    <property type="protein sequence ID" value="AAH07075.1"/>
    <property type="molecule type" value="mRNA"/>
</dbReference>
<dbReference type="EMBL" id="U01317">
    <property type="protein sequence ID" value="AAA16334.1"/>
    <property type="molecule type" value="Genomic_DNA"/>
</dbReference>
<dbReference type="EMBL" id="V00497">
    <property type="protein sequence ID" value="CAA23756.1"/>
    <property type="molecule type" value="mRNA"/>
</dbReference>
<dbReference type="EMBL" id="V00500">
    <property type="protein sequence ID" value="CAA23759.1"/>
    <property type="status" value="ALT_SEQ"/>
    <property type="molecule type" value="mRNA"/>
</dbReference>
<dbReference type="EMBL" id="L26462">
    <property type="protein sequence ID" value="AAA21100.1"/>
    <property type="molecule type" value="Genomic_DNA"/>
</dbReference>
<dbReference type="EMBL" id="L26463">
    <property type="protein sequence ID" value="AAA21101.1"/>
    <property type="molecule type" value="Genomic_DNA"/>
</dbReference>
<dbReference type="EMBL" id="L26464">
    <property type="protein sequence ID" value="AAA21102.1"/>
    <property type="molecule type" value="Genomic_DNA"/>
</dbReference>
<dbReference type="EMBL" id="L26465">
    <property type="protein sequence ID" value="AAA21103.1"/>
    <property type="molecule type" value="Genomic_DNA"/>
</dbReference>
<dbReference type="EMBL" id="L26466">
    <property type="protein sequence ID" value="AAA21104.1"/>
    <property type="molecule type" value="Genomic_DNA"/>
</dbReference>
<dbReference type="EMBL" id="L26467">
    <property type="protein sequence ID" value="AAA21105.1"/>
    <property type="molecule type" value="Genomic_DNA"/>
</dbReference>
<dbReference type="EMBL" id="L26468">
    <property type="protein sequence ID" value="AAA21106.1"/>
    <property type="molecule type" value="Genomic_DNA"/>
</dbReference>
<dbReference type="EMBL" id="L26469">
    <property type="protein sequence ID" value="AAA21107.1"/>
    <property type="molecule type" value="Genomic_DNA"/>
</dbReference>
<dbReference type="EMBL" id="L26470">
    <property type="protein sequence ID" value="AAA21108.1"/>
    <property type="molecule type" value="Genomic_DNA"/>
</dbReference>
<dbReference type="EMBL" id="L26471">
    <property type="protein sequence ID" value="AAA21109.1"/>
    <property type="molecule type" value="Genomic_DNA"/>
</dbReference>
<dbReference type="EMBL" id="L26472">
    <property type="protein sequence ID" value="AAA21110.1"/>
    <property type="molecule type" value="Genomic_DNA"/>
</dbReference>
<dbReference type="EMBL" id="L26473">
    <property type="protein sequence ID" value="AAA21111.1"/>
    <property type="molecule type" value="Genomic_DNA"/>
</dbReference>
<dbReference type="EMBL" id="L26474">
    <property type="protein sequence ID" value="AAA21112.1"/>
    <property type="molecule type" value="Genomic_DNA"/>
</dbReference>
<dbReference type="EMBL" id="L26475">
    <property type="protein sequence ID" value="AAA21113.1"/>
    <property type="molecule type" value="Genomic_DNA"/>
</dbReference>
<dbReference type="EMBL" id="L26476">
    <property type="protein sequence ID" value="AAA21114.1"/>
    <property type="molecule type" value="Genomic_DNA"/>
</dbReference>
<dbReference type="EMBL" id="L26477">
    <property type="protein sequence ID" value="AAA21115.1"/>
    <property type="molecule type" value="Genomic_DNA"/>
</dbReference>
<dbReference type="EMBL" id="L26478">
    <property type="protein sequence ID" value="AAA21116.1"/>
    <property type="molecule type" value="Genomic_DNA"/>
</dbReference>
<dbReference type="EMBL" id="L48213">
    <property type="protein sequence ID" value="AAA88063.1"/>
    <property type="molecule type" value="Genomic_DNA"/>
</dbReference>
<dbReference type="EMBL" id="L48214">
    <property type="protein sequence ID" value="AAA88061.1"/>
    <property type="molecule type" value="Genomic_DNA"/>
</dbReference>
<dbReference type="EMBL" id="L48215">
    <property type="protein sequence ID" value="AAA88059.1"/>
    <property type="molecule type" value="Genomic_DNA"/>
</dbReference>
<dbReference type="EMBL" id="L48216">
    <property type="protein sequence ID" value="AAA88065.1"/>
    <property type="molecule type" value="Genomic_DNA"/>
</dbReference>
<dbReference type="EMBL" id="L48217">
    <property type="protein sequence ID" value="AAA88067.1"/>
    <property type="molecule type" value="Genomic_DNA"/>
</dbReference>
<dbReference type="EMBL" id="M36640">
    <property type="protein sequence ID" value="AAA52634.1"/>
    <property type="molecule type" value="Genomic_DNA"/>
</dbReference>
<dbReference type="EMBL" id="M11428">
    <property type="protein sequence ID" value="AAA52633.1"/>
    <property type="molecule type" value="mRNA"/>
</dbReference>
<dbReference type="EMBL" id="M25113">
    <property type="protein sequence ID" value="AAA35966.1"/>
    <property type="molecule type" value="mRNA"/>
</dbReference>
<dbReference type="EMBL" id="L48932">
    <property type="protein sequence ID" value="AAA88054.1"/>
    <property type="molecule type" value="Genomic_DNA"/>
</dbReference>
<dbReference type="CCDS" id="CCDS7753.1"/>
<dbReference type="PIR" id="A53136">
    <property type="entry name" value="HBHU"/>
</dbReference>
<dbReference type="RefSeq" id="NP_000509.1">
    <property type="nucleotide sequence ID" value="NM_000518.5"/>
</dbReference>
<dbReference type="PDB" id="1A00">
    <property type="method" value="X-ray"/>
    <property type="resolution" value="2.00 A"/>
    <property type="chains" value="B/D=3-147"/>
</dbReference>
<dbReference type="PDB" id="1A01">
    <property type="method" value="X-ray"/>
    <property type="resolution" value="1.80 A"/>
    <property type="chains" value="B/D=3-147"/>
</dbReference>
<dbReference type="PDB" id="1A0U">
    <property type="method" value="X-ray"/>
    <property type="resolution" value="2.14 A"/>
    <property type="chains" value="B/D=3-147"/>
</dbReference>
<dbReference type="PDB" id="1A0Z">
    <property type="method" value="X-ray"/>
    <property type="resolution" value="2.00 A"/>
    <property type="chains" value="B/D=3-147"/>
</dbReference>
<dbReference type="PDB" id="1A3N">
    <property type="method" value="X-ray"/>
    <property type="resolution" value="1.80 A"/>
    <property type="chains" value="B/D=2-147"/>
</dbReference>
<dbReference type="PDB" id="1A3O">
    <property type="method" value="X-ray"/>
    <property type="resolution" value="1.80 A"/>
    <property type="chains" value="B/D=2-147"/>
</dbReference>
<dbReference type="PDB" id="1ABW">
    <property type="method" value="X-ray"/>
    <property type="resolution" value="2.00 A"/>
    <property type="chains" value="B/D=3-147"/>
</dbReference>
<dbReference type="PDB" id="1ABY">
    <property type="method" value="X-ray"/>
    <property type="resolution" value="2.60 A"/>
    <property type="chains" value="B/D=3-147"/>
</dbReference>
<dbReference type="PDB" id="1AJ9">
    <property type="method" value="X-ray"/>
    <property type="resolution" value="2.20 A"/>
    <property type="chains" value="B=2-147"/>
</dbReference>
<dbReference type="PDB" id="1B86">
    <property type="method" value="X-ray"/>
    <property type="resolution" value="2.50 A"/>
    <property type="chains" value="B/D=2-147"/>
</dbReference>
<dbReference type="PDB" id="1BAB">
    <property type="method" value="X-ray"/>
    <property type="resolution" value="1.50 A"/>
    <property type="chains" value="B/D=2-147"/>
</dbReference>
<dbReference type="PDB" id="1BBB">
    <property type="method" value="X-ray"/>
    <property type="resolution" value="1.70 A"/>
    <property type="chains" value="B/D=2-147"/>
</dbReference>
<dbReference type="PDB" id="1BIJ">
    <property type="method" value="X-ray"/>
    <property type="resolution" value="2.30 A"/>
    <property type="chains" value="B/D=2-147"/>
</dbReference>
<dbReference type="PDB" id="1BUW">
    <property type="method" value="X-ray"/>
    <property type="resolution" value="1.90 A"/>
    <property type="chains" value="B/D=2-147"/>
</dbReference>
<dbReference type="PDB" id="1BZ0">
    <property type="method" value="X-ray"/>
    <property type="resolution" value="1.50 A"/>
    <property type="chains" value="B/D=2-147"/>
</dbReference>
<dbReference type="PDB" id="1BZ1">
    <property type="method" value="X-ray"/>
    <property type="resolution" value="1.59 A"/>
    <property type="chains" value="B/D=2-147"/>
</dbReference>
<dbReference type="PDB" id="1BZZ">
    <property type="method" value="X-ray"/>
    <property type="resolution" value="1.59 A"/>
    <property type="chains" value="B/D=2-147"/>
</dbReference>
<dbReference type="PDB" id="1C7B">
    <property type="method" value="X-ray"/>
    <property type="resolution" value="1.80 A"/>
    <property type="chains" value="B/D=2-147"/>
</dbReference>
<dbReference type="PDB" id="1C7C">
    <property type="method" value="X-ray"/>
    <property type="resolution" value="1.80 A"/>
    <property type="chains" value="B/D=2-147"/>
</dbReference>
<dbReference type="PDB" id="1C7D">
    <property type="method" value="X-ray"/>
    <property type="resolution" value="1.80 A"/>
    <property type="chains" value="B/D=2-147"/>
</dbReference>
<dbReference type="PDB" id="1CBL">
    <property type="method" value="X-ray"/>
    <property type="resolution" value="1.80 A"/>
    <property type="chains" value="A/B/C/D=2-147"/>
</dbReference>
<dbReference type="PDB" id="1CBM">
    <property type="method" value="X-ray"/>
    <property type="resolution" value="1.74 A"/>
    <property type="chains" value="A/B/C/D=2-147"/>
</dbReference>
<dbReference type="PDB" id="1CH4">
    <property type="method" value="X-ray"/>
    <property type="resolution" value="2.50 A"/>
    <property type="chains" value="A/B/C/D=2-146"/>
</dbReference>
<dbReference type="PDB" id="1CLS">
    <property type="method" value="X-ray"/>
    <property type="resolution" value="1.90 A"/>
    <property type="chains" value="B/D=2-147"/>
</dbReference>
<dbReference type="PDB" id="1CMY">
    <property type="method" value="X-ray"/>
    <property type="resolution" value="3.00 A"/>
    <property type="chains" value="B/D=2-147"/>
</dbReference>
<dbReference type="PDB" id="1COH">
    <property type="method" value="X-ray"/>
    <property type="resolution" value="2.90 A"/>
    <property type="chains" value="B/D=2-147"/>
</dbReference>
<dbReference type="PDB" id="1DKE">
    <property type="method" value="X-ray"/>
    <property type="resolution" value="2.10 A"/>
    <property type="chains" value="B/D=2-147"/>
</dbReference>
<dbReference type="PDB" id="1DXT">
    <property type="method" value="X-ray"/>
    <property type="resolution" value="1.70 A"/>
    <property type="chains" value="B/D=1-147"/>
</dbReference>
<dbReference type="PDB" id="1DXU">
    <property type="method" value="X-ray"/>
    <property type="resolution" value="1.70 A"/>
    <property type="chains" value="B/D=3-147"/>
</dbReference>
<dbReference type="PDB" id="1DXV">
    <property type="method" value="X-ray"/>
    <property type="resolution" value="1.70 A"/>
    <property type="chains" value="B/D=3-147"/>
</dbReference>
<dbReference type="PDB" id="1FN3">
    <property type="method" value="X-ray"/>
    <property type="resolution" value="2.48 A"/>
    <property type="chains" value="B/D=2-147"/>
</dbReference>
<dbReference type="PDB" id="1G9V">
    <property type="method" value="X-ray"/>
    <property type="resolution" value="1.85 A"/>
    <property type="chains" value="B/D=2-147"/>
</dbReference>
<dbReference type="PDB" id="1GBU">
    <property type="method" value="X-ray"/>
    <property type="resolution" value="1.80 A"/>
    <property type="chains" value="B/D=2-147"/>
</dbReference>
<dbReference type="PDB" id="1GBV">
    <property type="method" value="X-ray"/>
    <property type="resolution" value="2.00 A"/>
    <property type="chains" value="B/D=2-147"/>
</dbReference>
<dbReference type="PDB" id="1GLI">
    <property type="method" value="X-ray"/>
    <property type="resolution" value="2.50 A"/>
    <property type="chains" value="B/D=3-147"/>
</dbReference>
<dbReference type="PDB" id="1GZX">
    <property type="method" value="X-ray"/>
    <property type="resolution" value="2.10 A"/>
    <property type="chains" value="B/D=2-147"/>
</dbReference>
<dbReference type="PDB" id="1HAB">
    <property type="method" value="X-ray"/>
    <property type="resolution" value="2.30 A"/>
    <property type="chains" value="B/D=2-147"/>
</dbReference>
<dbReference type="PDB" id="1HAC">
    <property type="method" value="X-ray"/>
    <property type="resolution" value="2.60 A"/>
    <property type="chains" value="B/D=2-147"/>
</dbReference>
<dbReference type="PDB" id="1HBA">
    <property type="method" value="X-ray"/>
    <property type="resolution" value="2.10 A"/>
    <property type="chains" value="B/D=2-147"/>
</dbReference>
<dbReference type="PDB" id="1HBB">
    <property type="method" value="X-ray"/>
    <property type="resolution" value="1.90 A"/>
    <property type="chains" value="B/D=2-147"/>
</dbReference>
<dbReference type="PDB" id="1HBS">
    <property type="method" value="X-ray"/>
    <property type="resolution" value="3.00 A"/>
    <property type="chains" value="B/D/F/H=2-147"/>
</dbReference>
<dbReference type="PDB" id="1HCO">
    <property type="method" value="X-ray"/>
    <property type="resolution" value="2.70 A"/>
    <property type="chains" value="B=2-147"/>
</dbReference>
<dbReference type="PDB" id="1HDB">
    <property type="method" value="X-ray"/>
    <property type="resolution" value="2.20 A"/>
    <property type="chains" value="B/D=2-147"/>
</dbReference>
<dbReference type="PDB" id="1HGA">
    <property type="method" value="X-ray"/>
    <property type="resolution" value="2.10 A"/>
    <property type="chains" value="B/D=2-147"/>
</dbReference>
<dbReference type="PDB" id="1HGB">
    <property type="method" value="X-ray"/>
    <property type="resolution" value="2.10 A"/>
    <property type="chains" value="B/D=2-147"/>
</dbReference>
<dbReference type="PDB" id="1HGC">
    <property type="method" value="X-ray"/>
    <property type="resolution" value="2.10 A"/>
    <property type="chains" value="B/D=2-147"/>
</dbReference>
<dbReference type="PDB" id="1HHO">
    <property type="method" value="X-ray"/>
    <property type="resolution" value="2.10 A"/>
    <property type="chains" value="B=2-147"/>
</dbReference>
<dbReference type="PDB" id="1IRD">
    <property type="method" value="X-ray"/>
    <property type="resolution" value="1.25 A"/>
    <property type="chains" value="B=2-147"/>
</dbReference>
<dbReference type="PDB" id="1J3Y">
    <property type="method" value="X-ray"/>
    <property type="resolution" value="1.55 A"/>
    <property type="chains" value="B/D/F/H=2-147"/>
</dbReference>
<dbReference type="PDB" id="1J3Z">
    <property type="method" value="X-ray"/>
    <property type="resolution" value="1.60 A"/>
    <property type="chains" value="B/D/F/H=2-147"/>
</dbReference>
<dbReference type="PDB" id="1J40">
    <property type="method" value="X-ray"/>
    <property type="resolution" value="1.45 A"/>
    <property type="chains" value="B/D/F/H=2-147"/>
</dbReference>
<dbReference type="PDB" id="1J41">
    <property type="method" value="X-ray"/>
    <property type="resolution" value="1.45 A"/>
    <property type="chains" value="B/D/F/H=2-147"/>
</dbReference>
<dbReference type="PDB" id="1J7S">
    <property type="method" value="X-ray"/>
    <property type="resolution" value="2.20 A"/>
    <property type="chains" value="B/D=2-147"/>
</dbReference>
<dbReference type="PDB" id="1J7W">
    <property type="method" value="X-ray"/>
    <property type="resolution" value="2.00 A"/>
    <property type="chains" value="B/D=2-147"/>
</dbReference>
<dbReference type="PDB" id="1J7Y">
    <property type="method" value="X-ray"/>
    <property type="resolution" value="1.70 A"/>
    <property type="chains" value="B/D=2-147"/>
</dbReference>
<dbReference type="PDB" id="1JY7">
    <property type="method" value="X-ray"/>
    <property type="resolution" value="3.20 A"/>
    <property type="chains" value="B/D/Q/S/V/X=2-147"/>
</dbReference>
<dbReference type="PDB" id="1K0Y">
    <property type="method" value="X-ray"/>
    <property type="resolution" value="1.87 A"/>
    <property type="chains" value="B/D=2-147"/>
</dbReference>
<dbReference type="PDB" id="1K1K">
    <property type="method" value="X-ray"/>
    <property type="resolution" value="2.00 A"/>
    <property type="chains" value="B=2-147"/>
</dbReference>
<dbReference type="PDB" id="1KD2">
    <property type="method" value="X-ray"/>
    <property type="resolution" value="1.87 A"/>
    <property type="chains" value="B/D=2-147"/>
</dbReference>
<dbReference type="PDB" id="1LFL">
    <property type="method" value="X-ray"/>
    <property type="resolution" value="2.70 A"/>
    <property type="chains" value="B/D/Q/S=2-147"/>
</dbReference>
<dbReference type="PDB" id="1LFQ">
    <property type="method" value="X-ray"/>
    <property type="resolution" value="2.60 A"/>
    <property type="chains" value="B=2-147"/>
</dbReference>
<dbReference type="PDB" id="1LFT">
    <property type="method" value="X-ray"/>
    <property type="resolution" value="2.60 A"/>
    <property type="chains" value="B=2-147"/>
</dbReference>
<dbReference type="PDB" id="1LFV">
    <property type="method" value="X-ray"/>
    <property type="resolution" value="2.80 A"/>
    <property type="chains" value="B=2-147"/>
</dbReference>
<dbReference type="PDB" id="1LFY">
    <property type="method" value="X-ray"/>
    <property type="resolution" value="3.30 A"/>
    <property type="chains" value="B=2-147"/>
</dbReference>
<dbReference type="PDB" id="1LFZ">
    <property type="method" value="X-ray"/>
    <property type="resolution" value="3.10 A"/>
    <property type="chains" value="B=2-147"/>
</dbReference>
<dbReference type="PDB" id="1LJW">
    <property type="method" value="X-ray"/>
    <property type="resolution" value="2.16 A"/>
    <property type="chains" value="B=2-147"/>
</dbReference>
<dbReference type="PDB" id="1M9P">
    <property type="method" value="X-ray"/>
    <property type="resolution" value="2.10 A"/>
    <property type="chains" value="B/D=2-147"/>
</dbReference>
<dbReference type="PDB" id="1MKO">
    <property type="method" value="X-ray"/>
    <property type="resolution" value="2.18 A"/>
    <property type="chains" value="B/D=2-147"/>
</dbReference>
<dbReference type="PDB" id="1NEJ">
    <property type="method" value="X-ray"/>
    <property type="resolution" value="2.10 A"/>
    <property type="chains" value="B/D=2-147"/>
</dbReference>
<dbReference type="PDB" id="1NIH">
    <property type="method" value="X-ray"/>
    <property type="resolution" value="2.60 A"/>
    <property type="chains" value="B/D=2-147"/>
</dbReference>
<dbReference type="PDB" id="1NQP">
    <property type="method" value="X-ray"/>
    <property type="resolution" value="1.73 A"/>
    <property type="chains" value="B/D=2-147"/>
</dbReference>
<dbReference type="PDB" id="1O1I">
    <property type="method" value="X-ray"/>
    <property type="resolution" value="2.30 A"/>
    <property type="chains" value="B=2-147"/>
</dbReference>
<dbReference type="PDB" id="1O1J">
    <property type="method" value="X-ray"/>
    <property type="resolution" value="1.90 A"/>
    <property type="chains" value="B/D=2-147"/>
</dbReference>
<dbReference type="PDB" id="1O1K">
    <property type="method" value="X-ray"/>
    <property type="resolution" value="2.00 A"/>
    <property type="chains" value="B/D=2-147"/>
</dbReference>
<dbReference type="PDB" id="1O1L">
    <property type="method" value="X-ray"/>
    <property type="resolution" value="1.80 A"/>
    <property type="chains" value="B/D=2-147"/>
</dbReference>
<dbReference type="PDB" id="1O1M">
    <property type="method" value="X-ray"/>
    <property type="resolution" value="1.85 A"/>
    <property type="chains" value="B/D=2-147"/>
</dbReference>
<dbReference type="PDB" id="1O1N">
    <property type="method" value="X-ray"/>
    <property type="resolution" value="1.80 A"/>
    <property type="chains" value="B/D=2-147"/>
</dbReference>
<dbReference type="PDB" id="1O1O">
    <property type="method" value="X-ray"/>
    <property type="resolution" value="1.80 A"/>
    <property type="chains" value="B/D=2-147"/>
</dbReference>
<dbReference type="PDB" id="1O1P">
    <property type="method" value="X-ray"/>
    <property type="resolution" value="1.80 A"/>
    <property type="chains" value="B/D=2-147"/>
</dbReference>
<dbReference type="PDB" id="1QI8">
    <property type="method" value="X-ray"/>
    <property type="resolution" value="1.80 A"/>
    <property type="chains" value="B/D=3-147"/>
</dbReference>
<dbReference type="PDB" id="1QSH">
    <property type="method" value="X-ray"/>
    <property type="resolution" value="1.70 A"/>
    <property type="chains" value="B/D=2-147"/>
</dbReference>
<dbReference type="PDB" id="1QSI">
    <property type="method" value="X-ray"/>
    <property type="resolution" value="1.70 A"/>
    <property type="chains" value="B/D=2-147"/>
</dbReference>
<dbReference type="PDB" id="1QXD">
    <property type="method" value="X-ray"/>
    <property type="resolution" value="2.25 A"/>
    <property type="chains" value="B/D=2-147"/>
</dbReference>
<dbReference type="PDB" id="1QXE">
    <property type="method" value="X-ray"/>
    <property type="resolution" value="1.85 A"/>
    <property type="chains" value="B/D=2-147"/>
</dbReference>
<dbReference type="PDB" id="1R1X">
    <property type="method" value="X-ray"/>
    <property type="resolution" value="2.15 A"/>
    <property type="chains" value="B=2-147"/>
</dbReference>
<dbReference type="PDB" id="1R1Y">
    <property type="method" value="X-ray"/>
    <property type="resolution" value="1.80 A"/>
    <property type="chains" value="B/D=2-147"/>
</dbReference>
<dbReference type="PDB" id="1RPS">
    <property type="method" value="X-ray"/>
    <property type="resolution" value="2.11 A"/>
    <property type="chains" value="B/D=2-147"/>
</dbReference>
<dbReference type="PDB" id="1RQ3">
    <property type="method" value="X-ray"/>
    <property type="resolution" value="1.91 A"/>
    <property type="chains" value="B/D=2-147"/>
</dbReference>
<dbReference type="PDB" id="1RQ4">
    <property type="method" value="X-ray"/>
    <property type="resolution" value="2.11 A"/>
    <property type="chains" value="B/D=2-147"/>
</dbReference>
<dbReference type="PDB" id="1RQA">
    <property type="method" value="X-ray"/>
    <property type="resolution" value="2.11 A"/>
    <property type="chains" value="B/D=2-147"/>
</dbReference>
<dbReference type="PDB" id="1RVW">
    <property type="method" value="X-ray"/>
    <property type="resolution" value="2.50 A"/>
    <property type="chains" value="B=2-147"/>
</dbReference>
<dbReference type="PDB" id="1SDK">
    <property type="method" value="X-ray"/>
    <property type="resolution" value="1.80 A"/>
    <property type="chains" value="B/D=2-147"/>
</dbReference>
<dbReference type="PDB" id="1SDL">
    <property type="method" value="X-ray"/>
    <property type="resolution" value="1.80 A"/>
    <property type="chains" value="B/D=2-147"/>
</dbReference>
<dbReference type="PDB" id="1THB">
    <property type="method" value="X-ray"/>
    <property type="resolution" value="1.50 A"/>
    <property type="chains" value="B/D=2-147"/>
</dbReference>
<dbReference type="PDB" id="1UIW">
    <property type="method" value="X-ray"/>
    <property type="resolution" value="1.50 A"/>
    <property type="chains" value="B/D/F/H=2-147"/>
</dbReference>
<dbReference type="PDB" id="1VWT">
    <property type="method" value="X-ray"/>
    <property type="resolution" value="1.90 A"/>
    <property type="chains" value="B/D=2-147"/>
</dbReference>
<dbReference type="PDB" id="1XXT">
    <property type="method" value="X-ray"/>
    <property type="resolution" value="1.91 A"/>
    <property type="chains" value="B/D=2-147"/>
</dbReference>
<dbReference type="PDB" id="1XY0">
    <property type="method" value="X-ray"/>
    <property type="resolution" value="1.99 A"/>
    <property type="chains" value="B/D=2-147"/>
</dbReference>
<dbReference type="PDB" id="1XYE">
    <property type="method" value="X-ray"/>
    <property type="resolution" value="2.13 A"/>
    <property type="chains" value="B/D=2-147"/>
</dbReference>
<dbReference type="PDB" id="1XZ2">
    <property type="method" value="X-ray"/>
    <property type="resolution" value="1.90 A"/>
    <property type="chains" value="B/D=2-147"/>
</dbReference>
<dbReference type="PDB" id="1XZ4">
    <property type="method" value="X-ray"/>
    <property type="resolution" value="2.00 A"/>
    <property type="chains" value="B/D=2-147"/>
</dbReference>
<dbReference type="PDB" id="1XZ5">
    <property type="method" value="X-ray"/>
    <property type="resolution" value="2.11 A"/>
    <property type="chains" value="B/D=2-147"/>
</dbReference>
<dbReference type="PDB" id="1XZ7">
    <property type="method" value="X-ray"/>
    <property type="resolution" value="1.90 A"/>
    <property type="chains" value="B/D=2-147"/>
</dbReference>
<dbReference type="PDB" id="1XZU">
    <property type="method" value="X-ray"/>
    <property type="resolution" value="2.16 A"/>
    <property type="chains" value="B/D=2-147"/>
</dbReference>
<dbReference type="PDB" id="1XZV">
    <property type="method" value="X-ray"/>
    <property type="resolution" value="2.11 A"/>
    <property type="chains" value="B/D=2-147"/>
</dbReference>
<dbReference type="PDB" id="1Y09">
    <property type="method" value="X-ray"/>
    <property type="resolution" value="2.25 A"/>
    <property type="chains" value="B/D=2-147"/>
</dbReference>
<dbReference type="PDB" id="1Y0A">
    <property type="method" value="X-ray"/>
    <property type="resolution" value="2.22 A"/>
    <property type="chains" value="B/D=2-147"/>
</dbReference>
<dbReference type="PDB" id="1Y0C">
    <property type="method" value="X-ray"/>
    <property type="resolution" value="2.30 A"/>
    <property type="chains" value="B/D=2-147"/>
</dbReference>
<dbReference type="PDB" id="1Y0D">
    <property type="method" value="X-ray"/>
    <property type="resolution" value="2.10 A"/>
    <property type="chains" value="B/D=2-147"/>
</dbReference>
<dbReference type="PDB" id="1Y0T">
    <property type="method" value="X-ray"/>
    <property type="resolution" value="2.14 A"/>
    <property type="chains" value="B/D=2-147"/>
</dbReference>
<dbReference type="PDB" id="1Y0W">
    <property type="method" value="X-ray"/>
    <property type="resolution" value="2.14 A"/>
    <property type="chains" value="B/D=2-147"/>
</dbReference>
<dbReference type="PDB" id="1Y22">
    <property type="method" value="X-ray"/>
    <property type="resolution" value="2.16 A"/>
    <property type="chains" value="B/D=2-147"/>
</dbReference>
<dbReference type="PDB" id="1Y2Z">
    <property type="method" value="X-ray"/>
    <property type="resolution" value="2.07 A"/>
    <property type="chains" value="B/D=2-147"/>
</dbReference>
<dbReference type="PDB" id="1Y31">
    <property type="method" value="X-ray"/>
    <property type="resolution" value="2.13 A"/>
    <property type="chains" value="B/D=2-147"/>
</dbReference>
<dbReference type="PDB" id="1Y35">
    <property type="method" value="X-ray"/>
    <property type="resolution" value="2.12 A"/>
    <property type="chains" value="B/D=2-147"/>
</dbReference>
<dbReference type="PDB" id="1Y45">
    <property type="method" value="X-ray"/>
    <property type="resolution" value="2.00 A"/>
    <property type="chains" value="B/D=2-147"/>
</dbReference>
<dbReference type="PDB" id="1Y46">
    <property type="method" value="X-ray"/>
    <property type="resolution" value="2.22 A"/>
    <property type="chains" value="B/D=2-147"/>
</dbReference>
<dbReference type="PDB" id="1Y4B">
    <property type="method" value="X-ray"/>
    <property type="resolution" value="2.10 A"/>
    <property type="chains" value="B/D=2-147"/>
</dbReference>
<dbReference type="PDB" id="1Y4F">
    <property type="method" value="X-ray"/>
    <property type="resolution" value="2.00 A"/>
    <property type="chains" value="B/D=2-147"/>
</dbReference>
<dbReference type="PDB" id="1Y4G">
    <property type="method" value="X-ray"/>
    <property type="resolution" value="1.91 A"/>
    <property type="chains" value="B/D=2-147"/>
</dbReference>
<dbReference type="PDB" id="1Y4P">
    <property type="method" value="X-ray"/>
    <property type="resolution" value="1.98 A"/>
    <property type="chains" value="B/D=2-147"/>
</dbReference>
<dbReference type="PDB" id="1Y4Q">
    <property type="method" value="X-ray"/>
    <property type="resolution" value="2.11 A"/>
    <property type="chains" value="B/D=2-147"/>
</dbReference>
<dbReference type="PDB" id="1Y4R">
    <property type="method" value="X-ray"/>
    <property type="resolution" value="2.22 A"/>
    <property type="chains" value="B/D=2-147"/>
</dbReference>
<dbReference type="PDB" id="1Y4V">
    <property type="method" value="X-ray"/>
    <property type="resolution" value="1.84 A"/>
    <property type="chains" value="B/D=2-147"/>
</dbReference>
<dbReference type="PDB" id="1Y5F">
    <property type="method" value="X-ray"/>
    <property type="resolution" value="2.14 A"/>
    <property type="chains" value="B/D=2-147"/>
</dbReference>
<dbReference type="PDB" id="1Y5J">
    <property type="method" value="X-ray"/>
    <property type="resolution" value="2.03 A"/>
    <property type="chains" value="B/D=2-147"/>
</dbReference>
<dbReference type="PDB" id="1Y5K">
    <property type="method" value="X-ray"/>
    <property type="resolution" value="2.20 A"/>
    <property type="chains" value="B/D=2-147"/>
</dbReference>
<dbReference type="PDB" id="1Y7C">
    <property type="method" value="X-ray"/>
    <property type="resolution" value="2.10 A"/>
    <property type="chains" value="B/D=2-147"/>
</dbReference>
<dbReference type="PDB" id="1Y7D">
    <property type="method" value="X-ray"/>
    <property type="resolution" value="1.90 A"/>
    <property type="chains" value="B/D=2-147"/>
</dbReference>
<dbReference type="PDB" id="1Y7G">
    <property type="method" value="X-ray"/>
    <property type="resolution" value="2.10 A"/>
    <property type="chains" value="B/D=2-147"/>
</dbReference>
<dbReference type="PDB" id="1Y7Z">
    <property type="method" value="X-ray"/>
    <property type="resolution" value="1.98 A"/>
    <property type="chains" value="B/D=2-147"/>
</dbReference>
<dbReference type="PDB" id="1Y83">
    <property type="method" value="X-ray"/>
    <property type="resolution" value="1.90 A"/>
    <property type="chains" value="B/D=2-145"/>
</dbReference>
<dbReference type="PDB" id="1Y85">
    <property type="method" value="X-ray"/>
    <property type="resolution" value="2.13 A"/>
    <property type="chains" value="B/D=2-146"/>
</dbReference>
<dbReference type="PDB" id="1Y8W">
    <property type="method" value="X-ray"/>
    <property type="resolution" value="2.90 A"/>
    <property type="chains" value="B/D=2-147"/>
</dbReference>
<dbReference type="PDB" id="1YDZ">
    <property type="method" value="X-ray"/>
    <property type="resolution" value="3.30 A"/>
    <property type="chains" value="B/D=2-147"/>
</dbReference>
<dbReference type="PDB" id="1YE0">
    <property type="method" value="X-ray"/>
    <property type="resolution" value="2.50 A"/>
    <property type="chains" value="B/D=2-147"/>
</dbReference>
<dbReference type="PDB" id="1YE1">
    <property type="method" value="X-ray"/>
    <property type="resolution" value="4.50 A"/>
    <property type="chains" value="B/D=2-147"/>
</dbReference>
<dbReference type="PDB" id="1YE2">
    <property type="method" value="X-ray"/>
    <property type="resolution" value="1.80 A"/>
    <property type="chains" value="B/D=2-147"/>
</dbReference>
<dbReference type="PDB" id="1YEN">
    <property type="method" value="X-ray"/>
    <property type="resolution" value="2.80 A"/>
    <property type="chains" value="B/D=2-147"/>
</dbReference>
<dbReference type="PDB" id="1YEO">
    <property type="method" value="X-ray"/>
    <property type="resolution" value="2.22 A"/>
    <property type="chains" value="B/D=2-147"/>
</dbReference>
<dbReference type="PDB" id="1YEQ">
    <property type="method" value="X-ray"/>
    <property type="resolution" value="2.75 A"/>
    <property type="chains" value="B/D=2-147"/>
</dbReference>
<dbReference type="PDB" id="1YEU">
    <property type="method" value="X-ray"/>
    <property type="resolution" value="2.12 A"/>
    <property type="chains" value="B/D=2-147"/>
</dbReference>
<dbReference type="PDB" id="1YEV">
    <property type="method" value="X-ray"/>
    <property type="resolution" value="2.11 A"/>
    <property type="chains" value="B/D=2-147"/>
</dbReference>
<dbReference type="PDB" id="1YFF">
    <property type="method" value="X-ray"/>
    <property type="resolution" value="2.40 A"/>
    <property type="chains" value="B/D/F/H=2-147"/>
</dbReference>
<dbReference type="PDB" id="1YG5">
    <property type="method" value="X-ray"/>
    <property type="resolution" value="2.70 A"/>
    <property type="chains" value="B/D=2-147"/>
</dbReference>
<dbReference type="PDB" id="1YGD">
    <property type="method" value="X-ray"/>
    <property type="resolution" value="2.73 A"/>
    <property type="chains" value="B/D=2-147"/>
</dbReference>
<dbReference type="PDB" id="1YGF">
    <property type="method" value="X-ray"/>
    <property type="resolution" value="2.70 A"/>
    <property type="chains" value="B/D=2-147"/>
</dbReference>
<dbReference type="PDB" id="1YH9">
    <property type="method" value="X-ray"/>
    <property type="resolution" value="2.20 A"/>
    <property type="chains" value="B/D=2-147"/>
</dbReference>
<dbReference type="PDB" id="1YHE">
    <property type="method" value="X-ray"/>
    <property type="resolution" value="2.10 A"/>
    <property type="chains" value="B/D=2-147"/>
</dbReference>
<dbReference type="PDB" id="1YHR">
    <property type="method" value="X-ray"/>
    <property type="resolution" value="2.60 A"/>
    <property type="chains" value="B/D=2-147"/>
</dbReference>
<dbReference type="PDB" id="1YIE">
    <property type="method" value="X-ray"/>
    <property type="resolution" value="2.40 A"/>
    <property type="chains" value="B/D=2-147"/>
</dbReference>
<dbReference type="PDB" id="1YIH">
    <property type="method" value="X-ray"/>
    <property type="resolution" value="2.00 A"/>
    <property type="chains" value="B/D=2-147"/>
</dbReference>
<dbReference type="PDB" id="1YVQ">
    <property type="method" value="X-ray"/>
    <property type="resolution" value="1.80 A"/>
    <property type="chains" value="B/D=2-147"/>
</dbReference>
<dbReference type="PDB" id="1YVT">
    <property type="method" value="X-ray"/>
    <property type="resolution" value="1.80 A"/>
    <property type="chains" value="B=2-147"/>
</dbReference>
<dbReference type="PDB" id="1YZI">
    <property type="method" value="X-ray"/>
    <property type="resolution" value="2.07 A"/>
    <property type="chains" value="B=2-147"/>
</dbReference>
<dbReference type="PDB" id="2D5Z">
    <property type="method" value="X-ray"/>
    <property type="resolution" value="1.45 A"/>
    <property type="chains" value="B/D=2-147"/>
</dbReference>
<dbReference type="PDB" id="2D60">
    <property type="method" value="X-ray"/>
    <property type="resolution" value="1.70 A"/>
    <property type="chains" value="B/D=2-147"/>
</dbReference>
<dbReference type="PDB" id="2DN1">
    <property type="method" value="X-ray"/>
    <property type="resolution" value="1.25 A"/>
    <property type="chains" value="B=2-147"/>
</dbReference>
<dbReference type="PDB" id="2DN2">
    <property type="method" value="X-ray"/>
    <property type="resolution" value="1.25 A"/>
    <property type="chains" value="B/D=2-147"/>
</dbReference>
<dbReference type="PDB" id="2DN3">
    <property type="method" value="X-ray"/>
    <property type="resolution" value="1.25 A"/>
    <property type="chains" value="B=2-147"/>
</dbReference>
<dbReference type="PDB" id="2DXM">
    <property type="method" value="Neutron"/>
    <property type="resolution" value="2.10 A"/>
    <property type="chains" value="B/D=2-147"/>
</dbReference>
<dbReference type="PDB" id="2H35">
    <property type="method" value="NMR"/>
    <property type="chains" value="B/D=2-147"/>
</dbReference>
<dbReference type="PDB" id="2HBC">
    <property type="method" value="X-ray"/>
    <property type="resolution" value="2.10 A"/>
    <property type="chains" value="B=2-147"/>
</dbReference>
<dbReference type="PDB" id="2HBD">
    <property type="method" value="X-ray"/>
    <property type="resolution" value="2.20 A"/>
    <property type="chains" value="B=2-147"/>
</dbReference>
<dbReference type="PDB" id="2HBE">
    <property type="method" value="X-ray"/>
    <property type="resolution" value="2.00 A"/>
    <property type="chains" value="B=2-147"/>
</dbReference>
<dbReference type="PDB" id="2HBF">
    <property type="method" value="X-ray"/>
    <property type="resolution" value="2.20 A"/>
    <property type="chains" value="B=2-147"/>
</dbReference>
<dbReference type="PDB" id="2HBS">
    <property type="method" value="X-ray"/>
    <property type="resolution" value="2.05 A"/>
    <property type="chains" value="B/D/F/H=2-147"/>
</dbReference>
<dbReference type="PDB" id="2HCO">
    <property type="method" value="X-ray"/>
    <property type="resolution" value="2.70 A"/>
    <property type="chains" value="B=2-147"/>
</dbReference>
<dbReference type="PDB" id="2HHB">
    <property type="method" value="X-ray"/>
    <property type="resolution" value="1.74 A"/>
    <property type="chains" value="B/D=2-147"/>
</dbReference>
<dbReference type="PDB" id="2HHD">
    <property type="method" value="X-ray"/>
    <property type="resolution" value="2.20 A"/>
    <property type="chains" value="B/D=2-147"/>
</dbReference>
<dbReference type="PDB" id="2HHE">
    <property type="method" value="X-ray"/>
    <property type="resolution" value="2.20 A"/>
    <property type="chains" value="B/D=4-147"/>
</dbReference>
<dbReference type="PDB" id="2M6Z">
    <property type="method" value="NMR"/>
    <property type="chains" value="B/D=2-147"/>
</dbReference>
<dbReference type="PDB" id="2W6V">
    <property type="method" value="X-ray"/>
    <property type="resolution" value="1.80 A"/>
    <property type="chains" value="B/D=2-147"/>
</dbReference>
<dbReference type="PDB" id="2W72">
    <property type="method" value="X-ray"/>
    <property type="resolution" value="1.07 A"/>
    <property type="chains" value="B/D=3-147"/>
</dbReference>
<dbReference type="PDB" id="2YRS">
    <property type="method" value="X-ray"/>
    <property type="resolution" value="2.30 A"/>
    <property type="chains" value="B/D/K/O=2-147"/>
</dbReference>
<dbReference type="PDB" id="3B75">
    <property type="method" value="X-ray"/>
    <property type="resolution" value="2.30 A"/>
    <property type="chains" value="B/D/F/H/T=2-147"/>
</dbReference>
<dbReference type="PDB" id="3D17">
    <property type="method" value="X-ray"/>
    <property type="resolution" value="2.80 A"/>
    <property type="chains" value="B/D=2-147"/>
</dbReference>
<dbReference type="PDB" id="3D7O">
    <property type="method" value="X-ray"/>
    <property type="resolution" value="1.80 A"/>
    <property type="chains" value="B=2-147"/>
</dbReference>
<dbReference type="PDB" id="3DUT">
    <property type="method" value="X-ray"/>
    <property type="resolution" value="1.55 A"/>
    <property type="chains" value="B/D=2-147"/>
</dbReference>
<dbReference type="PDB" id="3HHB">
    <property type="method" value="X-ray"/>
    <property type="resolution" value="1.74 A"/>
    <property type="chains" value="B/D=2-147"/>
</dbReference>
<dbReference type="PDB" id="3HXN">
    <property type="method" value="X-ray"/>
    <property type="resolution" value="2.00 A"/>
    <property type="chains" value="B/D=2-147"/>
</dbReference>
<dbReference type="PDB" id="3IC0">
    <property type="method" value="X-ray"/>
    <property type="resolution" value="1.80 A"/>
    <property type="chains" value="B/D=2-147"/>
</dbReference>
<dbReference type="PDB" id="3IC2">
    <property type="method" value="X-ray"/>
    <property type="resolution" value="2.40 A"/>
    <property type="chains" value="B/D=2-147"/>
</dbReference>
<dbReference type="PDB" id="3KMF">
    <property type="method" value="Neutron"/>
    <property type="resolution" value="2.00 A"/>
    <property type="chains" value="C/G=2-147"/>
</dbReference>
<dbReference type="PDB" id="3NL7">
    <property type="method" value="X-ray"/>
    <property type="resolution" value="1.80 A"/>
    <property type="chains" value="B=2-147"/>
</dbReference>
<dbReference type="PDB" id="3NMM">
    <property type="method" value="X-ray"/>
    <property type="resolution" value="1.60 A"/>
    <property type="chains" value="B/D=2-147"/>
</dbReference>
<dbReference type="PDB" id="3ODQ">
    <property type="method" value="X-ray"/>
    <property type="resolution" value="3.10 A"/>
    <property type="chains" value="B/D=2-147"/>
</dbReference>
<dbReference type="PDB" id="3ONZ">
    <property type="method" value="X-ray"/>
    <property type="resolution" value="2.09 A"/>
    <property type="chains" value="B=2-147"/>
</dbReference>
<dbReference type="PDB" id="3OO4">
    <property type="method" value="X-ray"/>
    <property type="resolution" value="1.90 A"/>
    <property type="chains" value="B=2-147"/>
</dbReference>
<dbReference type="PDB" id="3OO5">
    <property type="method" value="X-ray"/>
    <property type="resolution" value="2.10 A"/>
    <property type="chains" value="B=2-147"/>
</dbReference>
<dbReference type="PDB" id="3P5Q">
    <property type="method" value="X-ray"/>
    <property type="resolution" value="2.00 A"/>
    <property type="chains" value="B=2-147"/>
</dbReference>
<dbReference type="PDB" id="3QJB">
    <property type="method" value="X-ray"/>
    <property type="resolution" value="1.80 A"/>
    <property type="chains" value="B=2-147"/>
</dbReference>
<dbReference type="PDB" id="3QJC">
    <property type="method" value="X-ray"/>
    <property type="resolution" value="2.00 A"/>
    <property type="chains" value="B=2-147"/>
</dbReference>
<dbReference type="PDB" id="3QJD">
    <property type="method" value="X-ray"/>
    <property type="resolution" value="1.56 A"/>
    <property type="chains" value="B/D=2-147"/>
</dbReference>
<dbReference type="PDB" id="3QJE">
    <property type="method" value="X-ray"/>
    <property type="resolution" value="1.80 A"/>
    <property type="chains" value="B/D=2-147"/>
</dbReference>
<dbReference type="PDB" id="3R5I">
    <property type="method" value="X-ray"/>
    <property type="resolution" value="2.20 A"/>
    <property type="chains" value="B/D=2-147"/>
</dbReference>
<dbReference type="PDB" id="3S65">
    <property type="method" value="X-ray"/>
    <property type="resolution" value="1.80 A"/>
    <property type="chains" value="B/D=2-147"/>
</dbReference>
<dbReference type="PDB" id="3S66">
    <property type="method" value="X-ray"/>
    <property type="resolution" value="1.40 A"/>
    <property type="chains" value="B=2-147"/>
</dbReference>
<dbReference type="PDB" id="3SZK">
    <property type="method" value="X-ray"/>
    <property type="resolution" value="3.01 A"/>
    <property type="chains" value="B/E=2-147"/>
</dbReference>
<dbReference type="PDB" id="3W4U">
    <property type="method" value="X-ray"/>
    <property type="resolution" value="1.95 A"/>
    <property type="chains" value="B/D/F=2-147"/>
</dbReference>
<dbReference type="PDB" id="3WCP">
    <property type="method" value="X-ray"/>
    <property type="resolution" value="1.94 A"/>
    <property type="chains" value="B/D=2-147"/>
</dbReference>
<dbReference type="PDB" id="3WHM">
    <property type="method" value="X-ray"/>
    <property type="resolution" value="1.85 A"/>
    <property type="chains" value="B/F=2-147"/>
</dbReference>
<dbReference type="PDB" id="4FC3">
    <property type="method" value="X-ray"/>
    <property type="resolution" value="2.26 A"/>
    <property type="chains" value="B=2-147"/>
</dbReference>
<dbReference type="PDB" id="4HHB">
    <property type="method" value="X-ray"/>
    <property type="resolution" value="1.74 A"/>
    <property type="chains" value="B/D=2-147"/>
</dbReference>
<dbReference type="PDB" id="4IJ2">
    <property type="method" value="X-ray"/>
    <property type="resolution" value="4.24 A"/>
    <property type="chains" value="B/D=2-147"/>
</dbReference>
<dbReference type="PDB" id="4L7Y">
    <property type="method" value="X-ray"/>
    <property type="resolution" value="1.80 A"/>
    <property type="chains" value="B/D=2-147"/>
</dbReference>
<dbReference type="PDB" id="4M4A">
    <property type="method" value="X-ray"/>
    <property type="resolution" value="2.05 A"/>
    <property type="chains" value="B=2-147"/>
</dbReference>
<dbReference type="PDB" id="4M4B">
    <property type="method" value="X-ray"/>
    <property type="resolution" value="2.00 A"/>
    <property type="chains" value="B=2-147"/>
</dbReference>
<dbReference type="PDB" id="4MQC">
    <property type="method" value="X-ray"/>
    <property type="resolution" value="2.20 A"/>
    <property type="chains" value="B=2-147"/>
</dbReference>
<dbReference type="PDB" id="4MQG">
    <property type="method" value="X-ray"/>
    <property type="resolution" value="1.68 A"/>
    <property type="chains" value="B=2-147"/>
</dbReference>
<dbReference type="PDB" id="4MQH">
    <property type="method" value="X-ray"/>
    <property type="resolution" value="2.50 A"/>
    <property type="chains" value="B=2-147"/>
</dbReference>
<dbReference type="PDB" id="4MQI">
    <property type="method" value="X-ray"/>
    <property type="resolution" value="1.92 A"/>
    <property type="chains" value="B=2-147"/>
</dbReference>
<dbReference type="PDB" id="4N7N">
    <property type="method" value="X-ray"/>
    <property type="resolution" value="2.75 A"/>
    <property type="chains" value="B/D/F/H/J/L=2-147"/>
</dbReference>
<dbReference type="PDB" id="4N7O">
    <property type="method" value="X-ray"/>
    <property type="resolution" value="2.50 A"/>
    <property type="chains" value="B/D/F/H/J/L=2-147"/>
</dbReference>
<dbReference type="PDB" id="4N7P">
    <property type="method" value="X-ray"/>
    <property type="resolution" value="2.81 A"/>
    <property type="chains" value="B/D/F/H/J/L=2-147"/>
</dbReference>
<dbReference type="PDB" id="4N8T">
    <property type="method" value="X-ray"/>
    <property type="resolution" value="1.90 A"/>
    <property type="chains" value="B=2-147"/>
</dbReference>
<dbReference type="PDB" id="4NI0">
    <property type="method" value="X-ray"/>
    <property type="resolution" value="2.15 A"/>
    <property type="chains" value="B=2-147"/>
</dbReference>
<dbReference type="PDB" id="4NI1">
    <property type="method" value="X-ray"/>
    <property type="resolution" value="1.90 A"/>
    <property type="chains" value="B=2-147"/>
</dbReference>
<dbReference type="PDB" id="4ROL">
    <property type="method" value="X-ray"/>
    <property type="resolution" value="1.70 A"/>
    <property type="chains" value="B/D=2-147"/>
</dbReference>
<dbReference type="PDB" id="4ROM">
    <property type="method" value="X-ray"/>
    <property type="resolution" value="1.90 A"/>
    <property type="chains" value="B/D=2-147"/>
</dbReference>
<dbReference type="PDB" id="4WJG">
    <property type="method" value="X-ray"/>
    <property type="resolution" value="3.10 A"/>
    <property type="chains" value="1/B/G/L/Q/V=2-147"/>
</dbReference>
<dbReference type="PDB" id="4X0L">
    <property type="method" value="X-ray"/>
    <property type="resolution" value="2.05 A"/>
    <property type="chains" value="B=2-147"/>
</dbReference>
<dbReference type="PDB" id="4XS0">
    <property type="method" value="X-ray"/>
    <property type="resolution" value="2.55 A"/>
    <property type="chains" value="B=2-147"/>
</dbReference>
<dbReference type="PDB" id="5E29">
    <property type="method" value="X-ray"/>
    <property type="resolution" value="1.85 A"/>
    <property type="chains" value="B/D=3-147"/>
</dbReference>
<dbReference type="PDB" id="5E6E">
    <property type="method" value="X-ray"/>
    <property type="resolution" value="1.76 A"/>
    <property type="chains" value="B=2-147"/>
</dbReference>
<dbReference type="PDB" id="5E83">
    <property type="method" value="X-ray"/>
    <property type="resolution" value="1.80 A"/>
    <property type="chains" value="B/D=2-147"/>
</dbReference>
<dbReference type="PDB" id="5EE4">
    <property type="method" value="X-ray"/>
    <property type="resolution" value="2.30 A"/>
    <property type="chains" value="D/F=2-147"/>
</dbReference>
<dbReference type="PDB" id="5HU6">
    <property type="method" value="X-ray"/>
    <property type="resolution" value="2.90 A"/>
    <property type="chains" value="B=3-143"/>
</dbReference>
<dbReference type="PDB" id="5HY8">
    <property type="method" value="X-ray"/>
    <property type="resolution" value="2.30 A"/>
    <property type="chains" value="B/D/F/H/T=2-147"/>
</dbReference>
<dbReference type="PDB" id="5JDO">
    <property type="method" value="X-ray"/>
    <property type="resolution" value="3.20 A"/>
    <property type="chains" value="D=3-147, F=3-146"/>
</dbReference>
<dbReference type="PDB" id="5KDQ">
    <property type="method" value="X-ray"/>
    <property type="resolution" value="2.15 A"/>
    <property type="chains" value="B/D=2-147"/>
</dbReference>
<dbReference type="PDB" id="5KSI">
    <property type="method" value="X-ray"/>
    <property type="resolution" value="1.80 A"/>
    <property type="chains" value="B/D=2-147"/>
</dbReference>
<dbReference type="PDB" id="5KSJ">
    <property type="method" value="X-ray"/>
    <property type="resolution" value="2.40 A"/>
    <property type="chains" value="B/D=2-147"/>
</dbReference>
<dbReference type="PDB" id="5NI1">
    <property type="method" value="EM"/>
    <property type="resolution" value="3.20 A"/>
    <property type="chains" value="B/D=2-147"/>
</dbReference>
<dbReference type="PDB" id="5SW7">
    <property type="method" value="X-ray"/>
    <property type="resolution" value="1.85 A"/>
    <property type="chains" value="B=2-147"/>
</dbReference>
<dbReference type="PDB" id="5U3I">
    <property type="method" value="X-ray"/>
    <property type="resolution" value="1.95 A"/>
    <property type="chains" value="B/D=2-147"/>
</dbReference>
<dbReference type="PDB" id="5UCU">
    <property type="method" value="X-ray"/>
    <property type="resolution" value="1.80 A"/>
    <property type="chains" value="B=2-147"/>
</dbReference>
<dbReference type="PDB" id="5UFJ">
    <property type="method" value="X-ray"/>
    <property type="resolution" value="2.05 A"/>
    <property type="chains" value="B/D=2-147"/>
</dbReference>
<dbReference type="PDB" id="5URC">
    <property type="method" value="X-ray"/>
    <property type="resolution" value="1.85 A"/>
    <property type="chains" value="B/D=2-147"/>
</dbReference>
<dbReference type="PDB" id="5VMM">
    <property type="method" value="X-ray"/>
    <property type="resolution" value="3.60 A"/>
    <property type="chains" value="B/D=2-147"/>
</dbReference>
<dbReference type="PDB" id="5WOG">
    <property type="method" value="X-ray"/>
    <property type="resolution" value="1.54 A"/>
    <property type="chains" value="C/D=2-147"/>
</dbReference>
<dbReference type="PDB" id="5WOH">
    <property type="method" value="X-ray"/>
    <property type="resolution" value="1.58 A"/>
    <property type="chains" value="B/D=2-147"/>
</dbReference>
<dbReference type="PDB" id="5X2R">
    <property type="method" value="X-ray"/>
    <property type="resolution" value="2.70 A"/>
    <property type="chains" value="B/D/F/H/J/L=2-147"/>
</dbReference>
<dbReference type="PDB" id="5X2S">
    <property type="method" value="X-ray"/>
    <property type="resolution" value="2.39 A"/>
    <property type="chains" value="B/D/F/H/J/L=2-147"/>
</dbReference>
<dbReference type="PDB" id="5X2T">
    <property type="method" value="X-ray"/>
    <property type="resolution" value="2.64 A"/>
    <property type="chains" value="B/D/F/H/J/L=2-147"/>
</dbReference>
<dbReference type="PDB" id="5X2U">
    <property type="method" value="X-ray"/>
    <property type="resolution" value="2.53 A"/>
    <property type="chains" value="B/D/F/H/J/L=2-147"/>
</dbReference>
<dbReference type="PDB" id="6BB5">
    <property type="method" value="X-ray"/>
    <property type="resolution" value="2.28 A"/>
    <property type="chains" value="B=3-147"/>
</dbReference>
<dbReference type="PDB" id="6BNR">
    <property type="method" value="X-ray"/>
    <property type="resolution" value="1.95 A"/>
    <property type="chains" value="B/D=2-147"/>
</dbReference>
<dbReference type="PDB" id="6BWP">
    <property type="method" value="X-ray"/>
    <property type="resolution" value="1.70 A"/>
    <property type="chains" value="B/D=2-147"/>
</dbReference>
<dbReference type="PDB" id="6BWU">
    <property type="method" value="X-ray"/>
    <property type="resolution" value="2.00 A"/>
    <property type="chains" value="B=2-147"/>
</dbReference>
<dbReference type="PDB" id="6DI4">
    <property type="method" value="X-ray"/>
    <property type="resolution" value="1.90 A"/>
    <property type="chains" value="B/D=2-147"/>
</dbReference>
<dbReference type="PDB" id="6FQF">
    <property type="method" value="X-ray"/>
    <property type="resolution" value="2.10 A"/>
    <property type="chains" value="A/B/C/D=2-147"/>
</dbReference>
<dbReference type="PDB" id="6HAL">
    <property type="method" value="X-ray"/>
    <property type="resolution" value="2.20 A"/>
    <property type="chains" value="B/D=3-147"/>
</dbReference>
<dbReference type="PDB" id="6HBW">
    <property type="method" value="X-ray"/>
    <property type="resolution" value="2.00 A"/>
    <property type="chains" value="B/D=2-147"/>
</dbReference>
<dbReference type="PDB" id="6HK2">
    <property type="method" value="X-ray"/>
    <property type="resolution" value="1.55 A"/>
    <property type="chains" value="B/D=2-147"/>
</dbReference>
<dbReference type="PDB" id="6KA9">
    <property type="method" value="X-ray"/>
    <property type="resolution" value="1.40 A"/>
    <property type="chains" value="B/D/F/H=2-147"/>
</dbReference>
<dbReference type="PDB" id="6KAE">
    <property type="method" value="X-ray"/>
    <property type="resolution" value="1.45 A"/>
    <property type="chains" value="B/D/F/H=2-147"/>
</dbReference>
<dbReference type="PDB" id="6KAH">
    <property type="method" value="X-ray"/>
    <property type="resolution" value="1.45 A"/>
    <property type="chains" value="B/D/F/H=2-147"/>
</dbReference>
<dbReference type="PDB" id="6KAI">
    <property type="method" value="X-ray"/>
    <property type="resolution" value="1.45 A"/>
    <property type="chains" value="B/D/F/H=2-147"/>
</dbReference>
<dbReference type="PDB" id="6KAO">
    <property type="method" value="X-ray"/>
    <property type="resolution" value="1.40 A"/>
    <property type="chains" value="B=2-147"/>
</dbReference>
<dbReference type="PDB" id="6KAP">
    <property type="method" value="X-ray"/>
    <property type="resolution" value="1.45 A"/>
    <property type="chains" value="B=2-147"/>
</dbReference>
<dbReference type="PDB" id="6KAQ">
    <property type="method" value="X-ray"/>
    <property type="resolution" value="1.50 A"/>
    <property type="chains" value="B=2-147"/>
</dbReference>
<dbReference type="PDB" id="6KAR">
    <property type="method" value="X-ray"/>
    <property type="resolution" value="1.60 A"/>
    <property type="chains" value="B=2-147"/>
</dbReference>
<dbReference type="PDB" id="6KAS">
    <property type="method" value="X-ray"/>
    <property type="resolution" value="1.65 A"/>
    <property type="chains" value="B/D=2-147"/>
</dbReference>
<dbReference type="PDB" id="6KAT">
    <property type="method" value="X-ray"/>
    <property type="resolution" value="1.70 A"/>
    <property type="chains" value="B/D=2-147"/>
</dbReference>
<dbReference type="PDB" id="6KAU">
    <property type="method" value="X-ray"/>
    <property type="resolution" value="1.60 A"/>
    <property type="chains" value="B/D=2-147"/>
</dbReference>
<dbReference type="PDB" id="6KAV">
    <property type="method" value="X-ray"/>
    <property type="resolution" value="1.70 A"/>
    <property type="chains" value="B/D=2-147"/>
</dbReference>
<dbReference type="PDB" id="6KYE">
    <property type="method" value="X-ray"/>
    <property type="resolution" value="2.28 A"/>
    <property type="chains" value="B/D/F/H/J/L=1-147"/>
</dbReference>
<dbReference type="PDB" id="6L5V">
    <property type="method" value="X-ray"/>
    <property type="resolution" value="1.45 A"/>
    <property type="chains" value="B=2-147"/>
</dbReference>
<dbReference type="PDB" id="6L5W">
    <property type="method" value="X-ray"/>
    <property type="resolution" value="1.50 A"/>
    <property type="chains" value="B=2-147"/>
</dbReference>
<dbReference type="PDB" id="6L5X">
    <property type="method" value="X-ray"/>
    <property type="resolution" value="1.65 A"/>
    <property type="chains" value="B/D=2-147"/>
</dbReference>
<dbReference type="PDB" id="6L5Y">
    <property type="method" value="X-ray"/>
    <property type="resolution" value="1.65 A"/>
    <property type="chains" value="B/D=2-147"/>
</dbReference>
<dbReference type="PDB" id="6LCW">
    <property type="method" value="X-ray"/>
    <property type="resolution" value="1.40 A"/>
    <property type="chains" value="B/D/F/H=2-147"/>
</dbReference>
<dbReference type="PDB" id="6LCX">
    <property type="method" value="X-ray"/>
    <property type="resolution" value="1.40 A"/>
    <property type="chains" value="B/D/F/H=2-147"/>
</dbReference>
<dbReference type="PDB" id="6NBC">
    <property type="method" value="EM"/>
    <property type="resolution" value="2.80 A"/>
    <property type="chains" value="B/D=2-144"/>
</dbReference>
<dbReference type="PDB" id="6NBD">
    <property type="method" value="EM"/>
    <property type="resolution" value="3.20 A"/>
    <property type="chains" value="B/D=2-144"/>
</dbReference>
<dbReference type="PDB" id="6NQ5">
    <property type="method" value="X-ray"/>
    <property type="resolution" value="1.85 A"/>
    <property type="chains" value="B=2-147"/>
</dbReference>
<dbReference type="PDB" id="6TB2">
    <property type="method" value="X-ray"/>
    <property type="resolution" value="2.90 A"/>
    <property type="chains" value="B=2-147"/>
</dbReference>
<dbReference type="PDB" id="6XD9">
    <property type="method" value="X-ray"/>
    <property type="resolution" value="2.10 A"/>
    <property type="chains" value="B/D=2-147"/>
</dbReference>
<dbReference type="PDB" id="6XDT">
    <property type="method" value="X-ray"/>
    <property type="resolution" value="1.90 A"/>
    <property type="chains" value="B/D=2-147"/>
</dbReference>
<dbReference type="PDB" id="6XE7">
    <property type="method" value="X-ray"/>
    <property type="resolution" value="2.00 A"/>
    <property type="chains" value="B/D=2-147"/>
</dbReference>
<dbReference type="PDB" id="7AET">
    <property type="method" value="X-ray"/>
    <property type="resolution" value="2.53 A"/>
    <property type="chains" value="BBB/DDD=3-147"/>
</dbReference>
<dbReference type="PDB" id="7AEU">
    <property type="method" value="X-ray"/>
    <property type="resolution" value="2.54 A"/>
    <property type="chains" value="BBB/DDD=3-147"/>
</dbReference>
<dbReference type="PDB" id="7AEV">
    <property type="method" value="X-ray"/>
    <property type="resolution" value="2.77 A"/>
    <property type="chains" value="BBB/DDD=3-147"/>
</dbReference>
<dbReference type="PDB" id="7CUE">
    <property type="method" value="X-ray"/>
    <property type="resolution" value="2.75 A"/>
    <property type="chains" value="B/D=1-147"/>
</dbReference>
<dbReference type="PDB" id="7DY3">
    <property type="method" value="X-ray"/>
    <property type="resolution" value="1.40 A"/>
    <property type="chains" value="B/D/F/H=2-147"/>
</dbReference>
<dbReference type="PDB" id="7DY4">
    <property type="method" value="X-ray"/>
    <property type="resolution" value="1.30 A"/>
    <property type="chains" value="B/D/F/H=2-147"/>
</dbReference>
<dbReference type="PDB" id="7JJQ">
    <property type="method" value="X-ray"/>
    <property type="resolution" value="2.15 A"/>
    <property type="chains" value="B/D=2-147"/>
</dbReference>
<dbReference type="PDB" id="7JXZ">
    <property type="method" value="X-ray"/>
    <property type="resolution" value="2.23 A"/>
    <property type="chains" value="B/D=2-147"/>
</dbReference>
<dbReference type="PDB" id="7JY0">
    <property type="method" value="X-ray"/>
    <property type="resolution" value="1.63 A"/>
    <property type="chains" value="B/D=2-147"/>
</dbReference>
<dbReference type="PDB" id="7JY1">
    <property type="method" value="X-ray"/>
    <property type="resolution" value="1.59 A"/>
    <property type="chains" value="B/D=2-147"/>
</dbReference>
<dbReference type="PDB" id="7JY3">
    <property type="method" value="X-ray"/>
    <property type="resolution" value="1.48 A"/>
    <property type="chains" value="B/D=2-147"/>
</dbReference>
<dbReference type="PDB" id="7K4M">
    <property type="method" value="X-ray"/>
    <property type="resolution" value="2.50 A"/>
    <property type="chains" value="B/D/F/H/J=1-147"/>
</dbReference>
<dbReference type="PDB" id="7PCF">
    <property type="method" value="EM"/>
    <property type="resolution" value="5.82 A"/>
    <property type="chains" value="B=2-147"/>
</dbReference>
<dbReference type="PDB" id="7PCH">
    <property type="method" value="EM"/>
    <property type="resolution" value="2.89 A"/>
    <property type="chains" value="B/D=2-147"/>
</dbReference>
<dbReference type="PDB" id="7PCQ">
    <property type="method" value="EM"/>
    <property type="resolution" value="3.62 A"/>
    <property type="chains" value="B/D=2-147"/>
</dbReference>
<dbReference type="PDB" id="7UD7">
    <property type="method" value="X-ray"/>
    <property type="resolution" value="1.80 A"/>
    <property type="chains" value="B/D=1-147"/>
</dbReference>
<dbReference type="PDB" id="7UD8">
    <property type="method" value="X-ray"/>
    <property type="resolution" value="1.80 A"/>
    <property type="chains" value="B/D=1-147"/>
</dbReference>
<dbReference type="PDB" id="7UF6">
    <property type="method" value="X-ray"/>
    <property type="resolution" value="2.00 A"/>
    <property type="chains" value="B/D=1-147"/>
</dbReference>
<dbReference type="PDB" id="7UF7">
    <property type="method" value="X-ray"/>
    <property type="resolution" value="2.00 A"/>
    <property type="chains" value="B/D=1-147"/>
</dbReference>
<dbReference type="PDB" id="7UVB">
    <property type="method" value="X-ray"/>
    <property type="resolution" value="2.05 A"/>
    <property type="chains" value="B/D=2-147"/>
</dbReference>
<dbReference type="PDB" id="7VDE">
    <property type="method" value="EM"/>
    <property type="resolution" value="3.20 A"/>
    <property type="chains" value="B/D=1-147"/>
</dbReference>
<dbReference type="PDB" id="7XGY">
    <property type="method" value="EM"/>
    <property type="resolution" value="3.50 A"/>
    <property type="chains" value="B/D=1-147"/>
</dbReference>
<dbReference type="PDB" id="8DOV">
    <property type="method" value="X-ray"/>
    <property type="resolution" value="2.10 A"/>
    <property type="chains" value="B/D/F/H=2-147"/>
</dbReference>
<dbReference type="PDB" id="8EGI">
    <property type="method" value="X-ray"/>
    <property type="resolution" value="2.30 A"/>
    <property type="chains" value="B/D=1-147"/>
</dbReference>
<dbReference type="PDB" id="8FDK">
    <property type="method" value="X-ray"/>
    <property type="resolution" value="1.89 A"/>
    <property type="chains" value="B/D=2-147"/>
</dbReference>
<dbReference type="PDB" id="8FDL">
    <property type="method" value="X-ray"/>
    <property type="resolution" value="1.75 A"/>
    <property type="chains" value="B/D=2-147"/>
</dbReference>
<dbReference type="PDB" id="8FDM">
    <property type="method" value="X-ray"/>
    <property type="resolution" value="1.91 A"/>
    <property type="chains" value="B/D=2-147"/>
</dbReference>
<dbReference type="PDB" id="8FDN">
    <property type="method" value="X-ray"/>
    <property type="resolution" value="2.20 A"/>
    <property type="chains" value="B/D=2-147"/>
</dbReference>
<dbReference type="PDB" id="8VYL">
    <property type="method" value="X-ray"/>
    <property type="resolution" value="2.02 A"/>
    <property type="chains" value="B/D=1-147"/>
</dbReference>
<dbReference type="PDB" id="8WJ0">
    <property type="method" value="EM"/>
    <property type="resolution" value="2.24 A"/>
    <property type="chains" value="B=1-147"/>
</dbReference>
<dbReference type="PDB" id="8WJ1">
    <property type="method" value="EM"/>
    <property type="resolution" value="2.27 A"/>
    <property type="chains" value="B=1-147"/>
</dbReference>
<dbReference type="PDB" id="8WJ2">
    <property type="method" value="EM"/>
    <property type="resolution" value="2.35 A"/>
    <property type="chains" value="B=1-147"/>
</dbReference>
<dbReference type="PDB" id="8WXZ">
    <property type="method" value="X-ray"/>
    <property type="resolution" value="2.30 A"/>
    <property type="chains" value="P=34-48"/>
</dbReference>
<dbReference type="PDB" id="8XMP">
    <property type="method" value="EM"/>
    <property type="resolution" value="3.11 A"/>
    <property type="chains" value="G=1-147"/>
</dbReference>
<dbReference type="PDB" id="8XMQ">
    <property type="method" value="EM"/>
    <property type="resolution" value="3.21 A"/>
    <property type="chains" value="G=1-147"/>
</dbReference>
<dbReference type="PDB" id="8XMW">
    <property type="method" value="EM"/>
    <property type="resolution" value="2.94 A"/>
    <property type="chains" value="B=1-147"/>
</dbReference>
<dbReference type="PDB" id="9AV9">
    <property type="method" value="X-ray"/>
    <property type="resolution" value="1.94 A"/>
    <property type="chains" value="B/D=2-147"/>
</dbReference>
<dbReference type="PDB" id="9AYZ">
    <property type="method" value="X-ray"/>
    <property type="resolution" value="2.24 A"/>
    <property type="chains" value="B/D/F/H=2-147"/>
</dbReference>
<dbReference type="PDB" id="9BCJ">
    <property type="method" value="X-ray"/>
    <property type="resolution" value="1.69 A"/>
    <property type="chains" value="B=2-147"/>
</dbReference>
<dbReference type="PDB" id="9FHB">
    <property type="method" value="EM"/>
    <property type="resolution" value="3.87 A"/>
    <property type="chains" value="B=1-147"/>
</dbReference>
<dbReference type="PDB" id="9FMU">
    <property type="method" value="EM"/>
    <property type="resolution" value="4.46 A"/>
    <property type="chains" value="B=1-147"/>
</dbReference>
<dbReference type="PDB" id="9FNO">
    <property type="method" value="EM"/>
    <property type="resolution" value="5.20 A"/>
    <property type="chains" value="B=1-147"/>
</dbReference>
<dbReference type="PDBsum" id="1A00"/>
<dbReference type="PDBsum" id="1A01"/>
<dbReference type="PDBsum" id="1A0U"/>
<dbReference type="PDBsum" id="1A0Z"/>
<dbReference type="PDBsum" id="1A3N"/>
<dbReference type="PDBsum" id="1A3O"/>
<dbReference type="PDBsum" id="1ABW"/>
<dbReference type="PDBsum" id="1ABY"/>
<dbReference type="PDBsum" id="1AJ9"/>
<dbReference type="PDBsum" id="1B86"/>
<dbReference type="PDBsum" id="1BAB"/>
<dbReference type="PDBsum" id="1BBB"/>
<dbReference type="PDBsum" id="1BIJ"/>
<dbReference type="PDBsum" id="1BUW"/>
<dbReference type="PDBsum" id="1BZ0"/>
<dbReference type="PDBsum" id="1BZ1"/>
<dbReference type="PDBsum" id="1BZZ"/>
<dbReference type="PDBsum" id="1C7B"/>
<dbReference type="PDBsum" id="1C7C"/>
<dbReference type="PDBsum" id="1C7D"/>
<dbReference type="PDBsum" id="1CBL"/>
<dbReference type="PDBsum" id="1CBM"/>
<dbReference type="PDBsum" id="1CH4"/>
<dbReference type="PDBsum" id="1CLS"/>
<dbReference type="PDBsum" id="1CMY"/>
<dbReference type="PDBsum" id="1COH"/>
<dbReference type="PDBsum" id="1DKE"/>
<dbReference type="PDBsum" id="1DXT"/>
<dbReference type="PDBsum" id="1DXU"/>
<dbReference type="PDBsum" id="1DXV"/>
<dbReference type="PDBsum" id="1FN3"/>
<dbReference type="PDBsum" id="1G9V"/>
<dbReference type="PDBsum" id="1GBU"/>
<dbReference type="PDBsum" id="1GBV"/>
<dbReference type="PDBsum" id="1GLI"/>
<dbReference type="PDBsum" id="1GZX"/>
<dbReference type="PDBsum" id="1HAB"/>
<dbReference type="PDBsum" id="1HAC"/>
<dbReference type="PDBsum" id="1HBA"/>
<dbReference type="PDBsum" id="1HBB"/>
<dbReference type="PDBsum" id="1HBS"/>
<dbReference type="PDBsum" id="1HCO"/>
<dbReference type="PDBsum" id="1HDB"/>
<dbReference type="PDBsum" id="1HGA"/>
<dbReference type="PDBsum" id="1HGB"/>
<dbReference type="PDBsum" id="1HGC"/>
<dbReference type="PDBsum" id="1HHO"/>
<dbReference type="PDBsum" id="1IRD"/>
<dbReference type="PDBsum" id="1J3Y"/>
<dbReference type="PDBsum" id="1J3Z"/>
<dbReference type="PDBsum" id="1J40"/>
<dbReference type="PDBsum" id="1J41"/>
<dbReference type="PDBsum" id="1J7S"/>
<dbReference type="PDBsum" id="1J7W"/>
<dbReference type="PDBsum" id="1J7Y"/>
<dbReference type="PDBsum" id="1JY7"/>
<dbReference type="PDBsum" id="1K0Y"/>
<dbReference type="PDBsum" id="1K1K"/>
<dbReference type="PDBsum" id="1KD2"/>
<dbReference type="PDBsum" id="1LFL"/>
<dbReference type="PDBsum" id="1LFQ"/>
<dbReference type="PDBsum" id="1LFT"/>
<dbReference type="PDBsum" id="1LFV"/>
<dbReference type="PDBsum" id="1LFY"/>
<dbReference type="PDBsum" id="1LFZ"/>
<dbReference type="PDBsum" id="1LJW"/>
<dbReference type="PDBsum" id="1M9P"/>
<dbReference type="PDBsum" id="1MKO"/>
<dbReference type="PDBsum" id="1NEJ"/>
<dbReference type="PDBsum" id="1NIH"/>
<dbReference type="PDBsum" id="1NQP"/>
<dbReference type="PDBsum" id="1O1I"/>
<dbReference type="PDBsum" id="1O1J"/>
<dbReference type="PDBsum" id="1O1K"/>
<dbReference type="PDBsum" id="1O1L"/>
<dbReference type="PDBsum" id="1O1M"/>
<dbReference type="PDBsum" id="1O1N"/>
<dbReference type="PDBsum" id="1O1O"/>
<dbReference type="PDBsum" id="1O1P"/>
<dbReference type="PDBsum" id="1QI8"/>
<dbReference type="PDBsum" id="1QSH"/>
<dbReference type="PDBsum" id="1QSI"/>
<dbReference type="PDBsum" id="1QXD"/>
<dbReference type="PDBsum" id="1QXE"/>
<dbReference type="PDBsum" id="1R1X"/>
<dbReference type="PDBsum" id="1R1Y"/>
<dbReference type="PDBsum" id="1RPS"/>
<dbReference type="PDBsum" id="1RQ3"/>
<dbReference type="PDBsum" id="1RQ4"/>
<dbReference type="PDBsum" id="1RQA"/>
<dbReference type="PDBsum" id="1RVW"/>
<dbReference type="PDBsum" id="1SDK"/>
<dbReference type="PDBsum" id="1SDL"/>
<dbReference type="PDBsum" id="1THB"/>
<dbReference type="PDBsum" id="1UIW"/>
<dbReference type="PDBsum" id="1VWT"/>
<dbReference type="PDBsum" id="1XXT"/>
<dbReference type="PDBsum" id="1XY0"/>
<dbReference type="PDBsum" id="1XYE"/>
<dbReference type="PDBsum" id="1XZ2"/>
<dbReference type="PDBsum" id="1XZ4"/>
<dbReference type="PDBsum" id="1XZ5"/>
<dbReference type="PDBsum" id="1XZ7"/>
<dbReference type="PDBsum" id="1XZU"/>
<dbReference type="PDBsum" id="1XZV"/>
<dbReference type="PDBsum" id="1Y09"/>
<dbReference type="PDBsum" id="1Y0A"/>
<dbReference type="PDBsum" id="1Y0C"/>
<dbReference type="PDBsum" id="1Y0D"/>
<dbReference type="PDBsum" id="1Y0T"/>
<dbReference type="PDBsum" id="1Y0W"/>
<dbReference type="PDBsum" id="1Y22"/>
<dbReference type="PDBsum" id="1Y2Z"/>
<dbReference type="PDBsum" id="1Y31"/>
<dbReference type="PDBsum" id="1Y35"/>
<dbReference type="PDBsum" id="1Y45"/>
<dbReference type="PDBsum" id="1Y46"/>
<dbReference type="PDBsum" id="1Y4B"/>
<dbReference type="PDBsum" id="1Y4F"/>
<dbReference type="PDBsum" id="1Y4G"/>
<dbReference type="PDBsum" id="1Y4P"/>
<dbReference type="PDBsum" id="1Y4Q"/>
<dbReference type="PDBsum" id="1Y4R"/>
<dbReference type="PDBsum" id="1Y4V"/>
<dbReference type="PDBsum" id="1Y5F"/>
<dbReference type="PDBsum" id="1Y5J"/>
<dbReference type="PDBsum" id="1Y5K"/>
<dbReference type="PDBsum" id="1Y7C"/>
<dbReference type="PDBsum" id="1Y7D"/>
<dbReference type="PDBsum" id="1Y7G"/>
<dbReference type="PDBsum" id="1Y7Z"/>
<dbReference type="PDBsum" id="1Y83"/>
<dbReference type="PDBsum" id="1Y85"/>
<dbReference type="PDBsum" id="1Y8W"/>
<dbReference type="PDBsum" id="1YDZ"/>
<dbReference type="PDBsum" id="1YE0"/>
<dbReference type="PDBsum" id="1YE1"/>
<dbReference type="PDBsum" id="1YE2"/>
<dbReference type="PDBsum" id="1YEN"/>
<dbReference type="PDBsum" id="1YEO"/>
<dbReference type="PDBsum" id="1YEQ"/>
<dbReference type="PDBsum" id="1YEU"/>
<dbReference type="PDBsum" id="1YEV"/>
<dbReference type="PDBsum" id="1YFF"/>
<dbReference type="PDBsum" id="1YG5"/>
<dbReference type="PDBsum" id="1YGD"/>
<dbReference type="PDBsum" id="1YGF"/>
<dbReference type="PDBsum" id="1YH9"/>
<dbReference type="PDBsum" id="1YHE"/>
<dbReference type="PDBsum" id="1YHR"/>
<dbReference type="PDBsum" id="1YIE"/>
<dbReference type="PDBsum" id="1YIH"/>
<dbReference type="PDBsum" id="1YVQ"/>
<dbReference type="PDBsum" id="1YVT"/>
<dbReference type="PDBsum" id="1YZI"/>
<dbReference type="PDBsum" id="2D5Z"/>
<dbReference type="PDBsum" id="2D60"/>
<dbReference type="PDBsum" id="2DN1"/>
<dbReference type="PDBsum" id="2DN2"/>
<dbReference type="PDBsum" id="2DN3"/>
<dbReference type="PDBsum" id="2DXM"/>
<dbReference type="PDBsum" id="2H35"/>
<dbReference type="PDBsum" id="2HBC"/>
<dbReference type="PDBsum" id="2HBD"/>
<dbReference type="PDBsum" id="2HBE"/>
<dbReference type="PDBsum" id="2HBF"/>
<dbReference type="PDBsum" id="2HBS"/>
<dbReference type="PDBsum" id="2HCO"/>
<dbReference type="PDBsum" id="2HHB"/>
<dbReference type="PDBsum" id="2HHD"/>
<dbReference type="PDBsum" id="2HHE"/>
<dbReference type="PDBsum" id="2M6Z"/>
<dbReference type="PDBsum" id="2W6V"/>
<dbReference type="PDBsum" id="2W72"/>
<dbReference type="PDBsum" id="2YRS"/>
<dbReference type="PDBsum" id="3B75"/>
<dbReference type="PDBsum" id="3D17"/>
<dbReference type="PDBsum" id="3D7O"/>
<dbReference type="PDBsum" id="3DUT"/>
<dbReference type="PDBsum" id="3HHB"/>
<dbReference type="PDBsum" id="3HXN"/>
<dbReference type="PDBsum" id="3IC0"/>
<dbReference type="PDBsum" id="3IC2"/>
<dbReference type="PDBsum" id="3KMF"/>
<dbReference type="PDBsum" id="3NL7"/>
<dbReference type="PDBsum" id="3NMM"/>
<dbReference type="PDBsum" id="3ODQ"/>
<dbReference type="PDBsum" id="3ONZ"/>
<dbReference type="PDBsum" id="3OO4"/>
<dbReference type="PDBsum" id="3OO5"/>
<dbReference type="PDBsum" id="3P5Q"/>
<dbReference type="PDBsum" id="3QJB"/>
<dbReference type="PDBsum" id="3QJC"/>
<dbReference type="PDBsum" id="3QJD"/>
<dbReference type="PDBsum" id="3QJE"/>
<dbReference type="PDBsum" id="3R5I"/>
<dbReference type="PDBsum" id="3S65"/>
<dbReference type="PDBsum" id="3S66"/>
<dbReference type="PDBsum" id="3SZK"/>
<dbReference type="PDBsum" id="3W4U"/>
<dbReference type="PDBsum" id="3WCP"/>
<dbReference type="PDBsum" id="3WHM"/>
<dbReference type="PDBsum" id="4FC3"/>
<dbReference type="PDBsum" id="4HHB"/>
<dbReference type="PDBsum" id="4IJ2"/>
<dbReference type="PDBsum" id="4L7Y"/>
<dbReference type="PDBsum" id="4M4A"/>
<dbReference type="PDBsum" id="4M4B"/>
<dbReference type="PDBsum" id="4MQC"/>
<dbReference type="PDBsum" id="4MQG"/>
<dbReference type="PDBsum" id="4MQH"/>
<dbReference type="PDBsum" id="4MQI"/>
<dbReference type="PDBsum" id="4N7N"/>
<dbReference type="PDBsum" id="4N7O"/>
<dbReference type="PDBsum" id="4N7P"/>
<dbReference type="PDBsum" id="4N8T"/>
<dbReference type="PDBsum" id="4NI0"/>
<dbReference type="PDBsum" id="4NI1"/>
<dbReference type="PDBsum" id="4ROL"/>
<dbReference type="PDBsum" id="4ROM"/>
<dbReference type="PDBsum" id="4WJG"/>
<dbReference type="PDBsum" id="4X0L"/>
<dbReference type="PDBsum" id="4XS0"/>
<dbReference type="PDBsum" id="5E29"/>
<dbReference type="PDBsum" id="5E6E"/>
<dbReference type="PDBsum" id="5E83"/>
<dbReference type="PDBsum" id="5EE4"/>
<dbReference type="PDBsum" id="5HU6"/>
<dbReference type="PDBsum" id="5HY8"/>
<dbReference type="PDBsum" id="5JDO"/>
<dbReference type="PDBsum" id="5KDQ"/>
<dbReference type="PDBsum" id="5KSI"/>
<dbReference type="PDBsum" id="5KSJ"/>
<dbReference type="PDBsum" id="5NI1"/>
<dbReference type="PDBsum" id="5SW7"/>
<dbReference type="PDBsum" id="5U3I"/>
<dbReference type="PDBsum" id="5UCU"/>
<dbReference type="PDBsum" id="5UFJ"/>
<dbReference type="PDBsum" id="5URC"/>
<dbReference type="PDBsum" id="5VMM"/>
<dbReference type="PDBsum" id="5WOG"/>
<dbReference type="PDBsum" id="5WOH"/>
<dbReference type="PDBsum" id="5X2R"/>
<dbReference type="PDBsum" id="5X2S"/>
<dbReference type="PDBsum" id="5X2T"/>
<dbReference type="PDBsum" id="5X2U"/>
<dbReference type="PDBsum" id="6BB5"/>
<dbReference type="PDBsum" id="6BNR"/>
<dbReference type="PDBsum" id="6BWP"/>
<dbReference type="PDBsum" id="6BWU"/>
<dbReference type="PDBsum" id="6DI4"/>
<dbReference type="PDBsum" id="6FQF"/>
<dbReference type="PDBsum" id="6HAL"/>
<dbReference type="PDBsum" id="6HBW"/>
<dbReference type="PDBsum" id="6HK2"/>
<dbReference type="PDBsum" id="6KA9"/>
<dbReference type="PDBsum" id="6KAE"/>
<dbReference type="PDBsum" id="6KAH"/>
<dbReference type="PDBsum" id="6KAI"/>
<dbReference type="PDBsum" id="6KAO"/>
<dbReference type="PDBsum" id="6KAP"/>
<dbReference type="PDBsum" id="6KAQ"/>
<dbReference type="PDBsum" id="6KAR"/>
<dbReference type="PDBsum" id="6KAS"/>
<dbReference type="PDBsum" id="6KAT"/>
<dbReference type="PDBsum" id="6KAU"/>
<dbReference type="PDBsum" id="6KAV"/>
<dbReference type="PDBsum" id="6KYE"/>
<dbReference type="PDBsum" id="6L5V"/>
<dbReference type="PDBsum" id="6L5W"/>
<dbReference type="PDBsum" id="6L5X"/>
<dbReference type="PDBsum" id="6L5Y"/>
<dbReference type="PDBsum" id="6LCW"/>
<dbReference type="PDBsum" id="6LCX"/>
<dbReference type="PDBsum" id="6NBC"/>
<dbReference type="PDBsum" id="6NBD"/>
<dbReference type="PDBsum" id="6NQ5"/>
<dbReference type="PDBsum" id="6TB2"/>
<dbReference type="PDBsum" id="6XD9"/>
<dbReference type="PDBsum" id="6XDT"/>
<dbReference type="PDBsum" id="6XE7"/>
<dbReference type="PDBsum" id="7AET"/>
<dbReference type="PDBsum" id="7AEU"/>
<dbReference type="PDBsum" id="7AEV"/>
<dbReference type="PDBsum" id="7CUE"/>
<dbReference type="PDBsum" id="7DY3"/>
<dbReference type="PDBsum" id="7DY4"/>
<dbReference type="PDBsum" id="7JJQ"/>
<dbReference type="PDBsum" id="7JXZ"/>
<dbReference type="PDBsum" id="7JY0"/>
<dbReference type="PDBsum" id="7JY1"/>
<dbReference type="PDBsum" id="7JY3"/>
<dbReference type="PDBsum" id="7K4M"/>
<dbReference type="PDBsum" id="7PCF"/>
<dbReference type="PDBsum" id="7PCH"/>
<dbReference type="PDBsum" id="7PCQ"/>
<dbReference type="PDBsum" id="7UD7"/>
<dbReference type="PDBsum" id="7UD8"/>
<dbReference type="PDBsum" id="7UF6"/>
<dbReference type="PDBsum" id="7UF7"/>
<dbReference type="PDBsum" id="7UVB"/>
<dbReference type="PDBsum" id="7VDE"/>
<dbReference type="PDBsum" id="7XGY"/>
<dbReference type="PDBsum" id="8DOV"/>
<dbReference type="PDBsum" id="8EGI"/>
<dbReference type="PDBsum" id="8FDK"/>
<dbReference type="PDBsum" id="8FDL"/>
<dbReference type="PDBsum" id="8FDM"/>
<dbReference type="PDBsum" id="8FDN"/>
<dbReference type="PDBsum" id="8VYL"/>
<dbReference type="PDBsum" id="8WJ0"/>
<dbReference type="PDBsum" id="8WJ1"/>
<dbReference type="PDBsum" id="8WJ2"/>
<dbReference type="PDBsum" id="8WXZ"/>
<dbReference type="PDBsum" id="8XMP"/>
<dbReference type="PDBsum" id="8XMQ"/>
<dbReference type="PDBsum" id="8XMW"/>
<dbReference type="PDBsum" id="9AV9"/>
<dbReference type="PDBsum" id="9AYZ"/>
<dbReference type="PDBsum" id="9BCJ"/>
<dbReference type="PDBsum" id="9FHB"/>
<dbReference type="PDBsum" id="9FMU"/>
<dbReference type="PDBsum" id="9FNO"/>
<dbReference type="BMRB" id="P68871"/>
<dbReference type="EMDB" id="EMD-0407"/>
<dbReference type="EMDB" id="EMD-0408"/>
<dbReference type="EMDB" id="EMD-13319"/>
<dbReference type="EMDB" id="EMD-13320"/>
<dbReference type="EMDB" id="EMD-13325"/>
<dbReference type="EMDB" id="EMD-31915"/>
<dbReference type="EMDB" id="EMD-33189"/>
<dbReference type="EMDB" id="EMD-37574"/>
<dbReference type="EMDB" id="EMD-37575"/>
<dbReference type="EMDB" id="EMD-37576"/>
<dbReference type="EMDB" id="EMD-38485"/>
<dbReference type="EMDB" id="EMD-38486"/>
<dbReference type="EMDB" id="EMD-38490"/>
<dbReference type="EMDB" id="EMD-50444"/>
<dbReference type="EMDB" id="EMD-50570"/>
<dbReference type="EMDB" id="EMD-50600"/>
<dbReference type="SASBDB" id="P68871"/>
<dbReference type="SMR" id="P68871"/>
<dbReference type="BioGRID" id="109293">
    <property type="interactions" value="226"/>
</dbReference>
<dbReference type="ComplexPortal" id="CPX-2158">
    <property type="entry name" value="Hemoglobin HbA complex"/>
</dbReference>
<dbReference type="ComplexPortal" id="CPX-2929">
    <property type="entry name" value="Hemoglobin Portland-2 complex"/>
</dbReference>
<dbReference type="ComplexPortal" id="CPX-2936">
    <property type="entry name" value="Hemoglobin HbH complex"/>
</dbReference>
<dbReference type="CORUM" id="P68871"/>
<dbReference type="DIP" id="DIP-35526N"/>
<dbReference type="FunCoup" id="P68871">
    <property type="interactions" value="37"/>
</dbReference>
<dbReference type="IntAct" id="P68871">
    <property type="interactions" value="120"/>
</dbReference>
<dbReference type="MINT" id="P68871"/>
<dbReference type="STRING" id="9606.ENSP00000494175"/>
<dbReference type="BindingDB" id="P68871"/>
<dbReference type="ChEMBL" id="CHEMBL4331"/>
<dbReference type="DrugBank" id="DB08262">
    <property type="generic name" value="2,6-dicarboxynaphthalene"/>
</dbReference>
<dbReference type="DrugBank" id="DB07427">
    <property type="generic name" value="2-[(2-methoxy-5-methylphenoxy)methyl]pyridine"/>
</dbReference>
<dbReference type="DrugBank" id="DB08077">
    <property type="generic name" value="2-[4-({[(3,5-DICHLOROPHENYL)AMINO]CARBONYL}AMINO)PHENOXY]-2-METHYLPROPANOIC ACID"/>
</dbReference>
<dbReference type="DrugBank" id="DB07428">
    <property type="generic name" value="4-[(5-methoxy-2-methylphenoxy)methyl]pyridine"/>
</dbReference>
<dbReference type="DrugBank" id="DB02126">
    <property type="generic name" value="4-Carboxycinnamic Acid"/>
</dbReference>
<dbReference type="DrugBank" id="DB09130">
    <property type="generic name" value="Copper"/>
</dbReference>
<dbReference type="DrugBank" id="DB08486">
    <property type="generic name" value="Efaproxiral"/>
</dbReference>
<dbReference type="DrugBank" id="DB09147">
    <property type="generic name" value="Ferric pyrophosphate"/>
</dbReference>
<dbReference type="DrugBank" id="DB13995">
    <property type="generic name" value="Ferric pyrophosphate citrate"/>
</dbReference>
<dbReference type="DrugBank" id="DB00893">
    <property type="generic name" value="Iron Dextran"/>
</dbReference>
<dbReference type="DrugBank" id="DB09112">
    <property type="generic name" value="Nitrous acid"/>
</dbReference>
<dbReference type="DrugBank" id="DB09140">
    <property type="generic name" value="Oxygen"/>
</dbReference>
<dbReference type="DrugBank" id="DB06154">
    <property type="generic name" value="Pentaerythritol tetranitrate"/>
</dbReference>
<dbReference type="DrugBank" id="DB18122">
    <property type="generic name" value="PF-07059013"/>
</dbReference>
<dbReference type="DrugBank" id="DB07645">
    <property type="generic name" value="Sebacic acid"/>
</dbReference>
<dbReference type="DrugBank" id="DB09517">
    <property type="generic name" value="Sodium ferric gluconate complex"/>
</dbReference>
<dbReference type="DrugBank" id="DB08632">
    <property type="generic name" value="Trimesic acid"/>
</dbReference>
<dbReference type="DrugBank" id="DB01593">
    <property type="generic name" value="Zinc"/>
</dbReference>
<dbReference type="DrugBank" id="DB14487">
    <property type="generic name" value="Zinc acetate"/>
</dbReference>
<dbReference type="DrugBank" id="DB14533">
    <property type="generic name" value="Zinc chloride"/>
</dbReference>
<dbReference type="DrugBank" id="DB14548">
    <property type="generic name" value="Zinc sulfate, unspecified form"/>
</dbReference>
<dbReference type="DrugCentral" id="P68871"/>
<dbReference type="TCDB" id="1.A.107.1.2">
    <property type="family name" value="the pore-forming globin (globin) family"/>
</dbReference>
<dbReference type="CarbonylDB" id="P68871"/>
<dbReference type="GlyConnect" id="2875">
    <property type="glycosylation" value="1 O-GlcNAc glycan (3 sites)"/>
</dbReference>
<dbReference type="GlyCosmos" id="P68871">
    <property type="glycosylation" value="10 sites, 2 glycans"/>
</dbReference>
<dbReference type="GlyGen" id="P68871">
    <property type="glycosylation" value="4 sites, 2 O-linked glycans (4 sites)"/>
</dbReference>
<dbReference type="iPTMnet" id="P68871"/>
<dbReference type="MetOSite" id="P68871"/>
<dbReference type="PhosphoSitePlus" id="P68871"/>
<dbReference type="BioMuta" id="HBB"/>
<dbReference type="DMDM" id="56749856"/>
<dbReference type="REPRODUCTION-2DPAGE" id="IPI00654755"/>
<dbReference type="REPRODUCTION-2DPAGE" id="P68871"/>
<dbReference type="CPTAC" id="CPTAC-5884"/>
<dbReference type="jPOST" id="P68871"/>
<dbReference type="MassIVE" id="P68871"/>
<dbReference type="PaxDb" id="9606-ENSP00000333994"/>
<dbReference type="PeptideAtlas" id="P68871"/>
<dbReference type="PRIDE" id="P68871"/>
<dbReference type="ProteomicsDB" id="57543"/>
<dbReference type="TopDownProteomics" id="P68871"/>
<dbReference type="ABCD" id="P68871">
    <property type="antibodies" value="1 sequenced antibody"/>
</dbReference>
<dbReference type="Antibodypedia" id="34986">
    <property type="antibodies" value="446 antibodies from 36 providers"/>
</dbReference>
<dbReference type="DNASU" id="3043"/>
<dbReference type="Ensembl" id="ENST00000335295.4">
    <property type="protein sequence ID" value="ENSP00000333994.3"/>
    <property type="gene ID" value="ENSG00000244734.4"/>
</dbReference>
<dbReference type="Ensembl" id="ENST00000647020.1">
    <property type="protein sequence ID" value="ENSP00000494175.1"/>
    <property type="gene ID" value="ENSG00000244734.4"/>
</dbReference>
<dbReference type="GeneID" id="3043"/>
<dbReference type="KEGG" id="hsa:3043"/>
<dbReference type="MANE-Select" id="ENST00000335295.4">
    <property type="protein sequence ID" value="ENSP00000333994.3"/>
    <property type="RefSeq nucleotide sequence ID" value="NM_000518.5"/>
    <property type="RefSeq protein sequence ID" value="NP_000509.1"/>
</dbReference>
<dbReference type="UCSC" id="uc001mae.2">
    <property type="organism name" value="human"/>
</dbReference>
<dbReference type="AGR" id="HGNC:4827"/>
<dbReference type="CTD" id="3043"/>
<dbReference type="DisGeNET" id="3043"/>
<dbReference type="GeneCards" id="HBB"/>
<dbReference type="GeneReviews" id="HBB"/>
<dbReference type="HGNC" id="HGNC:4827">
    <property type="gene designation" value="HBB"/>
</dbReference>
<dbReference type="HPA" id="ENSG00000244734">
    <property type="expression patterns" value="Tissue enriched (bone)"/>
</dbReference>
<dbReference type="MalaCards" id="HBB"/>
<dbReference type="MIM" id="140700">
    <property type="type" value="phenotype"/>
</dbReference>
<dbReference type="MIM" id="141900">
    <property type="type" value="gene+phenotype"/>
</dbReference>
<dbReference type="MIM" id="603902">
    <property type="type" value="phenotype"/>
</dbReference>
<dbReference type="MIM" id="603903">
    <property type="type" value="phenotype"/>
</dbReference>
<dbReference type="MIM" id="611162">
    <property type="type" value="phenotype"/>
</dbReference>
<dbReference type="MIM" id="613985">
    <property type="type" value="phenotype"/>
</dbReference>
<dbReference type="neXtProt" id="NX_P68871"/>
<dbReference type="OpenTargets" id="ENSG00000244734"/>
<dbReference type="Orphanet" id="247511">
    <property type="disease" value="Autosomal dominant secondary polycythemia"/>
</dbReference>
<dbReference type="Orphanet" id="231222">
    <property type="disease" value="Beta-thalassemia intermedia"/>
</dbReference>
<dbReference type="Orphanet" id="231214">
    <property type="disease" value="Beta-thalassemia major"/>
</dbReference>
<dbReference type="Orphanet" id="231237">
    <property type="disease" value="Delta-beta-thalassemia"/>
</dbReference>
<dbReference type="Orphanet" id="231226">
    <property type="disease" value="Dominant beta-thalassemia"/>
</dbReference>
<dbReference type="Orphanet" id="2132">
    <property type="disease" value="Hemoglobin C disease"/>
</dbReference>
<dbReference type="Orphanet" id="231242">
    <property type="disease" value="Hemoglobin C-beta-thalassemia syndrome"/>
</dbReference>
<dbReference type="Orphanet" id="90039">
    <property type="disease" value="Hemoglobin D disease"/>
</dbReference>
<dbReference type="Orphanet" id="2133">
    <property type="disease" value="Hemoglobin E disease"/>
</dbReference>
<dbReference type="Orphanet" id="231249">
    <property type="disease" value="Hemoglobin E-beta-thalassemia syndrome"/>
</dbReference>
<dbReference type="Orphanet" id="330032">
    <property type="disease" value="Hemoglobin Lepore-beta-thalassemia syndrome"/>
</dbReference>
<dbReference type="Orphanet" id="330041">
    <property type="disease" value="Hemoglobin M disease"/>
</dbReference>
<dbReference type="Orphanet" id="46532">
    <property type="disease" value="Hereditary persistence of fetal hemoglobin-beta-thalassemia syndrome"/>
</dbReference>
<dbReference type="Orphanet" id="251380">
    <property type="disease" value="Hereditary persistence of fetal hemoglobin-sickle cell disease syndrome"/>
</dbReference>
<dbReference type="Orphanet" id="232">
    <property type="disease" value="Sickle cell anemia"/>
</dbReference>
<dbReference type="Orphanet" id="251359">
    <property type="disease" value="Sickle cell-beta-thalassemia disease syndrome"/>
</dbReference>
<dbReference type="Orphanet" id="251365">
    <property type="disease" value="Sickle cell-hemoglobin C disease syndrome"/>
</dbReference>
<dbReference type="Orphanet" id="251370">
    <property type="disease" value="Sickle cell-hemoglobin D disease syndrome"/>
</dbReference>
<dbReference type="Orphanet" id="251375">
    <property type="disease" value="Sickle cell-hemoglobin E disease syndrome"/>
</dbReference>
<dbReference type="PharmGKB" id="PA29202"/>
<dbReference type="VEuPathDB" id="HostDB:ENSG00000244734"/>
<dbReference type="eggNOG" id="KOG3378">
    <property type="taxonomic scope" value="Eukaryota"/>
</dbReference>
<dbReference type="GeneTree" id="ENSGT00940000163476"/>
<dbReference type="HOGENOM" id="CLU_003827_10_0_1"/>
<dbReference type="InParanoid" id="P68871"/>
<dbReference type="OMA" id="HAIVSIW"/>
<dbReference type="OrthoDB" id="9886081at2759"/>
<dbReference type="PAN-GO" id="P68871">
    <property type="GO annotations" value="10 GO annotations based on evolutionary models"/>
</dbReference>
<dbReference type="PhylomeDB" id="P68871"/>
<dbReference type="TreeFam" id="TF333268"/>
<dbReference type="PathwayCommons" id="P68871"/>
<dbReference type="Reactome" id="R-HSA-1237044">
    <property type="pathway name" value="Erythrocytes take up carbon dioxide and release oxygen"/>
</dbReference>
<dbReference type="Reactome" id="R-HSA-1247673">
    <property type="pathway name" value="Erythrocytes take up oxygen and release carbon dioxide"/>
</dbReference>
<dbReference type="Reactome" id="R-HSA-2168880">
    <property type="pathway name" value="Scavenging of heme from plasma"/>
</dbReference>
<dbReference type="Reactome" id="R-HSA-6798695">
    <property type="pathway name" value="Neutrophil degranulation"/>
</dbReference>
<dbReference type="Reactome" id="R-HSA-9613829">
    <property type="pathway name" value="Chaperone Mediated Autophagy"/>
</dbReference>
<dbReference type="Reactome" id="R-HSA-9615710">
    <property type="pathway name" value="Late endosomal microautophagy"/>
</dbReference>
<dbReference type="Reactome" id="R-HSA-9707564">
    <property type="pathway name" value="Cytoprotection by HMOX1"/>
</dbReference>
<dbReference type="Reactome" id="R-HSA-9707616">
    <property type="pathway name" value="Heme signaling"/>
</dbReference>
<dbReference type="Reactome" id="R-HSA-983231">
    <property type="pathway name" value="Factors involved in megakaryocyte development and platelet production"/>
</dbReference>
<dbReference type="SignaLink" id="P68871"/>
<dbReference type="SIGNOR" id="P68871"/>
<dbReference type="BioGRID-ORCS" id="3043">
    <property type="hits" value="14 hits in 1155 CRISPR screens"/>
</dbReference>
<dbReference type="ChiTaRS" id="HBB">
    <property type="organism name" value="human"/>
</dbReference>
<dbReference type="EvolutionaryTrace" id="P68871"/>
<dbReference type="GeneWiki" id="HBB"/>
<dbReference type="GenomeRNAi" id="3043"/>
<dbReference type="Pharos" id="P68871">
    <property type="development level" value="Tbio"/>
</dbReference>
<dbReference type="PRO" id="PR:P68871"/>
<dbReference type="Proteomes" id="UP000005640">
    <property type="component" value="Chromosome 11"/>
</dbReference>
<dbReference type="RNAct" id="P68871">
    <property type="molecule type" value="protein"/>
</dbReference>
<dbReference type="Bgee" id="ENSG00000244734">
    <property type="expression patterns" value="Expressed in trabecular bone tissue and 206 other cell types or tissues"/>
</dbReference>
<dbReference type="ExpressionAtlas" id="P68871">
    <property type="expression patterns" value="baseline and differential"/>
</dbReference>
<dbReference type="GO" id="GO:0072562">
    <property type="term" value="C:blood microparticle"/>
    <property type="evidence" value="ECO:0007005"/>
    <property type="project" value="UniProtKB"/>
</dbReference>
<dbReference type="GO" id="GO:0005829">
    <property type="term" value="C:cytosol"/>
    <property type="evidence" value="ECO:0000304"/>
    <property type="project" value="Reactome"/>
</dbReference>
<dbReference type="GO" id="GO:0071682">
    <property type="term" value="C:endocytic vesicle lumen"/>
    <property type="evidence" value="ECO:0000304"/>
    <property type="project" value="Reactome"/>
</dbReference>
<dbReference type="GO" id="GO:0070062">
    <property type="term" value="C:extracellular exosome"/>
    <property type="evidence" value="ECO:0007005"/>
    <property type="project" value="UniProtKB"/>
</dbReference>
<dbReference type="GO" id="GO:0005576">
    <property type="term" value="C:extracellular region"/>
    <property type="evidence" value="ECO:0000304"/>
    <property type="project" value="Reactome"/>
</dbReference>
<dbReference type="GO" id="GO:0005615">
    <property type="term" value="C:extracellular space"/>
    <property type="evidence" value="ECO:0000314"/>
    <property type="project" value="UniProtKB"/>
</dbReference>
<dbReference type="GO" id="GO:1904813">
    <property type="term" value="C:ficolin-1-rich granule lumen"/>
    <property type="evidence" value="ECO:0000304"/>
    <property type="project" value="Reactome"/>
</dbReference>
<dbReference type="GO" id="GO:0031838">
    <property type="term" value="C:haptoglobin-hemoglobin complex"/>
    <property type="evidence" value="ECO:0000314"/>
    <property type="project" value="BHF-UCL"/>
</dbReference>
<dbReference type="GO" id="GO:0005833">
    <property type="term" value="C:hemoglobin complex"/>
    <property type="evidence" value="ECO:0000314"/>
    <property type="project" value="BHF-UCL"/>
</dbReference>
<dbReference type="GO" id="GO:1904724">
    <property type="term" value="C:tertiary granule lumen"/>
    <property type="evidence" value="ECO:0000304"/>
    <property type="project" value="Reactome"/>
</dbReference>
<dbReference type="GO" id="GO:0020037">
    <property type="term" value="F:heme binding"/>
    <property type="evidence" value="ECO:0000318"/>
    <property type="project" value="GO_Central"/>
</dbReference>
<dbReference type="GO" id="GO:0031721">
    <property type="term" value="F:hemoglobin alpha binding"/>
    <property type="evidence" value="ECO:0000318"/>
    <property type="project" value="GO_Central"/>
</dbReference>
<dbReference type="GO" id="GO:0030492">
    <property type="term" value="F:hemoglobin binding"/>
    <property type="evidence" value="ECO:0000314"/>
    <property type="project" value="UniProtKB"/>
</dbReference>
<dbReference type="GO" id="GO:0046872">
    <property type="term" value="F:metal ion binding"/>
    <property type="evidence" value="ECO:0007669"/>
    <property type="project" value="UniProtKB-KW"/>
</dbReference>
<dbReference type="GO" id="GO:0019825">
    <property type="term" value="F:oxygen binding"/>
    <property type="evidence" value="ECO:0000314"/>
    <property type="project" value="UniProtKB"/>
</dbReference>
<dbReference type="GO" id="GO:0005344">
    <property type="term" value="F:oxygen carrier activity"/>
    <property type="evidence" value="ECO:0000318"/>
    <property type="project" value="GO_Central"/>
</dbReference>
<dbReference type="GO" id="GO:0097746">
    <property type="term" value="P:blood vessel diameter maintenance"/>
    <property type="evidence" value="ECO:0007669"/>
    <property type="project" value="UniProtKB-KW"/>
</dbReference>
<dbReference type="GO" id="GO:0015670">
    <property type="term" value="P:carbon dioxide transport"/>
    <property type="evidence" value="ECO:0000303"/>
    <property type="project" value="ComplexPortal"/>
</dbReference>
<dbReference type="GO" id="GO:0098869">
    <property type="term" value="P:cellular oxidant detoxification"/>
    <property type="evidence" value="ECO:0007669"/>
    <property type="project" value="GOC"/>
</dbReference>
<dbReference type="GO" id="GO:0042744">
    <property type="term" value="P:hydrogen peroxide catabolic process"/>
    <property type="evidence" value="ECO:0000314"/>
    <property type="project" value="BHF-UCL"/>
</dbReference>
<dbReference type="GO" id="GO:0006954">
    <property type="term" value="P:inflammatory response"/>
    <property type="evidence" value="ECO:0000314"/>
    <property type="project" value="BHF-UCL"/>
</dbReference>
<dbReference type="GO" id="GO:0030185">
    <property type="term" value="P:nitric oxide transport"/>
    <property type="evidence" value="ECO:0000314"/>
    <property type="project" value="ComplexPortal"/>
</dbReference>
<dbReference type="GO" id="GO:0015671">
    <property type="term" value="P:oxygen transport"/>
    <property type="evidence" value="ECO:0000314"/>
    <property type="project" value="ComplexPortal"/>
</dbReference>
<dbReference type="GO" id="GO:0070527">
    <property type="term" value="P:platelet aggregation"/>
    <property type="evidence" value="ECO:0007001"/>
    <property type="project" value="UniProtKB"/>
</dbReference>
<dbReference type="GO" id="GO:0045429">
    <property type="term" value="P:positive regulation of nitric oxide biosynthetic process"/>
    <property type="evidence" value="ECO:0000303"/>
    <property type="project" value="UniProtKB"/>
</dbReference>
<dbReference type="GO" id="GO:0008217">
    <property type="term" value="P:regulation of blood pressure"/>
    <property type="evidence" value="ECO:0007669"/>
    <property type="project" value="UniProtKB-KW"/>
</dbReference>
<dbReference type="GO" id="GO:0070293">
    <property type="term" value="P:renal absorption"/>
    <property type="evidence" value="ECO:0000315"/>
    <property type="project" value="UniProtKB"/>
</dbReference>
<dbReference type="GO" id="GO:0042542">
    <property type="term" value="P:response to hydrogen peroxide"/>
    <property type="evidence" value="ECO:0000314"/>
    <property type="project" value="BHF-UCL"/>
</dbReference>
<dbReference type="CDD" id="cd08925">
    <property type="entry name" value="Hb-beta-like"/>
    <property type="match status" value="1"/>
</dbReference>
<dbReference type="FunFam" id="1.10.490.10:FF:000001">
    <property type="entry name" value="Hemoglobin subunit beta"/>
    <property type="match status" value="1"/>
</dbReference>
<dbReference type="Gene3D" id="1.10.490.10">
    <property type="entry name" value="Globins"/>
    <property type="match status" value="1"/>
</dbReference>
<dbReference type="InterPro" id="IPR000971">
    <property type="entry name" value="Globin"/>
</dbReference>
<dbReference type="InterPro" id="IPR009050">
    <property type="entry name" value="Globin-like_sf"/>
</dbReference>
<dbReference type="InterPro" id="IPR012292">
    <property type="entry name" value="Globin/Proto"/>
</dbReference>
<dbReference type="InterPro" id="IPR002337">
    <property type="entry name" value="Hemoglobin_b"/>
</dbReference>
<dbReference type="InterPro" id="IPR050056">
    <property type="entry name" value="Hemoglobin_oxygen_transport"/>
</dbReference>
<dbReference type="PANTHER" id="PTHR11442">
    <property type="entry name" value="HEMOGLOBIN FAMILY MEMBER"/>
    <property type="match status" value="1"/>
</dbReference>
<dbReference type="PANTHER" id="PTHR11442:SF42">
    <property type="entry name" value="HEMOGLOBIN SUBUNIT BETA"/>
    <property type="match status" value="1"/>
</dbReference>
<dbReference type="Pfam" id="PF00042">
    <property type="entry name" value="Globin"/>
    <property type="match status" value="1"/>
</dbReference>
<dbReference type="PRINTS" id="PR00814">
    <property type="entry name" value="BETAHAEM"/>
</dbReference>
<dbReference type="SUPFAM" id="SSF46458">
    <property type="entry name" value="Globin-like"/>
    <property type="match status" value="1"/>
</dbReference>
<dbReference type="PROSITE" id="PS01033">
    <property type="entry name" value="GLOBIN"/>
    <property type="match status" value="1"/>
</dbReference>
<evidence type="ECO:0000250" key="1">
    <source>
        <dbReference type="UniProtKB" id="P02086"/>
    </source>
</evidence>
<evidence type="ECO:0000255" key="2">
    <source>
        <dbReference type="PROSITE-ProRule" id="PRU00238"/>
    </source>
</evidence>
<evidence type="ECO:0000269" key="3">
    <source>
    </source>
</evidence>
<evidence type="ECO:0000269" key="4">
    <source>
    </source>
</evidence>
<evidence type="ECO:0000269" key="5">
    <source>
    </source>
</evidence>
<evidence type="ECO:0000269" key="6">
    <source>
    </source>
</evidence>
<evidence type="ECO:0000269" key="7">
    <source>
    </source>
</evidence>
<evidence type="ECO:0000269" key="8">
    <source>
    </source>
</evidence>
<evidence type="ECO:0000269" key="9">
    <source>
    </source>
</evidence>
<evidence type="ECO:0000269" key="10">
    <source>
    </source>
</evidence>
<evidence type="ECO:0000269" key="11">
    <source>
    </source>
</evidence>
<evidence type="ECO:0000269" key="12">
    <source>
    </source>
</evidence>
<evidence type="ECO:0000269" key="13">
    <source>
    </source>
</evidence>
<evidence type="ECO:0000269" key="14">
    <source>
    </source>
</evidence>
<evidence type="ECO:0000269" key="15">
    <source>
    </source>
</evidence>
<evidence type="ECO:0000269" key="16">
    <source>
    </source>
</evidence>
<evidence type="ECO:0000269" key="17">
    <source>
    </source>
</evidence>
<evidence type="ECO:0000269" key="18">
    <source>
    </source>
</evidence>
<evidence type="ECO:0000269" key="19">
    <source>
    </source>
</evidence>
<evidence type="ECO:0000269" key="20">
    <source>
    </source>
</evidence>
<evidence type="ECO:0000269" key="21">
    <source>
    </source>
</evidence>
<evidence type="ECO:0000269" key="22">
    <source>
    </source>
</evidence>
<evidence type="ECO:0000269" key="23">
    <source>
    </source>
</evidence>
<evidence type="ECO:0000269" key="24">
    <source>
    </source>
</evidence>
<evidence type="ECO:0000269" key="25">
    <source>
    </source>
</evidence>
<evidence type="ECO:0000269" key="26">
    <source>
    </source>
</evidence>
<evidence type="ECO:0000269" key="27">
    <source>
    </source>
</evidence>
<evidence type="ECO:0000269" key="28">
    <source>
    </source>
</evidence>
<evidence type="ECO:0000269" key="29">
    <source>
    </source>
</evidence>
<evidence type="ECO:0000269" key="30">
    <source>
    </source>
</evidence>
<evidence type="ECO:0000269" key="31">
    <source>
    </source>
</evidence>
<evidence type="ECO:0000269" key="32">
    <source>
    </source>
</evidence>
<evidence type="ECO:0000269" key="33">
    <source>
    </source>
</evidence>
<evidence type="ECO:0000269" key="34">
    <source>
    </source>
</evidence>
<evidence type="ECO:0000269" key="35">
    <source>
    </source>
</evidence>
<evidence type="ECO:0000269" key="36">
    <source>
    </source>
</evidence>
<evidence type="ECO:0000269" key="37">
    <source>
    </source>
</evidence>
<evidence type="ECO:0000269" key="38">
    <source>
    </source>
</evidence>
<evidence type="ECO:0000269" key="39">
    <source>
    </source>
</evidence>
<evidence type="ECO:0000269" key="40">
    <source>
    </source>
</evidence>
<evidence type="ECO:0000269" key="41">
    <source>
    </source>
</evidence>
<evidence type="ECO:0000269" key="42">
    <source>
    </source>
</evidence>
<evidence type="ECO:0000269" key="43">
    <source>
    </source>
</evidence>
<evidence type="ECO:0000269" key="44">
    <source>
    </source>
</evidence>
<evidence type="ECO:0000269" key="45">
    <source>
    </source>
</evidence>
<evidence type="ECO:0000269" key="46">
    <source>
    </source>
</evidence>
<evidence type="ECO:0000269" key="47">
    <source>
    </source>
</evidence>
<evidence type="ECO:0000269" key="48">
    <source>
    </source>
</evidence>
<evidence type="ECO:0000269" key="49">
    <source>
    </source>
</evidence>
<evidence type="ECO:0000269" key="50">
    <source>
    </source>
</evidence>
<evidence type="ECO:0000269" key="51">
    <source>
    </source>
</evidence>
<evidence type="ECO:0000269" key="52">
    <source>
    </source>
</evidence>
<evidence type="ECO:0000269" key="53">
    <source>
    </source>
</evidence>
<evidence type="ECO:0000269" key="54">
    <source>
    </source>
</evidence>
<evidence type="ECO:0000269" key="55">
    <source>
    </source>
</evidence>
<evidence type="ECO:0000269" key="56">
    <source>
    </source>
</evidence>
<evidence type="ECO:0000269" key="57">
    <source>
    </source>
</evidence>
<evidence type="ECO:0000269" key="58">
    <source>
    </source>
</evidence>
<evidence type="ECO:0000269" key="59">
    <source>
    </source>
</evidence>
<evidence type="ECO:0000269" key="60">
    <source>
    </source>
</evidence>
<evidence type="ECO:0000269" key="61">
    <source>
    </source>
</evidence>
<evidence type="ECO:0000269" key="62">
    <source>
    </source>
</evidence>
<evidence type="ECO:0000269" key="63">
    <source>
    </source>
</evidence>
<evidence type="ECO:0000269" key="64">
    <source>
    </source>
</evidence>
<evidence type="ECO:0000269" key="65">
    <source>
    </source>
</evidence>
<evidence type="ECO:0000269" key="66">
    <source>
    </source>
</evidence>
<evidence type="ECO:0000269" key="67">
    <source>
    </source>
</evidence>
<evidence type="ECO:0000269" key="68">
    <source>
    </source>
</evidence>
<evidence type="ECO:0000269" key="69">
    <source>
    </source>
</evidence>
<evidence type="ECO:0000269" key="70">
    <source>
    </source>
</evidence>
<evidence type="ECO:0000269" key="71">
    <source>
    </source>
</evidence>
<evidence type="ECO:0000269" key="72">
    <source>
    </source>
</evidence>
<evidence type="ECO:0000269" key="73">
    <source>
    </source>
</evidence>
<evidence type="ECO:0000269" key="74">
    <source>
    </source>
</evidence>
<evidence type="ECO:0000269" key="75">
    <source>
    </source>
</evidence>
<evidence type="ECO:0000269" key="76">
    <source>
    </source>
</evidence>
<evidence type="ECO:0000269" key="77">
    <source>
    </source>
</evidence>
<evidence type="ECO:0000269" key="78">
    <source>
    </source>
</evidence>
<evidence type="ECO:0000269" key="79">
    <source>
    </source>
</evidence>
<evidence type="ECO:0000269" key="80">
    <source>
    </source>
</evidence>
<evidence type="ECO:0000269" key="81">
    <source>
    </source>
</evidence>
<evidence type="ECO:0000269" key="82">
    <source>
    </source>
</evidence>
<evidence type="ECO:0000269" key="83">
    <source>
    </source>
</evidence>
<evidence type="ECO:0000269" key="84">
    <source>
    </source>
</evidence>
<evidence type="ECO:0000269" key="85">
    <source>
    </source>
</evidence>
<evidence type="ECO:0000269" key="86">
    <source>
    </source>
</evidence>
<evidence type="ECO:0000269" key="87">
    <source>
    </source>
</evidence>
<evidence type="ECO:0000269" key="88">
    <source>
    </source>
</evidence>
<evidence type="ECO:0000269" key="89">
    <source>
    </source>
</evidence>
<evidence type="ECO:0000269" key="90">
    <source>
    </source>
</evidence>
<evidence type="ECO:0000269" key="91">
    <source>
    </source>
</evidence>
<evidence type="ECO:0000269" key="92">
    <source>
    </source>
</evidence>
<evidence type="ECO:0000269" key="93">
    <source>
    </source>
</evidence>
<evidence type="ECO:0000269" key="94">
    <source>
    </source>
</evidence>
<evidence type="ECO:0000269" key="95">
    <source>
    </source>
</evidence>
<evidence type="ECO:0000269" key="96">
    <source>
    </source>
</evidence>
<evidence type="ECO:0000269" key="97">
    <source>
    </source>
</evidence>
<evidence type="ECO:0000269" key="98">
    <source>
    </source>
</evidence>
<evidence type="ECO:0000269" key="99">
    <source>
    </source>
</evidence>
<evidence type="ECO:0000269" key="100">
    <source>
    </source>
</evidence>
<evidence type="ECO:0000269" key="101">
    <source>
    </source>
</evidence>
<evidence type="ECO:0000269" key="102">
    <source>
    </source>
</evidence>
<evidence type="ECO:0000269" key="103">
    <source>
    </source>
</evidence>
<evidence type="ECO:0000269" key="104">
    <source>
    </source>
</evidence>
<evidence type="ECO:0000269" key="105">
    <source>
    </source>
</evidence>
<evidence type="ECO:0000269" key="106">
    <source>
    </source>
</evidence>
<evidence type="ECO:0000269" key="107">
    <source>
    </source>
</evidence>
<evidence type="ECO:0000269" key="108">
    <source>
    </source>
</evidence>
<evidence type="ECO:0000269" key="109">
    <source>
    </source>
</evidence>
<evidence type="ECO:0000269" key="110">
    <source>
    </source>
</evidence>
<evidence type="ECO:0000269" key="111">
    <source>
    </source>
</evidence>
<evidence type="ECO:0000269" key="112">
    <source>
    </source>
</evidence>
<evidence type="ECO:0000269" key="113">
    <source>
    </source>
</evidence>
<evidence type="ECO:0000269" key="114">
    <source>
    </source>
</evidence>
<evidence type="ECO:0000269" key="115">
    <source>
    </source>
</evidence>
<evidence type="ECO:0000269" key="116">
    <source ref="10"/>
</evidence>
<evidence type="ECO:0000269" key="117">
    <source ref="13"/>
</evidence>
<evidence type="ECO:0000269" key="118">
    <source ref="140"/>
</evidence>
<evidence type="ECO:0000269" key="119">
    <source ref="5"/>
</evidence>
<evidence type="ECO:0000269" key="120">
    <source ref="6"/>
</evidence>
<evidence type="ECO:0000269" key="121">
    <source ref="7"/>
</evidence>
<evidence type="ECO:0000269" key="122">
    <source ref="8"/>
</evidence>
<evidence type="ECO:0000303" key="123">
    <source>
    </source>
</evidence>
<evidence type="ECO:0000305" key="124"/>
<evidence type="ECO:0000305" key="125">
    <source>
    </source>
</evidence>
<evidence type="ECO:0007744" key="126">
    <source>
    </source>
</evidence>
<evidence type="ECO:0007829" key="127">
    <source>
        <dbReference type="PDB" id="1IRD"/>
    </source>
</evidence>
<evidence type="ECO:0007829" key="128">
    <source>
        <dbReference type="PDB" id="2W72"/>
    </source>
</evidence>
<protein>
    <recommendedName>
        <fullName>Hemoglobin subunit beta</fullName>
    </recommendedName>
    <alternativeName>
        <fullName>Beta-globin</fullName>
    </alternativeName>
    <alternativeName>
        <fullName>Hemoglobin beta chain</fullName>
    </alternativeName>
    <component>
        <recommendedName>
            <fullName>LVV-hemorphin-7</fullName>
        </recommendedName>
    </component>
    <component>
        <recommendedName>
            <fullName>Spinorphin</fullName>
        </recommendedName>
    </component>
</protein>
<comment type="function">
    <text evidence="51">Involved in oxygen transport from the lung to the various peripheral tissues.</text>
</comment>
<comment type="function">
    <text>LVV-hemorphin-7 potentiates the activity of bradykinin, causing a decrease in blood pressure.</text>
</comment>
<comment type="function">
    <molecule>Spinorphin</molecule>
    <text>Functions as an endogenous inhibitor of enkephalin-degrading enzymes such as DPP3, and as a selective antagonist of the P2RX3 receptor which is involved in pain signaling, these properties implicate it as a regulator of pain and inflammation.</text>
</comment>
<comment type="subunit">
    <text evidence="9 45 79">Heterotetramer of two alpha chains and two beta chains in adult hemoglobin A (HbA). Heterotetramer of two zeta chains and two beta chains in hemoglobin Portland-2, detected in fetuses and neonates with homozygous alpha-thalassemia.</text>
</comment>
<comment type="interaction">
    <interactant intactId="EBI-715554">
        <id>P68871</id>
    </interactant>
    <interactant intactId="EBI-17496373">
        <id>Q9ULK0</id>
        <label>GRID1</label>
    </interactant>
    <organismsDiffer>false</organismsDiffer>
    <experiments>2</experiments>
</comment>
<comment type="interaction">
    <interactant intactId="EBI-715554">
        <id>P68871</id>
    </interactant>
    <interactant intactId="EBI-714680">
        <id>P69905</id>
        <label>HBA2</label>
    </interactant>
    <organismsDiffer>false</organismsDiffer>
    <experiments>32</experiments>
</comment>
<comment type="interaction">
    <interactant intactId="EBI-715554">
        <id>P68871</id>
    </interactant>
    <interactant intactId="EBI-12805802">
        <id>Q6B0K9</id>
        <label>HBM</label>
    </interactant>
    <organismsDiffer>false</organismsDiffer>
    <experiments>3</experiments>
</comment>
<comment type="interaction">
    <interactant intactId="EBI-715554">
        <id>P68871</id>
    </interactant>
    <interactant intactId="EBI-10193656">
        <id>P09105</id>
        <label>HBQ1</label>
    </interactant>
    <organismsDiffer>false</organismsDiffer>
    <experiments>3</experiments>
</comment>
<comment type="interaction">
    <interactant intactId="EBI-715554">
        <id>P68871</id>
    </interactant>
    <interactant intactId="EBI-719843">
        <id>P02008</id>
        <label>HBZ</label>
    </interactant>
    <organismsDiffer>false</organismsDiffer>
    <experiments>7</experiments>
</comment>
<comment type="tissue specificity">
    <text evidence="79">Red blood cells.</text>
</comment>
<comment type="PTM">
    <text>Glucose reacts non-enzymatically with the N-terminus of the beta chain to form a stable ketoamine linkage. This takes place slowly and continuously throughout the 120-day life span of the red blood cell. The rate of glycation is increased in patients with diabetes mellitus.</text>
</comment>
<comment type="PTM">
    <text evidence="25 105 114">S-nitrosylated; a nitric oxide group is first bound to Fe(2+) and then transferred to Cys-94 to allow capture of O(2).</text>
</comment>
<comment type="PTM">
    <text evidence="68">Acetylated on Lys-60, Lys-83 and Lys-145 upon aspirin exposure.</text>
</comment>
<comment type="mass spectrometry" mass="1310.0" method="FAB" evidence="29">
    <molecule>LVV-hemorphin-7</molecule>
</comment>
<comment type="polymorphism">
    <text evidence="4 13 30">Genetic variations in HBB are involved in resistance to malaria [MIM:611162]. Hemoglobin S (Hb S), which at homozygosity is responsible for sickle cell anemia, is not associated with any clinical abnormality when heterozygous. At heterozygosity, Hb S confers an increase in protection from life-threatening malaria. Additional variants conferring resistance against severe malaria are hemoglobin C (Hb C) and hemoglobin E (Hb E).</text>
</comment>
<comment type="disease" evidence="35 48 75 107">
    <disease id="DI-01698">
        <name>Heinz body anemias</name>
        <acronym>HEIBAN</acronym>
        <description>Form of non-spherocytic hemolytic anemia of Dacie type 1. After splenectomy, which has little benefit, basophilic inclusions called Heinz bodies are demonstrable in the erythrocytes. Before splenectomy, diffuse or punctate basophilia may be evident. Most of these cases are probably instances of hemoglobinopathy. The hemoglobin demonstrates heat lability. Heinz bodies are observed also with the Ivemark syndrome (asplenia with cardiovascular anomalies) and with glutathione peroxidase deficiency.</description>
        <dbReference type="MIM" id="140700"/>
    </disease>
    <text>The disease may be caused by variants affecting the gene represented in this entry.</text>
</comment>
<comment type="disease" evidence="12 13 27 44 74 94">
    <disease id="DI-01275">
        <name>Beta-thalassemia</name>
        <acronym>B-THAL</acronym>
        <description>A form of thalassemia. Thalassemias are common monogenic diseases occurring mostly in Mediterranean and Southeast Asian populations. The hallmark of beta-thalassemia is an imbalance in globin-chain production in the adult HbA molecule. Absence of beta chain causes beta(0)-thalassemia, while reduced amounts of detectable beta globin causes beta(+)-thalassemia. In the severe forms of beta-thalassemia, the excess alpha globin chains accumulate in the developing erythroid precursors in the marrow. Their deposition leads to a vast increase in erythroid apoptosis that in turn causes ineffective erythropoiesis and severe microcytic hypochromic anemia. Clinically, beta-thalassemia is divided into thalassemia major which is transfusion dependent, thalassemia intermedia (of intermediate severity), and thalassemia minor that is asymptomatic.</description>
        <dbReference type="MIM" id="613985"/>
    </disease>
    <text>The disease is caused by variants affecting the gene represented in this entry.</text>
</comment>
<comment type="disease" evidence="11 19 30 45 116">
    <disease id="DI-02306">
        <name>Sickle cell disease</name>
        <acronym>SKCA</acronym>
        <description>Characterized by abnormally shaped red cells resulting in chronic anemia and periodic episodes of pain, serious infections and damage to vital organs. Normal red blood cells are round and flexible and flow easily through blood vessels, but in sickle cell anemia, the abnormal hemoglobin (called Hb S) causes red blood cells to become stiff. They are C-shaped and resemble a sickle. These stiffer red blood cells can lead to microvascular occlusion thus cutting off the blood supply to nearby tissues.</description>
        <dbReference type="MIM" id="603903"/>
    </disease>
    <text>The disease is caused by variants affecting the gene represented in this entry.</text>
</comment>
<comment type="disease" evidence="40">
    <disease id="DI-01498">
        <name>Beta-thalassemia, dominant, inclusion body type</name>
        <acronym>B-THALIB</acronym>
        <description>An autosomal dominant form of beta thalassemia characterized by moderate anemia, lifelong jaundice, cholelithiasis and splenomegaly, marked morphologic changes in the red cells, erythroid hyperplasia of the bone marrow with increased numbers of multinucleate red cell precursors, and the presence of large inclusion bodies in the normoblasts, both in the marrow and in the peripheral blood after splenectomy.</description>
        <dbReference type="MIM" id="603902"/>
    </disease>
    <text>The disease is caused by variants affecting the gene represented in this entry.</text>
</comment>
<comment type="miscellaneous">
    <text>One molecule of 2,3-bisphosphoglycerate can bind to two beta chains per hemoglobin tetramer.</text>
</comment>
<comment type="similarity">
    <text evidence="2">Belongs to the globin family.</text>
</comment>
<comment type="caution">
    <text evidence="125">The modification form of Leu-142 is subject of controversy and could be the artifactual result of sample handling.</text>
</comment>
<comment type="caution">
    <text evidence="39 49 118 123">It is unclear if hemoglobin Beckman (Hb Beckman) is defined by p.Ala136Glu or p.Ala136Asp. Hb Beckman has been originally identified by reverse phase-HPLC and tandem mass spectrometry, and has been reported as variant p.Ala136Glu (Ref.140). Subsequently, variant p.Ala136Asp has been reported based on HBB gene complete sequencing results (PubMed:19453576). Variant p.Ala136Asp has also been detected by mass spectrometry (PubMed:26209877). Although the name Hb Beckman is currently used for variant p.Ala136Asp, it cannot be ruled out that Hb Beckman is indeed variant p.Ala136Glu (PubMed:19453576).</text>
</comment>
<comment type="online information" name="HbVar">
    <link uri="https://globin.bx.psu.edu/cgi-bin/hbvar/query_vars3?mode=directlink&amp;gene=HBB"/>
    <text>Human hemoglobin variants and thalassemias</text>
</comment>
<comment type="online information" name="Wikipedia">
    <link uri="https://en.wikipedia.org/wiki/Hemoglobin"/>
    <text>Hemoglobin entry</text>
</comment>
<feature type="initiator methionine" description="Removed" evidence="1 20">
    <location>
        <position position="1"/>
    </location>
</feature>
<feature type="chain" id="PRO_0000052976" description="Hemoglobin subunit beta">
    <location>
        <begin position="2"/>
        <end position="147"/>
    </location>
</feature>
<feature type="peptide" id="PRO_0000296641" description="LVV-hemorphin-7">
    <location>
        <begin position="33"/>
        <end position="42"/>
    </location>
</feature>
<feature type="peptide" id="PRO_0000424226" description="Spinorphin">
    <location>
        <begin position="33"/>
        <end position="39"/>
    </location>
</feature>
<feature type="domain" description="Globin" evidence="2">
    <location>
        <begin position="3"/>
        <end position="147"/>
    </location>
</feature>
<feature type="binding site">
    <location>
        <position position="2"/>
    </location>
    <ligand>
        <name>(2R)-2,3-bisphosphoglycerate</name>
        <dbReference type="ChEBI" id="CHEBI:58248"/>
    </ligand>
</feature>
<feature type="binding site">
    <location>
        <position position="3"/>
    </location>
    <ligand>
        <name>(2R)-2,3-bisphosphoglycerate</name>
        <dbReference type="ChEBI" id="CHEBI:58248"/>
    </ligand>
</feature>
<feature type="binding site" description="distal binding residue">
    <location>
        <position position="64"/>
    </location>
    <ligand>
        <name>heme b</name>
        <dbReference type="ChEBI" id="CHEBI:60344"/>
    </ligand>
    <ligandPart>
        <name>Fe</name>
        <dbReference type="ChEBI" id="CHEBI:18248"/>
    </ligandPart>
</feature>
<feature type="binding site">
    <location>
        <position position="83"/>
    </location>
    <ligand>
        <name>(2R)-2,3-bisphosphoglycerate</name>
        <dbReference type="ChEBI" id="CHEBI:58248"/>
    </ligand>
</feature>
<feature type="binding site" description="proximal binding residue">
    <location>
        <position position="93"/>
    </location>
    <ligand>
        <name>heme b</name>
        <dbReference type="ChEBI" id="CHEBI:60344"/>
    </ligand>
    <ligandPart>
        <name>Fe</name>
        <dbReference type="ChEBI" id="CHEBI:18248"/>
    </ligandPart>
</feature>
<feature type="binding site">
    <location>
        <position position="144"/>
    </location>
    <ligand>
        <name>(2R)-2,3-bisphosphoglycerate</name>
        <dbReference type="ChEBI" id="CHEBI:58248"/>
    </ligand>
</feature>
<feature type="site" description="(Microbial infection) Cleavage; by N.americanus apr-2" evidence="15">
    <location>
        <begin position="8"/>
        <end position="9"/>
    </location>
</feature>
<feature type="site" description="(Microbial infection) Cleavage; by N.americanus apr-2" evidence="15">
    <location>
        <begin position="26"/>
        <end position="27"/>
    </location>
</feature>
<feature type="site" description="(Microbial infection) Cleavage; by N.americanus apr-2" evidence="15">
    <location>
        <begin position="30"/>
        <end position="31"/>
    </location>
</feature>
<feature type="site" description="(Microbial infection) Cleavage; by N.americanus apr-2" evidence="15">
    <location>
        <begin position="36"/>
        <end position="37"/>
    </location>
</feature>
<feature type="site" description="(Microbial infection) Cleavage; by N.americanus apr-2" evidence="15">
    <location>
        <begin position="38"/>
        <end position="39"/>
    </location>
</feature>
<feature type="site" description="(Microbial infection) Cleavage; by N.americanus apr-2" evidence="15">
    <location>
        <begin position="46"/>
        <end position="47"/>
    </location>
</feature>
<feature type="site" description="(Microbial infection) Cleavage; by N.americanus apr-2" evidence="15">
    <location>
        <begin position="53"/>
        <end position="54"/>
    </location>
</feature>
<feature type="site" description="(Microbial infection) Cleavage; by N.americanus apr-2" evidence="15">
    <location>
        <begin position="57"/>
        <end position="58"/>
    </location>
</feature>
<feature type="site" description="Not glycated" evidence="93">
    <location>
        <position position="60"/>
    </location>
</feature>
<feature type="site" description="(Microbial infection) Cleavage; by N.americanus apr-2" evidence="15">
    <location>
        <begin position="72"/>
        <end position="73"/>
    </location>
</feature>
<feature type="site" description="(Microbial infection) Cleavage; by N.americanus apr-2" evidence="15">
    <location>
        <begin position="75"/>
        <end position="76"/>
    </location>
</feature>
<feature type="site" description="Not glycated" evidence="93">
    <location>
        <position position="83"/>
    </location>
</feature>
<feature type="site" description="(Microbial infection) Cleavage; by N.americanus apr-2" evidence="15">
    <location>
        <begin position="85"/>
        <end position="86"/>
    </location>
</feature>
<feature type="site" description="(Microbial infection) Cleavage; by N.americanus apr-2" evidence="15">
    <location>
        <begin position="93"/>
        <end position="94"/>
    </location>
</feature>
<feature type="site" description="Not glycated" evidence="93">
    <location>
        <position position="96"/>
    </location>
</feature>
<feature type="site" description="(Microbial infection) Cleavage; by N.americanus apr-2" evidence="15">
    <location>
        <begin position="105"/>
        <end position="106"/>
    </location>
</feature>
<feature type="site" description="(Microbial infection) Cleavage; by N.americanus apr-2" evidence="15">
    <location>
        <begin position="111"/>
        <end position="112"/>
    </location>
</feature>
<feature type="site" description="(Microbial infection) Cleavage; by N.americanus apr-2" evidence="15">
    <location>
        <begin position="120"/>
        <end position="121"/>
    </location>
</feature>
<feature type="site" description="(Microbial infection) Cleavage; by N.americanus apr-2" evidence="15">
    <location>
        <begin position="123"/>
        <end position="124"/>
    </location>
</feature>
<feature type="site" description="(Microbial infection) Cleavage; by N.americanus apr-2" evidence="15">
    <location>
        <begin position="129"/>
        <end position="130"/>
    </location>
</feature>
<feature type="site" description="(Microbial infection) Cleavage; by N.americanus apr-2" evidence="15">
    <location>
        <begin position="141"/>
        <end position="142"/>
    </location>
</feature>
<feature type="site" description="(Microbial infection) Cleavage; by N.americanus apr-2" evidence="15">
    <location>
        <begin position="145"/>
        <end position="146"/>
    </location>
</feature>
<feature type="modified residue" description="N-acetylvaline" evidence="1">
    <location>
        <position position="2"/>
    </location>
</feature>
<feature type="modified residue" description="N-pyruvate 2-iminyl-valine; in Hb A1b">
    <location>
        <position position="2"/>
    </location>
</feature>
<feature type="modified residue" description="Phosphoserine" evidence="126">
    <location>
        <position position="10"/>
    </location>
</feature>
<feature type="modified residue" description="Phosphothreonine" evidence="126">
    <location>
        <position position="13"/>
    </location>
</feature>
<feature type="modified residue" description="Phosphoserine" evidence="126">
    <location>
        <position position="45"/>
    </location>
</feature>
<feature type="modified residue" description="Phosphothreonine" evidence="126">
    <location>
        <position position="51"/>
    </location>
</feature>
<feature type="modified residue" description="N6-acetyllysine" evidence="68">
    <location>
        <position position="60"/>
    </location>
</feature>
<feature type="modified residue" description="N6-acetyllysine" evidence="68">
    <location>
        <position position="83"/>
    </location>
</feature>
<feature type="modified residue" description="Phosphothreonine" evidence="126">
    <location>
        <position position="88"/>
    </location>
</feature>
<feature type="modified residue" description="S-nitrosocysteine" evidence="105 114">
    <location>
        <position position="94"/>
    </location>
</feature>
<feature type="modified residue" description="N6-acetyllysine; alternate" evidence="68">
    <location>
        <position position="145"/>
    </location>
</feature>
<feature type="glycosylation site" description="N-linked (Glc) (glycation) valine; in Hb A1c" evidence="76">
    <location>
        <position position="2"/>
    </location>
</feature>
<feature type="glycosylation site" description="N-linked (Glc) (glycation) lysine" evidence="93">
    <location>
        <position position="9"/>
    </location>
</feature>
<feature type="glycosylation site" description="N-linked (Glc) (glycation) lysine" evidence="93">
    <location>
        <position position="18"/>
    </location>
</feature>
<feature type="glycosylation site" description="N-linked (Glc) (glycation) lysine" evidence="93">
    <location>
        <position position="67"/>
    </location>
</feature>
<feature type="glycosylation site" description="N-linked (Glc) (glycation) lysine" evidence="93">
    <location>
        <position position="121"/>
    </location>
</feature>
<feature type="glycosylation site" description="N-linked (Glc) (glycation) lysine; alternate" evidence="93">
    <location>
        <position position="145"/>
    </location>
</feature>
<feature type="sequence variant" id="VAR_002856" description="In Raleigh; O(2) affinity down; dbSNP:rs33949930.">
    <original>V</original>
    <variation>A</variation>
    <location>
        <position position="2"/>
    </location>
</feature>
<feature type="sequence variant" id="VAR_002857" description="In Graz; dbSNP:rs33983205." evidence="22">
    <original>H</original>
    <variation>L</variation>
    <location>
        <position position="3"/>
    </location>
</feature>
<feature type="sequence variant" id="VAR_002858" description="In Okayama; O(2) affinity up; dbSNP:rs713040.">
    <original>H</original>
    <variation>Q</variation>
    <location>
        <position position="3"/>
    </location>
</feature>
<feature type="sequence variant" id="VAR_002859" description="In Deer Lodge; O(2) affinity up; dbSNP:rs33983205.">
    <original>H</original>
    <variation>R</variation>
    <location>
        <position position="3"/>
    </location>
</feature>
<feature type="sequence variant" id="VAR_002860" description="In Fukuoka; dbSNP:rs35906307.">
    <original>H</original>
    <variation>Y</variation>
    <location>
        <position position="3"/>
    </location>
</feature>
<feature type="sequence variant" id="VAR_002861" description="In Warwickshire; dbSNP:rs34769005.">
    <original>P</original>
    <variation>R</variation>
    <location>
        <position position="6"/>
    </location>
</feature>
<feature type="sequence variant" id="VAR_002862" description="In G-Makassar; dbSNP:rs334.">
    <original>E</original>
    <variation>A</variation>
    <location>
        <position position="7"/>
    </location>
</feature>
<feature type="sequence variant" id="VAR_002864" description="In Hb C; confers resistance to severe malaria; dbSNP:rs33930165." evidence="4 31">
    <original>E</original>
    <variation>K</variation>
    <location>
        <position position="7"/>
    </location>
</feature>
<feature type="sequence variant" id="VAR_002865" description="In Machida; dbSNP:rs33930165.">
    <original>E</original>
    <variation>Q</variation>
    <location>
        <position position="7"/>
    </location>
</feature>
<feature type="sequence variant" id="VAR_002863" description="In SKCA; Hb S; at heterozygosity confers resistance to malaria; dbSNP:rs334." evidence="19 30 116">
    <original>E</original>
    <variation>V</variation>
    <location>
        <position position="7"/>
    </location>
</feature>
<feature type="sequence variant" id="VAR_002866" description="In G-San Jose; mildly unstable; dbSNP:rs34387455.">
    <original>E</original>
    <variation>G</variation>
    <location>
        <position position="8"/>
    </location>
</feature>
<feature type="sequence variant" id="VAR_002867" description="In G-Siriraj; dbSNP:rs34948328.">
    <original>E</original>
    <variation>K</variation>
    <location>
        <position position="8"/>
    </location>
</feature>
<feature type="sequence variant" id="VAR_002868" description="In N-Timone; dbSNP:rs33926764." evidence="50">
    <original>K</original>
    <variation>E</variation>
    <location>
        <position position="9"/>
    </location>
</feature>
<feature type="sequence variant" id="VAR_002869" description="In J-Luhe; dbSNP:rs33926764.">
    <original>K</original>
    <variation>Q</variation>
    <location>
        <position position="9"/>
    </location>
</feature>
<feature type="sequence variant" id="VAR_002870" description="In Rio Grande; dbSNP:rs33932981." evidence="86">
    <original>K</original>
    <variation>T</variation>
    <location>
        <position position="9"/>
    </location>
</feature>
<feature type="sequence variant" id="VAR_002871" description="In Porto Alegre; O(2) affinity up; dbSNP:rs33918131.">
    <original>S</original>
    <variation>C</variation>
    <location>
        <position position="10"/>
    </location>
</feature>
<feature type="sequence variant" id="VAR_002872" description="In Ankara; dbSNP:rs33947457." evidence="70">
    <original>A</original>
    <variation>D</variation>
    <location>
        <position position="11"/>
    </location>
</feature>
<feature type="sequence variant" id="VAR_025393" description="In Iraq-Halabja; dbSNP:rs33947457." evidence="3">
    <original>A</original>
    <variation>V</variation>
    <location>
        <position position="11"/>
    </location>
</feature>
<feature type="sequence variant" id="VAR_002873" description="In Windsor; O(2) affinity up; unstable; dbSNP:rs35140348." evidence="47">
    <original>V</original>
    <variation>D</variation>
    <location>
        <position position="12"/>
    </location>
</feature>
<feature type="sequence variant" id="VAR_002874" description="In Hamilton; dbSNP:rs33974228.">
    <original>V</original>
    <variation>I</variation>
    <location>
        <position position="12"/>
    </location>
</feature>
<feature type="sequence variant" id="VAR_002875" description="In J-Lens; dbSNP:rs35203747.">
    <original>A</original>
    <variation>D</variation>
    <location>
        <position position="14"/>
    </location>
</feature>
<feature type="sequence variant" id="VAR_002876" description="In Saki; unstable; dbSNP:rs33935445.">
    <original>L</original>
    <variation>P</variation>
    <location>
        <position position="15"/>
    </location>
</feature>
<feature type="sequence variant" id="VAR_002877" description="In Soegn; unstable; dbSNP:rs33935445.">
    <original>L</original>
    <variation>R</variation>
    <location>
        <position position="15"/>
    </location>
</feature>
<feature type="sequence variant" id="VAR_002878" description="In Randwick; unstable; dbSNP:rs33946157." evidence="52">
    <original>W</original>
    <variation>G</variation>
    <location>
        <position position="16"/>
    </location>
</feature>
<feature type="sequence variant" id="VAR_002879" description="In Belfast; O(2) affinity up; unstable; dbSNP:rs33946157.">
    <original>W</original>
    <variation>R</variation>
    <location>
        <position position="16"/>
    </location>
</feature>
<feature type="sequence variant" id="VAR_002880" description="In J-Baltimore/J-Trinidad/J-Ireland/J-Georgia/N-New Haven; dbSNP:rs33962676.">
    <original>G</original>
    <variation>D</variation>
    <location>
        <position position="17"/>
    </location>
</feature>
<feature type="sequence variant" id="VAR_002881" description="In D-Bushman; dbSNP:rs63751285.">
    <original>G</original>
    <variation>R</variation>
    <location>
        <position position="17"/>
    </location>
</feature>
<feature type="sequence variant" id="VAR_002882" description="In Nagasaki; dbSNP:rs33986703.">
    <original>K</original>
    <variation>E</variation>
    <location>
        <position position="18"/>
    </location>
</feature>
<feature type="sequence variant" id="VAR_002883" description="In J-Amiens; dbSNP:rs36006214.">
    <original>K</original>
    <variation>N</variation>
    <location>
        <position position="18"/>
    </location>
</feature>
<feature type="sequence variant" id="VAR_002884" description="In Nikosia; dbSNP:rs33986703.">
    <original>K</original>
    <variation>Q</variation>
    <location>
        <position position="18"/>
    </location>
</feature>
<feature type="sequence variant" id="VAR_002885" description="In Baden; slightly unstable; dbSNP:rs35802118.">
    <original>V</original>
    <variation>M</variation>
    <location>
        <position position="19"/>
    </location>
</feature>
<feature type="sequence variant" id="VAR_002886" description="In Alamo; dbSNP:rs34866629.">
    <original>N</original>
    <variation>D</variation>
    <location>
        <position position="20"/>
    </location>
</feature>
<feature type="sequence variant" id="VAR_002887" description="In D-Ouleh RABAH; dbSNP:rs63750840.">
    <original>N</original>
    <variation>K</variation>
    <location>
        <position position="20"/>
    </location>
</feature>
<feature type="sequence variant" id="VAR_002888" description="In Malay; dbSNP:rs33972047.">
    <original>N</original>
    <variation>S</variation>
    <location>
        <position position="20"/>
    </location>
</feature>
<feature type="sequence variant" id="VAR_002889" description="In Olympia; O(2) affinity up; dbSNP:rs35890959.">
    <original>V</original>
    <variation>M</variation>
    <location>
        <position position="21"/>
    </location>
</feature>
<feature type="sequence variant" id="VAR_002890" description="In Connecticut; O(2) affinity down; dbSNP:rs33977536.">
    <original>D</original>
    <variation>G</variation>
    <location>
        <position position="22"/>
    </location>
</feature>
<feature type="sequence variant" id="VAR_002892" description="In Karlskoga; dbSNP:rs33950093." evidence="99">
    <original>D</original>
    <variation>H</variation>
    <location>
        <position position="22"/>
    </location>
</feature>
<feature type="sequence variant" id="VAR_002891" description="In Cocody; dbSNP:rs33950093.">
    <original>D</original>
    <variation>N</variation>
    <location>
        <position position="22"/>
    </location>
</feature>
<feature type="sequence variant" id="VAR_002893" description="In Yusa; dbSNP:rs33950093.">
    <original>D</original>
    <variation>Y</variation>
    <location>
        <position position="22"/>
    </location>
</feature>
<feature type="sequence variant" id="VAR_002894" description="In G-Coushatta/G-Saskatoon/G-Taegu/Hsin Chu; dbSNP:rs33936254.">
    <original>E</original>
    <variation>A</variation>
    <location>
        <position position="23"/>
    </location>
</feature>
<feature type="sequence variant" id="VAR_002895" description="In G-Taipei; dbSNP:rs33936254.">
    <original>E</original>
    <variation>G</variation>
    <location>
        <position position="23"/>
    </location>
</feature>
<feature type="sequence variant" id="VAR_002896" description="In E-Saskatoon; dbSNP:rs33959855.">
    <original>E</original>
    <variation>K</variation>
    <location>
        <position position="23"/>
    </location>
</feature>
<feature type="sequence variant" id="VAR_002897" description="In D-Iran; dbSNP:rs33959855.">
    <original>E</original>
    <variation>Q</variation>
    <location>
        <position position="23"/>
    </location>
</feature>
<feature type="sequence variant" id="VAR_002898" description="In D-Granada; dbSNP:rs33936254.">
    <original>E</original>
    <variation>V</variation>
    <location>
        <position position="23"/>
    </location>
</feature>
<feature type="sequence variant" id="VAR_002899" description="In Strasbourg; O(2) affinity up; dbSNP:rs33945546.">
    <original>V</original>
    <variation>D</variation>
    <location>
        <position position="24"/>
    </location>
</feature>
<feature type="sequence variant" id="VAR_002900" description="In Palmerston North; O(2) affinity up; unstable; dbSNP:rs33929459." evidence="87">
    <original>V</original>
    <variation>F</variation>
    <location>
        <position position="24"/>
    </location>
</feature>
<feature type="sequence variant" id="VAR_002901" description="In Miyashiro; O(2) affinity up; unstable; dbSNP:rs33945546." evidence="91">
    <original>V</original>
    <variation>G</variation>
    <location>
        <position position="24"/>
    </location>
</feature>
<feature type="sequence variant" id="VAR_069169" description="In Freiburg; dbSNP:rs34160180." evidence="72">
    <location>
        <position position="24"/>
    </location>
</feature>
<feature type="sequence variant" id="VAR_002902" description="In Moscva; O(2) affinity down; unstable; dbSNP:rs33968721.">
    <original>G</original>
    <variation>D</variation>
    <location>
        <position position="25"/>
    </location>
</feature>
<feature type="sequence variant" id="VAR_002903" description="In Riverdale-Bronx; O(2) affinity up; unstable; dbSNP:rs33972975.">
    <original>G</original>
    <variation>R</variation>
    <location>
        <position position="25"/>
    </location>
</feature>
<feature type="sequence variant" id="VAR_002904" description="In Savannah; unstable; dbSNP:rs33968721.">
    <original>G</original>
    <variation>V</variation>
    <location>
        <position position="25"/>
    </location>
</feature>
<feature type="sequence variant" id="VAR_002905" description="In J-Auckland; unstable; O(2) affinity down; dbSNP:rs35474880." evidence="58">
    <original>G</original>
    <variation>D</variation>
    <location>
        <position position="26"/>
    </location>
</feature>
<feature type="sequence variant" id="VAR_002906" description="In G-Taiwan Ami; dbSNP:rs34404985.">
    <original>G</original>
    <variation>R</variation>
    <location>
        <position position="26"/>
    </location>
</feature>
<feature type="sequence variant" id="VAR_002907" description="In B-THAL; Hb E; confers resistance to severe malaria; dbSNP:rs33950507." evidence="12 13 27 74">
    <original>E</original>
    <variation>K</variation>
    <location>
        <position position="27"/>
    </location>
</feature>
<feature type="sequence variant" id="VAR_002908" description="In Henri Mondor; slightly unstable; dbSNP:rs33915112.">
    <original>E</original>
    <variation>V</variation>
    <location>
        <position position="27"/>
    </location>
</feature>
<feature type="sequence variant" id="VAR_002909" description="In Volga/Drenthe; unstable; dbSNP:rs33954632.">
    <original>A</original>
    <variation>D</variation>
    <location>
        <position position="28"/>
    </location>
</feature>
<feature type="sequence variant" id="VAR_002910" description="In Knossos; dbSNP:rs35424040." evidence="88">
    <original>A</original>
    <variation>S</variation>
    <location>
        <position position="28"/>
    </location>
</feature>
<feature type="sequence variant" id="VAR_002911" description="In Grange-blanche; O(2) affinity up; dbSNP:rs33954632." evidence="59">
    <original>A</original>
    <variation>V</variation>
    <location>
        <position position="28"/>
    </location>
</feature>
<feature type="sequence variant" id="VAR_002912" description="In Genova/Hyogo; unstable; dbSNP:rs33916412.">
    <original>L</original>
    <variation>P</variation>
    <location>
        <position position="29"/>
    </location>
</feature>
<feature type="sequence variant" id="VAR_035236" description="In St Louis; dbSNP:rs33916412." evidence="35">
    <original>L</original>
    <variation>Q</variation>
    <location>
        <position position="29"/>
    </location>
</feature>
<feature type="sequence variant" id="VAR_002913" description="In Lufkin; unstable; dbSNP:rs35685286.">
    <original>G</original>
    <variation>D</variation>
    <location>
        <position position="30"/>
    </location>
</feature>
<feature type="sequence variant" id="VAR_002914" description="In Tacoma; unstable; dbSNP:rs1135071.">
    <original>R</original>
    <variation>S</variation>
    <location>
        <position position="31"/>
    </location>
</feature>
<feature type="sequence variant" id="VAR_002915" description="In Yokohama; unstable; dbSNP:rs33920173." evidence="92">
    <original>L</original>
    <variation>P</variation>
    <location>
        <position position="32"/>
    </location>
</feature>
<feature type="sequence variant" id="VAR_002916" description="In Castilla; unstable; dbSNP:rs33948578.">
    <original>L</original>
    <variation>R</variation>
    <location>
        <position position="33"/>
    </location>
</feature>
<feature type="sequence variant" id="VAR_002917" description="In Muscat; slightly unstable; dbSNP:rs34314652." evidence="24">
    <original>L</original>
    <variation>V</variation>
    <location>
        <position position="33"/>
    </location>
</feature>
<feature type="sequence variant" id="VAR_025394" description="In Santander; unstable; dbSNP:rs1135101." evidence="16">
    <original>V</original>
    <variation>D</variation>
    <location>
        <position position="35"/>
    </location>
</feature>
<feature type="sequence variant" id="VAR_002918" description="In Pitie-Salpetriere; O(2) affinity up; dbSNP:rs1141387.">
    <original>V</original>
    <variation>F</variation>
    <location>
        <position position="35"/>
    </location>
</feature>
<feature type="sequence variant" id="VAR_025395" description="In Nantes; increased oxygen affinity; dbSNP:rs1141387." evidence="17">
    <original>V</original>
    <variation>L</variation>
    <location>
        <position position="35"/>
    </location>
</feature>
<feature type="sequence variant" id="VAR_002919" description="In Philly; O(2) affinity up; unstable; dbSNP:rs35857380.">
    <original>Y</original>
    <variation>F</variation>
    <location>
        <position position="36"/>
    </location>
</feature>
<feature type="sequence variant" id="VAR_002920" description="In Sunnybrook; dbSNP:rs33993004.">
    <original>P</original>
    <variation>R</variation>
    <location>
        <position position="37"/>
    </location>
</feature>
<feature type="sequence variant" id="VAR_002921" description="In North Chicago; O(2) affinity up; dbSNP:rs33948615." evidence="65">
    <original>P</original>
    <variation>S</variation>
    <location>
        <position position="37"/>
    </location>
</feature>
<feature type="sequence variant" id="VAR_002922" description="In Linkoping/Finlandia; O(2) affinity up; dbSNP:rs33948615." evidence="60">
    <original>P</original>
    <variation>T</variation>
    <location>
        <position position="37"/>
    </location>
</feature>
<feature type="sequence variant" id="VAR_002923" description="In Howick; dbSNP:rs33994623." evidence="96">
    <original>W</original>
    <variation>G</variation>
    <location>
        <position position="38"/>
    </location>
</feature>
<feature type="sequence variant" id="VAR_002925" description="In Rothschild; O(2) affinity down; dbSNP:rs33994623." evidence="28">
    <original>W</original>
    <variation>R</variation>
    <location>
        <position position="38"/>
    </location>
</feature>
<feature type="sequence variant" id="VAR_002924" description="In Hirose; O(2) affinity up; dbSNP:rs33991059.">
    <original>W</original>
    <variation>S</variation>
    <location>
        <position position="38"/>
    </location>
</feature>
<feature type="sequence variant" id="VAR_002926" description="In Hinwil; O(2) affinity up; dbSNP:rs34703513." evidence="109">
    <original>T</original>
    <variation>N</variation>
    <location>
        <position position="39"/>
    </location>
</feature>
<feature type="sequence variant" id="VAR_002927" description="In Vaasa; unstable; dbSNP:rs11549407.">
    <original>Q</original>
    <variation>E</variation>
    <location>
        <position position="40"/>
    </location>
</feature>
<feature type="sequence variant" id="VAR_002928" description="In Alabama; dbSNP:rs11549407." evidence="5">
    <original>Q</original>
    <variation>K</variation>
    <location>
        <position position="40"/>
    </location>
</feature>
<feature type="sequence variant" id="VAR_002929" description="In Tianshui; dbSNP:rs35973315.">
    <original>Q</original>
    <variation>R</variation>
    <location>
        <position position="40"/>
    </location>
</feature>
<feature type="sequence variant" id="VAR_002930" description="In Mequon; dbSNP:rs33926796.">
    <original>F</original>
    <variation>Y</variation>
    <location>
        <position position="42"/>
    </location>
</feature>
<feature type="sequence variant" id="VAR_035237" description="In Bruxelles." evidence="48">
    <location>
        <position position="42"/>
    </location>
</feature>
<feature type="sequence variant" id="VAR_002931" description="In Louisville; unstable; dbSNP:rs33924146." evidence="120">
    <original>F</original>
    <variation>L</variation>
    <location>
        <position position="43"/>
    </location>
</feature>
<feature type="sequence variant" id="VAR_035239" description="In Hammersmith; dbSNP:rs34378160." evidence="75">
    <original>F</original>
    <variation>S</variation>
    <location>
        <position position="43"/>
    </location>
</feature>
<feature type="sequence variant" id="VAR_035238" description="In Bruxelles." evidence="48">
    <location>
        <position position="43"/>
    </location>
</feature>
<feature type="sequence variant" id="VAR_002932" description="In Hoshida/Chaya; dbSNP:rs33922842.">
    <original>E</original>
    <variation>Q</variation>
    <location>
        <position position="44"/>
    </location>
</feature>
<feature type="sequence variant" id="VAR_002933" description="In Mississippi; dbSNP:rs34868397.">
    <original>S</original>
    <variation>C</variation>
    <location>
        <position position="45"/>
    </location>
</feature>
<feature type="sequence variant" id="VAR_002934" description="In Cheverly; unstable; dbSNP:rs33978338.">
    <original>F</original>
    <variation>S</variation>
    <location>
        <position position="46"/>
    </location>
</feature>
<feature type="sequence variant" id="VAR_002935" description="In K-Ibadan; dbSNP:rs35303218.">
    <original>G</original>
    <variation>E</variation>
    <location>
        <position position="47"/>
    </location>
</feature>
<feature type="sequence variant" id="VAR_002936" description="In Avicenna; dbSNP:rs33980484.">
    <original>D</original>
    <variation>A</variation>
    <location>
        <position position="48"/>
    </location>
</feature>
<feature type="sequence variant" id="VAR_002937" description="In Gavello; dbSNP:rs33980484.">
    <original>D</original>
    <variation>G</variation>
    <location>
        <position position="48"/>
    </location>
</feature>
<feature type="sequence variant" id="VAR_002938" description="In Maputo; dbSNP:rs33932070." evidence="83">
    <original>D</original>
    <variation>Y</variation>
    <location>
        <position position="48"/>
    </location>
</feature>
<feature type="sequence variant" id="VAR_002939" description="In Bab-Saadoum; slightly unstable; dbSNP:rs33952850.">
    <original>L</original>
    <variation>P</variation>
    <location>
        <position position="49"/>
    </location>
</feature>
<feature type="sequence variant" id="VAR_002940" description="In Las Palmas; slightly unstable; dbSNP:rs33960931." evidence="53 117">
    <original>S</original>
    <variation>F</variation>
    <location>
        <position position="50"/>
    </location>
</feature>
<feature type="sequence variant" id="VAR_002941" description="In Edmonton.">
    <original>T</original>
    <variation>K</variation>
    <location>
        <position position="51"/>
    </location>
</feature>
<feature type="sequence variant" id="VAR_002942" description="In Willamette; O(2) affinity up; unstable; dbSNP:rs33969727.">
    <original>P</original>
    <variation>R</variation>
    <location>
        <position position="52"/>
    </location>
</feature>
<feature type="sequence variant" id="VAR_002943" description="In Ocho Rios; dbSNP:rs33919924.">
    <original>D</original>
    <variation>A</variation>
    <location>
        <position position="53"/>
    </location>
</feature>
<feature type="sequence variant" id="VAR_002944" description="In Summer Hill; dbSNP:rs33961886.">
    <original>D</original>
    <variation>H</variation>
    <location>
        <position position="53"/>
    </location>
</feature>
<feature type="sequence variant" id="VAR_002945" description="In Jacksonville; O(2) affinity up; unstable; dbSNP:rs34037627." evidence="42">
    <original>V</original>
    <variation>D</variation>
    <location>
        <position position="55"/>
    </location>
</feature>
<feature type="sequence variant" id="VAR_002946" description="In Matera; unstable; dbSNP:rs35094013." evidence="43">
    <original>M</original>
    <variation>K</variation>
    <location>
        <position position="56"/>
    </location>
</feature>
<feature type="sequence variant" id="VAR_002947" description="In Hamadan; dbSNP:rs33935983.">
    <original>G</original>
    <variation>R</variation>
    <location>
        <position position="57"/>
    </location>
</feature>
<feature type="sequence variant" id="VAR_002948" description="In G-ferrara; unstable; dbSNP:rs35278874.">
    <original>N</original>
    <variation>K</variation>
    <location>
        <position position="58"/>
    </location>
</feature>
<feature type="sequence variant" id="VAR_002949" description="In Dhofar/Yukuhashi; dbSNP:rs33991472.">
    <original>P</original>
    <variation>R</variation>
    <location>
        <position position="59"/>
    </location>
</feature>
<feature type="sequence variant" id="VAR_002950" description="In I-High Wycombe; dbSNP:rs33969400.">
    <original>K</original>
    <variation>E</variation>
    <location>
        <position position="60"/>
    </location>
</feature>
<feature type="sequence variant" id="VAR_002951" description="In Collingwood; unstable; dbSNP:rs33931779.">
    <original>V</original>
    <variation>A</variation>
    <location>
        <position position="61"/>
    </location>
</feature>
<feature type="sequence variant" id="VAR_002952" description="In N-Seatlle; dbSNP:rs33995148.">
    <original>K</original>
    <variation>E</variation>
    <location>
        <position position="62"/>
    </location>
</feature>
<feature type="sequence variant" id="VAR_002953" description="In Bologna; O(2) affinity down; dbSNP:rs34974709.">
    <original>K</original>
    <variation>M</variation>
    <location>
        <position position="62"/>
    </location>
</feature>
<feature type="sequence variant" id="VAR_002954" description="In Hikari; dbSNP:rs34446260.">
    <original>K</original>
    <variation>N</variation>
    <location>
        <position position="62"/>
    </location>
</feature>
<feature type="sequence variant" id="VAR_002955" description="In J-Europa; dbSNP:rs34151786." evidence="110">
    <original>A</original>
    <variation>D</variation>
    <location>
        <position position="63"/>
    </location>
</feature>
<feature type="sequence variant" id="VAR_002956" description="In Duarte; unstable; dbSNP:rs34933455.">
    <original>A</original>
    <variation>P</variation>
    <location>
        <position position="63"/>
    </location>
</feature>
<feature type="sequence variant" id="VAR_002957" description="In M-Saskatoon; O(2) affinity up; dbSNP:rs33922873." evidence="21">
    <original>H</original>
    <variation>Y</variation>
    <location>
        <position position="64"/>
    </location>
</feature>
<feature type="sequence variant" id="VAR_002958" description="In J-Antakya; dbSNP:rs33932548." evidence="61">
    <original>K</original>
    <variation>M</variation>
    <location>
        <position position="66"/>
    </location>
</feature>
<feature type="sequence variant" id="VAR_002959" description="In J-Sicilia; dbSNP:rs35747961." evidence="71">
    <original>K</original>
    <variation>N</variation>
    <location>
        <position position="66"/>
    </location>
</feature>
<feature type="sequence variant" id="VAR_002960" description="In J-Cairo; dbSNP:rs35353749." evidence="14">
    <original>K</original>
    <variation>Q</variation>
    <location>
        <position position="66"/>
    </location>
</feature>
<feature type="sequence variant" id="VAR_079528" description="In Vigo; O(2) affinity down." evidence="51">
    <original>K</original>
    <variation>I</variation>
    <location>
        <position position="67"/>
    </location>
</feature>
<feature type="sequence variant" id="VAR_002961" description="In Chico; O(2) affinity down; dbSNP:rs35939489.">
    <original>K</original>
    <variation>T</variation>
    <location>
        <position position="67"/>
    </location>
</feature>
<feature type="sequence variant" id="VAR_002962" description="In Sydney; unstable; dbSNP:rs33918343.">
    <original>V</original>
    <variation>A</variation>
    <location>
        <position position="68"/>
    </location>
</feature>
<feature type="sequence variant" id="VAR_035240" description="In Bristol." evidence="107">
    <original>V</original>
    <variation>D</variation>
    <location>
        <position position="68"/>
    </location>
</feature>
<feature type="sequence variant" id="VAR_040060" description="In non-spherocytic haemolytic anemia; Manukau; dbSNP:rs33918343." evidence="98">
    <original>V</original>
    <variation>G</variation>
    <location>
        <position position="68"/>
    </location>
</feature>
<feature type="sequence variant" id="VAR_002963" description="In Alesha; unstable; dbSNP:rs36008922." evidence="100">
    <original>V</original>
    <variation>M</variation>
    <location>
        <position position="68"/>
    </location>
</feature>
<feature type="sequence variant" id="VAR_002964" description="In Brisbane; O(2) affinity up; dbSNP:rs33972593." evidence="73">
    <original>L</original>
    <variation>H</variation>
    <location>
        <position position="69"/>
    </location>
</feature>
<feature type="sequence variant" id="VAR_002965" description="In Mizuho; unstable; dbSNP:rs33972593." evidence="112">
    <original>L</original>
    <variation>P</variation>
    <location>
        <position position="69"/>
    </location>
</feature>
<feature type="sequence variant" id="VAR_002966" description="In Rambam; dbSNP:rs34718174." evidence="113">
    <original>G</original>
    <variation>D</variation>
    <location>
        <position position="70"/>
    </location>
</feature>
<feature type="sequence variant" id="VAR_002967" description="In Kenitra; dbSNP:rs33947415.">
    <original>G</original>
    <variation>R</variation>
    <location>
        <position position="70"/>
    </location>
</feature>
<feature type="sequence variant" id="VAR_002968" description="In City of Hope; dbSNP:rs33947415." evidence="77">
    <original>G</original>
    <variation>S</variation>
    <location>
        <position position="70"/>
    </location>
</feature>
<feature type="sequence variant" id="VAR_002969" description="In Seattle; O(2) affinity down; unstable; dbSNP:rs33946401.">
    <original>A</original>
    <variation>D</variation>
    <location>
        <position position="71"/>
    </location>
</feature>
<feature type="sequence variant" id="VAR_002970" description="In Christchurch; unstable; dbSNP:rs34362537.">
    <original>F</original>
    <variation>S</variation>
    <location>
        <position position="72"/>
    </location>
</feature>
<feature type="sequence variant" id="VAR_002971" description="In Tilburg; O(2) affinity down; dbSNP:rs33967755.">
    <original>D</original>
    <variation>G</variation>
    <location>
        <position position="74"/>
    </location>
</feature>
<feature type="sequence variant" id="VAR_002972" description="In Mobile; O(2) affinity down; dbSNP:rs33967755.">
    <original>D</original>
    <variation>V</variation>
    <location>
        <position position="74"/>
    </location>
</feature>
<feature type="sequence variant" id="VAR_002973" description="In Vancouver; O(2) affinity down; dbSNP:rs33945705.">
    <original>D</original>
    <variation>Y</variation>
    <location>
        <position position="74"/>
    </location>
</feature>
<feature type="sequence variant" id="VAR_002974" description="In Aalborg; unstable; dbSNP:rs33916541.">
    <original>G</original>
    <variation>R</variation>
    <location>
        <position position="75"/>
    </location>
</feature>
<feature type="sequence variant" id="VAR_002975" description="In Bushwick; unstable; dbSNP:rs33976006.">
    <original>G</original>
    <variation>V</variation>
    <location>
        <position position="75"/>
    </location>
</feature>
<feature type="sequence variant" id="VAR_002976" description="In Atlanta; unstable; dbSNP:rs33950542." evidence="117">
    <original>L</original>
    <variation>P</variation>
    <location>
        <position position="76"/>
    </location>
</feature>
<feature type="sequence variant" id="VAR_002977" description="In Pasadena; O(2) affinity up; unstable; dbSNP:rs33950542.">
    <original>L</original>
    <variation>R</variation>
    <location>
        <position position="76"/>
    </location>
</feature>
<feature type="sequence variant" id="VAR_002978" description="In J-Chicago; dbSNP:rs33985847.">
    <original>A</original>
    <variation>D</variation>
    <location>
        <position position="77"/>
    </location>
</feature>
<feature type="sequence variant" id="VAR_002979" description="In J-Iran; dbSNP:rs33991294.">
    <original>H</original>
    <variation>D</variation>
    <location>
        <position position="78"/>
    </location>
</feature>
<feature type="sequence variant" id="VAR_002980" description="In Costa Rica; dbSNP:rs33952543." evidence="106">
    <original>H</original>
    <variation>R</variation>
    <location>
        <position position="78"/>
    </location>
</feature>
<feature type="sequence variant" id="VAR_002981" description="In Fukuyama; dbSNP:rs33991294.">
    <original>H</original>
    <variation>Y</variation>
    <location>
        <position position="78"/>
    </location>
</feature>
<feature type="sequence variant" id="VAR_002982" description="In Quin-hai; dbSNP:rs34870172." evidence="81">
    <original>L</original>
    <variation>R</variation>
    <location>
        <position position="79"/>
    </location>
</feature>
<feature type="sequence variant" id="VAR_002983" description="In Tampa; dbSNP:rs33990858.">
    <original>D</original>
    <variation>Y</variation>
    <location>
        <position position="80"/>
    </location>
</feature>
<feature type="sequence variant" id="VAR_002984" description="In G-Szuhu/Gifu; dbSNP:rs35890380.">
    <original>N</original>
    <variation>K</variation>
    <location>
        <position position="81"/>
    </location>
</feature>
<feature type="sequence variant" id="VAR_012663" description="In La Roche-sur-Yon; unstable and O(2) affinity up; dbSNP:rs33936967." evidence="26">
    <original>L</original>
    <variation>H</variation>
    <location>
        <position position="82"/>
    </location>
</feature>
<feature type="sequence variant" id="VAR_002985" description="In Baylor; unstable; dbSNP:rs33936967.">
    <original>L</original>
    <variation>R</variation>
    <location>
        <position position="82"/>
    </location>
</feature>
<feature type="sequence variant" id="VAR_049273" description="In dbSNP:rs11549406.">
    <original>L</original>
    <variation>V</variation>
    <location>
        <position position="82"/>
    </location>
</feature>
<feature type="sequence variant" id="VAR_002986" description="In Helsinki; O(2) affinity up; dbSNP:rs33987903." evidence="97">
    <original>K</original>
    <variation>M</variation>
    <location>
        <position position="83"/>
    </location>
</feature>
<feature type="sequence variant" id="VAR_012664" description="In Providence; dbSNP:rs33991993.">
    <original>K</original>
    <variation>N</variation>
    <location>
        <position position="83"/>
    </location>
</feature>
<feature type="sequence variant" id="VAR_025396" description="In Pyrgos; dbSNP:rs1803195." evidence="12">
    <original>G</original>
    <variation>D</variation>
    <location>
        <position position="84"/>
    </location>
</feature>
<feature type="sequence variant" id="VAR_002987" description="In Muskegon; dbSNP:rs33930385.">
    <original>G</original>
    <variation>R</variation>
    <location>
        <position position="84"/>
    </location>
</feature>
<feature type="sequence variant" id="VAR_002988" description="In Kofu; dbSNP:rs35914488." evidence="62">
    <original>T</original>
    <variation>I</variation>
    <location>
        <position position="85"/>
    </location>
</feature>
<feature type="sequence variant" id="VAR_002989" description="In Olomouc; O(2) affinity up; dbSNP:rs35819837." evidence="57">
    <original>A</original>
    <variation>D</variation>
    <location>
        <position position="87"/>
    </location>
</feature>
<feature type="sequence variant" id="VAR_002990" description="In Quebec-Chori; dbSNP:rs33993568.">
    <original>T</original>
    <variation>I</variation>
    <location>
        <position position="88"/>
    </location>
</feature>
<feature type="sequence variant" id="VAR_002991" description="In D-Ibadan; dbSNP:rs33993568.">
    <original>T</original>
    <variation>K</variation>
    <location>
        <position position="88"/>
    </location>
</feature>
<feature type="sequence variant" id="VAR_002992" description="In Valletta; dbSNP:rs35553496.">
    <original>T</original>
    <variation>P</variation>
    <location>
        <position position="88"/>
    </location>
</feature>
<feature type="sequence variant" id="VAR_002993" description="In Santa Ana; unstable; dbSNP:rs33940204.">
    <original>L</original>
    <variation>P</variation>
    <location>
        <position position="89"/>
    </location>
</feature>
<feature type="sequence variant" id="VAR_002994" description="In Boras; unstable; dbSNP:rs33940204.">
    <original>L</original>
    <variation>R</variation>
    <location>
        <position position="89"/>
    </location>
</feature>
<feature type="sequence variant" id="VAR_002995" description="In Creteil; O(2) affinity up; dbSNP:rs33917628.">
    <original>S</original>
    <variation>N</variation>
    <location>
        <position position="90"/>
    </location>
</feature>
<feature type="sequence variant" id="VAR_002996" description="In Vanderbilt; O(2) affinity up; dbSNP:rs35351128.">
    <original>S</original>
    <variation>R</variation>
    <location>
        <position position="90"/>
    </location>
</feature>
<feature type="sequence variant" id="VAR_002997" description="In Pierre-Benite; O(2) affinity up; dbSNP:rs35002698." evidence="54">
    <original>E</original>
    <variation>D</variation>
    <location>
        <position position="91"/>
    </location>
</feature>
<feature type="sequence variant" id="VAR_002998" description="In Agenogi; O(2) affinity down; dbSNP:rs33913712.">
    <original>E</original>
    <variation>K</variation>
    <location>
        <position position="91"/>
    </location>
</feature>
<feature type="sequence variant" id="VAR_002999" description="In Sabine; unstable; dbSNP:rs33917785.">
    <original>L</original>
    <variation>P</variation>
    <location>
        <position position="92"/>
    </location>
</feature>
<feature type="sequence variant" id="VAR_003000" description="In Caribbean; O(2) affinity down; unstable; dbSNP:rs33917785." evidence="115">
    <original>L</original>
    <variation>R</variation>
    <location>
        <position position="92"/>
    </location>
</feature>
<feature type="sequence variant" id="VAR_003001" description="In J-Altgelds Gardens; unstable; dbSNP:rs33924775." evidence="89">
    <original>H</original>
    <variation>D</variation>
    <location>
        <position position="93"/>
    </location>
</feature>
<feature type="sequence variant" id="VAR_003002" description="In Isehara; unstable; dbSNP:rs33924775." evidence="33">
    <original>H</original>
    <variation>N</variation>
    <location>
        <position position="93"/>
    </location>
</feature>
<feature type="sequence variant" id="VAR_003003" description="In Newcastle and Duino; associated in cis with S-104 in Duino; unstable; dbSNP:rs33974325." evidence="23">
    <original>H</original>
    <variation>P</variation>
    <location>
        <position position="93"/>
    </location>
</feature>
<feature type="sequence variant" id="VAR_003004" description="In Istambul; unstable; dbSNP:rs34083951." evidence="69">
    <original>H</original>
    <variation>Q</variation>
    <location>
        <position position="93"/>
    </location>
</feature>
<feature type="sequence variant" id="VAR_003005" description="In Okazaki; O(2) affinity up; unstable; dbSNP:rs33972927.">
    <original>C</original>
    <variation>R</variation>
    <location>
        <position position="94"/>
    </location>
</feature>
<feature type="sequence variant" id="VAR_003006" description="In Chandigarh; dbSNP:rs34579351.">
    <original>D</original>
    <variation>G</variation>
    <location>
        <position position="95"/>
    </location>
</feature>
<feature type="sequence variant" id="VAR_003007" description="In Barcelona; O(2) affinity up; dbSNP:rs33959340.">
    <original>D</original>
    <variation>H</variation>
    <location>
        <position position="95"/>
    </location>
</feature>
<feature type="sequence variant" id="VAR_003008" description="In Bunbury; O(2) affinity up; dbSNP:rs33959340." evidence="82">
    <original>D</original>
    <variation>N</variation>
    <location>
        <position position="95"/>
    </location>
</feature>
<feature type="sequence variant" id="VAR_003009" description="In J-Cordoba; dbSNP:rs35204496.">
    <original>K</original>
    <variation>M</variation>
    <location>
        <position position="96"/>
    </location>
</feature>
<feature type="sequence variant" id="VAR_003010" description="In Detroit; dbSNP:rs36038739.">
    <original>K</original>
    <variation>N</variation>
    <location>
        <position position="96"/>
    </location>
</feature>
<feature type="sequence variant" id="VAR_003011" description="In Debrousse; unstable; O(2) affinity up; dbSNP:rs36081208." evidence="104">
    <original>L</original>
    <variation>P</variation>
    <location>
        <position position="97"/>
    </location>
</feature>
<feature type="sequence variant" id="VAR_003012" description="In Regina; O(2) affinity up; dbSNP:rs34665886.">
    <original>L</original>
    <variation>V</variation>
    <location>
        <position position="97"/>
    </location>
</feature>
<feature type="sequence variant" id="VAR_003013" description="In Wood; O(2) affinity up; dbSNP:rs33951978.">
    <original>H</original>
    <variation>L</variation>
    <location>
        <position position="98"/>
    </location>
</feature>
<feature type="sequence variant" id="VAR_003014" description="In Nagoya; O(2) affinity up; unstable; dbSNP:rs33951978." evidence="64">
    <original>H</original>
    <variation>P</variation>
    <location>
        <position position="98"/>
    </location>
</feature>
<feature type="sequence variant" id="VAR_003015" description="In Malmoe; O(2) affinity up; dbSNP:rs34515413.">
    <original>H</original>
    <variation>Q</variation>
    <location>
        <position position="98"/>
    </location>
</feature>
<feature type="sequence variant" id="VAR_003016" description="In Moriguchi; dbSNP:rs33950993.">
    <original>H</original>
    <variation>Y</variation>
    <location>
        <position position="98"/>
    </location>
</feature>
<feature type="sequence variant" id="VAR_003017" description="In Nottingham; unstable; dbSNP:rs33985510.">
    <original>V</original>
    <variation>G</variation>
    <location>
        <position position="99"/>
    </location>
</feature>
<feature type="sequence variant" id="VAR_003018" description="In Coimbra; O(2) affinity up; dbSNP:rs34013622." evidence="34">
    <original>D</original>
    <variation>E</variation>
    <location>
        <position position="100"/>
    </location>
</feature>
<feature type="sequence variant" id="VAR_003019" description="In Brigham; O(2) affinity up; dbSNP:rs33965000.">
    <original>P</original>
    <variation>L</variation>
    <location>
        <position position="101"/>
    </location>
</feature>
<feature type="sequence variant" id="VAR_003020" description="In New Mexico; dbSNP:rs33965000.">
    <original>P</original>
    <variation>R</variation>
    <location>
        <position position="101"/>
    </location>
</feature>
<feature type="sequence variant" id="VAR_003021" description="In Potomac; O(2) affinity up; dbSNP:rs35209591.">
    <original>E</original>
    <variation>D</variation>
    <location>
        <position position="102"/>
    </location>
</feature>
<feature type="sequence variant" id="VAR_003022" description="In Alberta; O(2) affinity up; dbSNP:rs33937393.">
    <original>E</original>
    <variation>G</variation>
    <location>
        <position position="102"/>
    </location>
</feature>
<feature type="sequence variant" id="VAR_003023" description="In British Columbia; O(2) affinity up; dbSNP:rs33966487.">
    <original>E</original>
    <variation>K</variation>
    <location>
        <position position="102"/>
    </location>
</feature>
<feature type="sequence variant" id="VAR_003024" description="In Rush; unstable; dbSNP:rs33966487." evidence="66">
    <original>E</original>
    <variation>Q</variation>
    <location>
        <position position="102"/>
    </location>
</feature>
<feature type="sequence variant" id="VAR_003025" description="In Beth Israel; O(2) affinity down; unstable; dbSNP:rs33948057.">
    <original>N</original>
    <variation>S</variation>
    <location>
        <position position="103"/>
    </location>
</feature>
<feature type="sequence variant" id="VAR_003026" description="In St Mande; O(2) affinity down; dbSNP:rs33927739." evidence="90">
    <original>N</original>
    <variation>Y</variation>
    <location>
        <position position="103"/>
    </location>
</feature>
<feature type="sequence variant" id="VAR_003027" description="In Heathrow; O(2) affinity up; dbSNP:rs35067717.">
    <original>F</original>
    <variation>L</variation>
    <location>
        <position position="104"/>
    </location>
</feature>
<feature type="sequence variant" id="VAR_003028" description="In Camperdown and Duino; associated in cis with P-92 in Duino; unstable; dbSNP:rs33914944." evidence="8 23">
    <original>R</original>
    <variation>S</variation>
    <location>
        <position position="105"/>
    </location>
</feature>
<feature type="sequence variant" id="VAR_003029" description="In Sherwood Forest; dbSNP:rs33911434.">
    <original>R</original>
    <variation>T</variation>
    <location>
        <position position="105"/>
    </location>
</feature>
<feature type="sequence variant" id="VAR_003030" description="In Burke; O(2) affinity down; unstable; dbSNP:rs35017910." evidence="102">
    <original>G</original>
    <variation>R</variation>
    <location>
        <position position="108"/>
    </location>
</feature>
<feature type="sequence variant" id="VAR_003031" description="In Presbyterian; O(2) affinity down; unstable; dbSNP:rs34933751." evidence="85">
    <original>N</original>
    <variation>K</variation>
    <location>
        <position position="109"/>
    </location>
</feature>
<feature type="sequence variant" id="VAR_003032" description="In San Diego; O(2) affinity up; dbSNP:rs33969677.">
    <original>V</original>
    <variation>M</variation>
    <location>
        <position position="110"/>
    </location>
</feature>
<feature type="sequence variant" id="VAR_003033" description="In Showa-Yakushiji; dbSNP:rs35256489.">
    <original>L</original>
    <variation>P</variation>
    <location>
        <position position="111"/>
    </location>
</feature>
<feature type="sequence variant" id="VAR_003034" description="In Stanmore; O(2) affinity down; unstable; dbSNP:rs35871407." evidence="37">
    <original>V</original>
    <variation>A</variation>
    <location>
        <position position="112"/>
    </location>
</feature>
<feature type="sequence variant" id="VAR_025397" description="In Canterbury; dbSNP:rs33932908." evidence="10">
    <original>C</original>
    <variation>F</variation>
    <location>
        <position position="113"/>
    </location>
</feature>
<feature type="sequence variant" id="VAR_003035" description="In Indianapolis; dbSNP:rs35849199." evidence="67 119">
    <original>C</original>
    <variation>R</variation>
    <location>
        <position position="113"/>
    </location>
</feature>
<feature type="sequence variant" id="VAR_003036" description="In Yahata; dbSNP:rs33932908." evidence="36">
    <original>C</original>
    <variation>Y</variation>
    <location>
        <position position="113"/>
    </location>
</feature>
<feature type="sequence variant" id="VAR_010144" description="In Zengcheng; dbSNP:rs33917394." evidence="41">
    <original>L</original>
    <variation>M</variation>
    <location>
        <position position="115"/>
    </location>
</feature>
<feature type="sequence variant" id="VAR_010145" description="In B-THAL; Durham-N.C./Brescia; dbSNP:rs36015961." evidence="18 95 121">
    <original>L</original>
    <variation>P</variation>
    <location>
        <position position="115"/>
    </location>
</feature>
<feature type="sequence variant" id="VAR_003037" description="In B-THAL; Hradec Kralove; unstable; dbSNP:rs35485099." evidence="94">
    <original>A</original>
    <variation>D</variation>
    <location>
        <position position="116"/>
    </location>
</feature>
<feature type="sequence variant" id="VAR_003038" description="In Madrid; unstable; dbSNP:rs34945623.">
    <original>A</original>
    <variation>P</variation>
    <location>
        <position position="116"/>
    </location>
</feature>
<feature type="sequence variant" id="VAR_025398" description="In Vexin; increased oxygen affinity; dbSNP:rs33978082." evidence="17">
    <original>H</original>
    <variation>L</variation>
    <location>
        <position position="117"/>
    </location>
</feature>
<feature type="sequence variant" id="VAR_003039" description="In Hafnia; dbSNP:rs35209776.">
    <original>H</original>
    <variation>Q</variation>
    <location>
        <position position="117"/>
    </location>
</feature>
<feature type="sequence variant" id="VAR_003040" description="In Saitama; unstable; dbSNP:rs33935673." evidence="84">
    <original>H</original>
    <variation>P</variation>
    <location>
        <position position="118"/>
    </location>
</feature>
<feature type="sequence variant" id="VAR_003041" description="In P-Galveston; dbSNP:rs33935673.">
    <original>H</original>
    <variation>R</variation>
    <location>
        <position position="118"/>
    </location>
</feature>
<feature type="sequence variant" id="VAR_025399" description="In Tsukumi; dbSNP:rs33935527." evidence="6">
    <original>H</original>
    <variation>Y</variation>
    <location>
        <position position="118"/>
    </location>
</feature>
<feature type="sequence variant" id="VAR_003042" description="In Iowa; dbSNP:rs33947020.">
    <original>G</original>
    <variation>A</variation>
    <location>
        <position position="120"/>
    </location>
</feature>
<feature type="sequence variant" id="VAR_003043" description="In Hijiyama; dbSNP:rs33924134.">
    <original>K</original>
    <variation>E</variation>
    <location>
        <position position="121"/>
    </location>
</feature>
<feature type="sequence variant" id="VAR_003044" description="In Jianghua; dbSNP:rs34303736." evidence="80">
    <original>K</original>
    <variation>I</variation>
    <location>
        <position position="121"/>
    </location>
</feature>
<feature type="sequence variant" id="VAR_003045" description="In Takamatsu; dbSNP:rs33924134.">
    <original>K</original>
    <variation>Q</variation>
    <location>
        <position position="121"/>
    </location>
</feature>
<feature type="sequence variant" id="VAR_003046" description="In D-Neath; dbSNP:rs33987957." evidence="101">
    <original>E</original>
    <variation>A</variation>
    <location>
        <position position="122"/>
    </location>
</feature>
<feature type="sequence variant" id="VAR_003047" description="In St Francis; dbSNP:rs33987957.">
    <original>E</original>
    <variation>G</variation>
    <location>
        <position position="122"/>
    </location>
</feature>
<feature type="sequence variant" id="VAR_003049" description="In O-Arab; dbSNP:rs33946267.">
    <original>E</original>
    <variation>K</variation>
    <location>
        <position position="122"/>
    </location>
</feature>
<feature type="sequence variant" id="VAR_003048" description="In D-Los Angeles/D-Punjab/D-Portugal/D-Chicago/D-Oak Ridge; dbSNP:rs33946267.">
    <original>E</original>
    <variation>Q</variation>
    <location>
        <position position="122"/>
    </location>
</feature>
<feature type="sequence variant" id="VAR_003050" description="In D-Camperdown/Beograd; dbSNP:rs33987957.">
    <original>E</original>
    <variation>V</variation>
    <location>
        <position position="122"/>
    </location>
</feature>
<feature type="sequence variant" id="VAR_003051" description="In Villejuif; asymptomatic variant; dbSNP:rs33935383." evidence="7">
    <original>T</original>
    <variation>I</variation>
    <location>
        <position position="124"/>
    </location>
</feature>
<feature type="sequence variant" id="VAR_003053" description="In Ty Gard; O(2) affinity up; dbSNP:rs33983276." evidence="122">
    <original>P</original>
    <variation>Q</variation>
    <location>
        <position position="125"/>
    </location>
</feature>
<feature type="sequence variant" id="VAR_003052" description="In Khartoum; unstable; dbSNP:rs33983276.">
    <original>P</original>
    <variation>R</variation>
    <location>
        <position position="125"/>
    </location>
</feature>
<feature type="sequence variant" id="VAR_003054" description="In Tunis; dbSNP:rs35461710.">
    <original>P</original>
    <variation>S</variation>
    <location>
        <position position="125"/>
    </location>
</feature>
<feature type="sequence variant" id="VAR_003055" description="In Beirut; dbSNP:rs33925391.">
    <original>V</original>
    <variation>A</variation>
    <location>
        <position position="127"/>
    </location>
</feature>
<feature type="sequence variant" id="VAR_003057" description="In Hofu; unstable; dbSNP:rs33925391.">
    <original>V</original>
    <variation>E</variation>
    <location>
        <position position="127"/>
    </location>
</feature>
<feature type="sequence variant" id="VAR_003056" description="In B-THAL; Dhonburi/Neapolis; unstable; dbSNP:rs33925391." evidence="44">
    <original>V</original>
    <variation>G</variation>
    <location>
        <position position="127"/>
    </location>
</feature>
<feature type="sequence variant" id="VAR_003058" description="In Complutense; dbSNP:rs33971634." evidence="61">
    <original>Q</original>
    <variation>E</variation>
    <location>
        <position position="128"/>
    </location>
</feature>
<feature type="sequence variant" id="VAR_003059" description="In Brest; unstable; dbSNP:rs33971634." evidence="55">
    <original>Q</original>
    <variation>K</variation>
    <location>
        <position position="128"/>
    </location>
</feature>
<feature type="sequence variant" id="VAR_003060" description="In J-Guantanamo; unstable; dbSNP:rs33957286.">
    <original>A</original>
    <variation>D</variation>
    <location>
        <position position="129"/>
    </location>
</feature>
<feature type="sequence variant" id="VAR_003061" description="In Crete; O(2) affinity up; unstable; dbSNP:rs35939430.">
    <original>A</original>
    <variation>P</variation>
    <location>
        <position position="130"/>
    </location>
</feature>
<feature type="sequence variant" id="VAR_003062" description="In La Desirade; O(2) affinity down; unstable; dbSNP:rs111645889." evidence="56">
    <original>A</original>
    <variation>V</variation>
    <location>
        <position position="130"/>
    </location>
</feature>
<feature type="sequence variant" id="VAR_003063" description="In Wien; unstable; dbSNP:rs35834416.">
    <original>Y</original>
    <variation>D</variation>
    <location>
        <position position="131"/>
    </location>
</feature>
<feature type="sequence variant" id="VAR_003064" description="In Nevers; dbSNP:rs33937535.">
    <original>Y</original>
    <variation>S</variation>
    <location>
        <position position="131"/>
    </location>
</feature>
<feature type="sequence variant" id="VAR_003065" description="In Camden/Tokuchi/Motown; dbSNP:rs33910209.">
    <original>Q</original>
    <variation>E</variation>
    <location>
        <position position="132"/>
    </location>
</feature>
<feature type="sequence variant" id="VAR_003066" description="In Shelby/Leslie/Deaconess; unstable; dbSNP:rs33910209." evidence="78">
    <original>Q</original>
    <variation>K</variation>
    <location>
        <position position="132"/>
    </location>
</feature>
<feature type="sequence variant" id="VAR_003067" description="In Shangai; unstable; dbSNP:rs33950778.">
    <original>Q</original>
    <variation>P</variation>
    <location>
        <position position="132"/>
    </location>
</feature>
<feature type="sequence variant" id="VAR_003068" description="In Sarrebourg; unstable; dbSNP:rs33950778.">
    <original>Q</original>
    <variation>R</variation>
    <location>
        <position position="132"/>
    </location>
</feature>
<feature type="sequence variant" id="VAR_003069" description="In Yamagata; O(2) affinity down; dbSNP:rs33946775.">
    <original>K</original>
    <variation>N</variation>
    <location>
        <position position="133"/>
    </location>
</feature>
<feature type="sequence variant" id="VAR_003070" description="In K-Woolwich; dbSNP:rs33953406.">
    <original>K</original>
    <variation>Q</variation>
    <location>
        <position position="133"/>
    </location>
</feature>
<feature type="sequence variant" id="VAR_003071" description="In Extredemura; dbSNP:rs34095019.">
    <original>V</original>
    <variation>L</variation>
    <location>
        <position position="134"/>
    </location>
</feature>
<feature type="sequence variant" id="VAR_003072" description="In North Shore-Caracas; unstable; dbSNP:rs33966761." evidence="111">
    <original>V</original>
    <variation>E</variation>
    <location>
        <position position="135"/>
    </location>
</feature>
<feature type="sequence variant" id="VAR_003073" description="In Beckman; originally reported as E-136; O(2) affinity down; unstable; dbSNP:rs35669628." evidence="39 49 118">
    <original>A</original>
    <variation>D</variation>
    <location>
        <position position="136"/>
    </location>
</feature>
<feature type="sequence variant" id="VAR_003074" description="In Altdorf; O(2) affinity up; unstable; dbSNP:rs35492035.">
    <original>A</original>
    <variation>P</variation>
    <location>
        <position position="136"/>
    </location>
</feature>
<feature type="sequence variant" id="VAR_003075" description="In Hope; O(2) affinity down; unstable; dbSNP:rs33949486.">
    <original>G</original>
    <variation>D</variation>
    <location>
        <position position="137"/>
    </location>
</feature>
<feature type="sequence variant" id="VAR_003076" description="In Brockton; unstable; dbSNP:rs33919821.">
    <original>A</original>
    <variation>P</variation>
    <location>
        <position position="139"/>
    </location>
</feature>
<feature type="sequence variant" id="VAR_003077" description="In Geelong; unstable; dbSNP:rs33910475." evidence="38">
    <original>N</original>
    <variation>D</variation>
    <location>
        <position position="140"/>
    </location>
</feature>
<feature type="sequence variant" id="VAR_003078" description="In Hinsdale; O(2) affinity down; dbSNP:rs34240441." evidence="46">
    <original>N</original>
    <variation>K</variation>
    <location>
        <position position="140"/>
    </location>
</feature>
<feature type="sequence variant" id="VAR_025335" description="In S-Wake; associated in cis with V-6." evidence="116">
    <original>N</original>
    <variation>S</variation>
    <location>
        <position position="140"/>
    </location>
</feature>
<feature type="sequence variant" id="VAR_003079" description="In Aurora; O(2) affinity up; dbSNP:rs33910475." evidence="108">
    <original>N</original>
    <variation>Y</variation>
    <location>
        <position position="140"/>
    </location>
</feature>
<feature type="sequence variant" id="VAR_003080" description="In Himeji; unstable; O(2) affinity down; dbSNP:rs33927093." evidence="63">
    <original>A</original>
    <variation>D</variation>
    <location>
        <position position="141"/>
    </location>
</feature>
<feature type="sequence variant" id="VAR_003081" description="In St Jacques; O(2) affinity up; dbSNP:rs34980264.">
    <original>A</original>
    <variation>T</variation>
    <location>
        <position position="141"/>
    </location>
</feature>
<feature type="sequence variant" id="VAR_003082" description="In Puttelange; polycythemia; O(2) affinity up; dbSNP:rs33927093." evidence="103">
    <original>A</original>
    <variation>V</variation>
    <location>
        <position position="141"/>
    </location>
</feature>
<feature type="sequence variant" id="VAR_003083" description="In Olmsted; unstable; dbSNP:rs35854892.">
    <original>L</original>
    <variation>R</variation>
    <location>
        <position position="142"/>
    </location>
</feature>
<feature type="sequence variant" id="VAR_003084" description="In Ohio; O(2) affinity up; dbSNP:rs33921821.">
    <original>A</original>
    <variation>D</variation>
    <location>
        <position position="143"/>
    </location>
</feature>
<feature type="sequence variant" id="VAR_003085" description="In Rancho Mirage; dbSNP:rs33929415.">
    <original>H</original>
    <variation>D</variation>
    <location>
        <position position="144"/>
    </location>
</feature>
<feature type="sequence variant" id="VAR_003087" description="In Syracuse; O(2) affinity up; dbSNP:rs33918338.">
    <original>H</original>
    <variation>P</variation>
    <location>
        <position position="144"/>
    </location>
</feature>
<feature type="sequence variant" id="VAR_003086" description="In Little Rock; O(2) affinity up; dbSNP:rs36020563.">
    <original>H</original>
    <variation>Q</variation>
    <location>
        <position position="144"/>
    </location>
</feature>
<feature type="sequence variant" id="VAR_003088" description="In Abruzzo; O(2) affinity up; dbSNP:rs33918338.">
    <original>H</original>
    <variation>R</variation>
    <location>
        <position position="144"/>
    </location>
</feature>
<feature type="sequence variant" id="VAR_003089" description="In Mito; O(2) affinity up; dbSNP:rs33964352.">
    <original>K</original>
    <variation>E</variation>
    <location>
        <position position="145"/>
    </location>
</feature>
<feature type="sequence variant" id="VAR_003090" description="In Rainier; O(2) affinity up; dbSNP:rs35117167.">
    <original>Y</original>
    <variation>C</variation>
    <location>
        <position position="146"/>
    </location>
</feature>
<feature type="sequence variant" id="VAR_003091" description="In Bethesda; O(2) affinity up; dbSNP:rs33949869.">
    <original>Y</original>
    <variation>H</variation>
    <location>
        <position position="146"/>
    </location>
</feature>
<feature type="sequence variant" id="VAR_003092" description="In Hiroshima; O(2) affinity up; dbSNP:rs33961444.">
    <original>H</original>
    <variation>D</variation>
    <location>
        <position position="147"/>
    </location>
</feature>
<feature type="sequence variant" id="VAR_003093" description="In Cowtown; O(2) affinity up; dbSNP:rs33954264.">
    <original>H</original>
    <variation>L</variation>
    <location>
        <position position="147"/>
    </location>
</feature>
<feature type="sequence variant" id="VAR_003094" description="In York; O(2) affinity up; dbSNP:rs33954264.">
    <original>H</original>
    <variation>P</variation>
    <location>
        <position position="147"/>
    </location>
</feature>
<feature type="sequence variant" id="VAR_003095" description="In Kodaira; O(2) affinity up; dbSNP:rs33985739." evidence="32">
    <original>H</original>
    <variation>Q</variation>
    <location>
        <position position="147"/>
    </location>
</feature>
<feature type="sequence conflict" description="In Ref. 15; ACD39349." evidence="124" ref="15">
    <location>
        <position position="26"/>
    </location>
</feature>
<feature type="sequence conflict" description="In Ref. 13; AAR96398." evidence="124" ref="13">
    <original>F</original>
    <variation>L</variation>
    <location>
        <position position="42"/>
    </location>
</feature>
<feature type="helix" evidence="128">
    <location>
        <begin position="6"/>
        <end position="17"/>
    </location>
</feature>
<feature type="helix" evidence="128">
    <location>
        <begin position="21"/>
        <end position="35"/>
    </location>
</feature>
<feature type="helix" evidence="128">
    <location>
        <begin position="37"/>
        <end position="42"/>
    </location>
</feature>
<feature type="helix" evidence="127">
    <location>
        <begin position="44"/>
        <end position="46"/>
    </location>
</feature>
<feature type="helix" evidence="128">
    <location>
        <begin position="52"/>
        <end position="57"/>
    </location>
</feature>
<feature type="helix" evidence="128">
    <location>
        <begin position="59"/>
        <end position="75"/>
    </location>
</feature>
<feature type="turn" evidence="127">
    <location>
        <begin position="78"/>
        <end position="80"/>
    </location>
</feature>
<feature type="helix" evidence="128">
    <location>
        <begin position="82"/>
        <end position="95"/>
    </location>
</feature>
<feature type="helix" evidence="128">
    <location>
        <begin position="102"/>
        <end position="119"/>
    </location>
</feature>
<feature type="helix" evidence="128">
    <location>
        <begin position="120"/>
        <end position="122"/>
    </location>
</feature>
<feature type="helix" evidence="128">
    <location>
        <begin position="125"/>
        <end position="143"/>
    </location>
</feature>
<feature type="helix" evidence="127">
    <location>
        <begin position="144"/>
        <end position="146"/>
    </location>
</feature>
<gene>
    <name type="primary">HBB</name>
</gene>
<reference key="1">
    <citation type="journal article" date="1976" name="Prog. Nucleic Acid Res. Mol. Biol.">
        <title>Nucleotide sequence analysis of coding and noncoding regions of human beta-globin mRNA.</title>
        <authorList>
            <person name="Marotta C."/>
            <person name="Forget B."/>
            <person name="Cohen-Solal M."/>
            <person name="Weissman S.M."/>
        </authorList>
    </citation>
    <scope>NUCLEOTIDE SEQUENCE [GENOMIC DNA]</scope>
</reference>
<reference key="2">
    <citation type="journal article" date="1980" name="Cell">
        <title>The nucleotide sequence of the human beta-globin gene.</title>
        <authorList>
            <person name="Lawn R.M."/>
            <person name="Efstratiadis A."/>
            <person name="O'Connell C."/>
            <person name="Maniatis T."/>
        </authorList>
    </citation>
    <scope>NUCLEOTIDE SEQUENCE [GENOMIC DNA]</scope>
</reference>
<reference key="3">
    <citation type="journal article" date="2005" name="Am. J. Hum. Genet.">
        <title>The beta-globin recombinational hotspot reduces the effects of strong selection around HbC, a recently arisen mutation providing resistance to malaria.</title>
        <authorList>
            <person name="Wood E.T."/>
            <person name="Stover D.A."/>
            <person name="Slatkin M."/>
            <person name="Nachman M.W."/>
            <person name="Hammer M.F."/>
        </authorList>
    </citation>
    <scope>NUCLEOTIDE SEQUENCE [GENOMIC DNA]</scope>
    <scope>VARIANT LYS-7</scope>
</reference>
<reference key="4">
    <citation type="submission" date="1997-06" db="EMBL/GenBank/DDBJ databases">
        <title>DNA sequence of the human beta-globin gene isolated from a healthy Chinese.</title>
        <authorList>
            <person name="Lu L."/>
            <person name="Hu Z.H."/>
            <person name="Du C.S."/>
            <person name="Fu Y.S."/>
        </authorList>
    </citation>
    <scope>NUCLEOTIDE SEQUENCE [GENOMIC DNA]</scope>
</reference>
<reference key="5">
    <citation type="submission" date="1998-08" db="EMBL/GenBank/DDBJ databases">
        <title>Unexpected patterns of globin mutations in thalassemia patients from north of Portugal.</title>
        <authorList>
            <person name="Cabeda J.M."/>
            <person name="Correia C."/>
            <person name="Estevinho A."/>
            <person name="Cardoso C."/>
            <person name="Amorim M.L."/>
            <person name="Cleto E."/>
            <person name="Vale L."/>
            <person name="Coimbra E."/>
            <person name="Pinho L."/>
            <person name="Justica B."/>
        </authorList>
    </citation>
    <scope>NUCLEOTIDE SEQUENCE [GENOMIC DNA]</scope>
    <scope>VARIANT ARG-113</scope>
</reference>
<reference key="6">
    <citation type="submission" date="1999-01" db="EMBL/GenBank/DDBJ databases">
        <title>Rapid detection of electrophoretically silent, unstable human hemoglobin 'Louisville', (Beta; Phe 42 Leu/TTT to CTT) by cDNA sequencing of mRNA.</title>
        <authorList>
            <person name="Kutlar F."/>
            <person name="Harbin J."/>
            <person name="Brisco J."/>
            <person name="Kutlar A."/>
        </authorList>
    </citation>
    <scope>NUCLEOTIDE SEQUENCE [MRNA]</scope>
    <scope>VARIANT LOUISVILLE LEU-43</scope>
    <source>
        <tissue>Blood</tissue>
    </source>
</reference>
<reference key="7">
    <citation type="submission" date="1999-08" db="EMBL/GenBank/DDBJ databases">
        <title>Electrophoretically silent, very unstable, thalassemic mutation at codon 114 of beta globin (hemoglobin Durham-N.C.) detected by cDNA sequencing of mRNA, from a Russian women.</title>
        <authorList>
            <person name="Kutlar F."/>
            <person name="Abboud M."/>
            <person name="Leithner C."/>
            <person name="Holley L."/>
            <person name="Brisco J."/>
            <person name="Kutlar A."/>
        </authorList>
    </citation>
    <scope>NUCLEOTIDE SEQUENCE [MRNA]</scope>
    <scope>VARIANT DURHAM-N.C. PRO-115</scope>
    <source>
        <tissue>Blood</tissue>
    </source>
</reference>
<reference key="8">
    <citation type="submission" date="2001-02" db="EMBL/GenBank/DDBJ databases">
        <title>A rare beta chain variant 'Hemoglobin Ty Gard:Pro 124 Gln' found in a Caucasian female with erythrocytosis.</title>
        <authorList>
            <person name="Kutlar F."/>
            <person name="Holley L."/>
            <person name="Leithner C."/>
            <person name="Kutlar A."/>
        </authorList>
    </citation>
    <scope>NUCLEOTIDE SEQUENCE [MRNA]</scope>
    <scope>VARIANT TY GARD GLN-125</scope>
    <source>
        <tissue>Blood</tissue>
    </source>
</reference>
<reference key="9">
    <citation type="submission" date="2002-07" db="EMBL/GenBank/DDBJ databases">
        <title>Heterozygote C-&gt;A beta-thalassemia mutation at the intron-2/848 nucleotide of beta globin gene was detected on a Northern European (Caucasian) individual.</title>
        <authorList>
            <person name="Kutlar A."/>
            <person name="Vercellotti G.M."/>
            <person name="Glendenning M."/>
            <person name="Holley L."/>
            <person name="Elam D."/>
            <person name="Kutlar F."/>
        </authorList>
    </citation>
    <scope>NUCLEOTIDE SEQUENCE [GENOMIC DNA]</scope>
</reference>
<reference key="10">
    <citation type="submission" date="2002-07" db="EMBL/GenBank/DDBJ databases">
        <title>A new hemoglobin, beta chain variant 'Hb S-Wake' confirmed to be on the same chromosome with hemoglobin S mutation, detected in an African-American family.</title>
        <authorList>
            <person name="Kutlar F."/>
            <person name="Lallinger R.R."/>
            <person name="Holley L."/>
            <person name="Glendenning M."/>
            <person name="Kutlar A."/>
        </authorList>
    </citation>
    <scope>NUCLEOTIDE SEQUENCE [MRNA]</scope>
    <scope>VARIANT SKCA VAL-7</scope>
    <scope>VARIANT SER-140</scope>
    <source>
        <tissue>Blood</tissue>
    </source>
</reference>
<reference key="11">
    <citation type="submission" date="2002-10" db="EMBL/GenBank/DDBJ databases">
        <title>Coexistence of the hemoglobin O-Arab (Glu 121 Lys) and beta-thalassemia (intron-2; nucleotide 745 C-&gt;G) was detected in a Turkish patient.</title>
        <authorList>
            <person name="Kutlar F."/>
            <person name="Elam D."/>
            <person name="Glendenning M."/>
            <person name="Kutlar A."/>
            <person name="Dincol G."/>
        </authorList>
    </citation>
    <scope>NUCLEOTIDE SEQUENCE [GENOMIC DNA]</scope>
    <scope>VARIANT O-ARAB LYS-122</scope>
    <source>
        <tissue>Blood</tissue>
    </source>
</reference>
<reference key="12">
    <citation type="submission" date="2003-03" db="EMBL/GenBank/DDBJ databases">
        <title>Thalassaemic trait cause by C-T substitution at position -90 in proximal CACCC box of beta-globin gene in China family.</title>
        <authorList>
            <person name="Li W.J."/>
        </authorList>
    </citation>
    <scope>NUCLEOTIDE SEQUENCE [GENOMIC DNA]</scope>
</reference>
<reference key="13">
    <citation type="submission" date="2003-12" db="EMBL/GenBank/DDBJ databases">
        <title>The differently expressed genes in the lymphocyte of recovered SARS patients.</title>
        <authorList>
            <person name="Fan B."/>
            <person name="Xie L."/>
            <person name="Guan X."/>
        </authorList>
    </citation>
    <scope>NUCLEOTIDE SEQUENCE [MRNA]</scope>
    <scope>VARIANTS PHE-50 AND PRO-76</scope>
    <source>
        <tissue>Lymphocyte</tissue>
    </source>
</reference>
<reference key="14">
    <citation type="submission" date="2007-02" db="EMBL/GenBank/DDBJ databases">
        <title>Beta-thalassemia G-&gt;C mutation at the nucleotide 5 position of intron 1 of beta globin gene was detected in Asian-Indian female with two polymorphisms in cis.</title>
        <authorList>
            <person name="Mehta S."/>
            <person name="Li T."/>
            <person name="Davis D.H."/>
            <person name="Nechtman J."/>
            <person name="Kutlar F."/>
        </authorList>
    </citation>
    <scope>NUCLEOTIDE SEQUENCE [GENOMIC DNA]</scope>
    <source>
        <tissue>Blood</tissue>
    </source>
</reference>
<reference key="15">
    <citation type="submission" date="2008-05" db="EMBL/GenBank/DDBJ databases">
        <title>Hb Dothan: a novel beta chain variant due to (-GTG) deletion between the codons 25/26 of beta globin gene detected in a Caucasian male baby.</title>
        <authorList>
            <person name="Hilliard L.M."/>
            <person name="Patel N."/>
            <person name="Li T."/>
            <person name="Zhang H."/>
            <person name="Kutlar A."/>
            <person name="Kutlar F."/>
        </authorList>
    </citation>
    <scope>NUCLEOTIDE SEQUENCE [MRNA]</scope>
</reference>
<reference key="16">
    <citation type="journal article" date="2004" name="Nat. Genet.">
        <title>Complete sequencing and characterization of 21,243 full-length human cDNAs.</title>
        <authorList>
            <person name="Ota T."/>
            <person name="Suzuki Y."/>
            <person name="Nishikawa T."/>
            <person name="Otsuki T."/>
            <person name="Sugiyama T."/>
            <person name="Irie R."/>
            <person name="Wakamatsu A."/>
            <person name="Hayashi K."/>
            <person name="Sato H."/>
            <person name="Nagai K."/>
            <person name="Kimura K."/>
            <person name="Makita H."/>
            <person name="Sekine M."/>
            <person name="Obayashi M."/>
            <person name="Nishi T."/>
            <person name="Shibahara T."/>
            <person name="Tanaka T."/>
            <person name="Ishii S."/>
            <person name="Yamamoto J."/>
            <person name="Saito K."/>
            <person name="Kawai Y."/>
            <person name="Isono Y."/>
            <person name="Nakamura Y."/>
            <person name="Nagahari K."/>
            <person name="Murakami K."/>
            <person name="Yasuda T."/>
            <person name="Iwayanagi T."/>
            <person name="Wagatsuma M."/>
            <person name="Shiratori A."/>
            <person name="Sudo H."/>
            <person name="Hosoiri T."/>
            <person name="Kaku Y."/>
            <person name="Kodaira H."/>
            <person name="Kondo H."/>
            <person name="Sugawara M."/>
            <person name="Takahashi M."/>
            <person name="Kanda K."/>
            <person name="Yokoi T."/>
            <person name="Furuya T."/>
            <person name="Kikkawa E."/>
            <person name="Omura Y."/>
            <person name="Abe K."/>
            <person name="Kamihara K."/>
            <person name="Katsuta N."/>
            <person name="Sato K."/>
            <person name="Tanikawa M."/>
            <person name="Yamazaki M."/>
            <person name="Ninomiya K."/>
            <person name="Ishibashi T."/>
            <person name="Yamashita H."/>
            <person name="Murakawa K."/>
            <person name="Fujimori K."/>
            <person name="Tanai H."/>
            <person name="Kimata M."/>
            <person name="Watanabe M."/>
            <person name="Hiraoka S."/>
            <person name="Chiba Y."/>
            <person name="Ishida S."/>
            <person name="Ono Y."/>
            <person name="Takiguchi S."/>
            <person name="Watanabe S."/>
            <person name="Yosida M."/>
            <person name="Hotuta T."/>
            <person name="Kusano J."/>
            <person name="Kanehori K."/>
            <person name="Takahashi-Fujii A."/>
            <person name="Hara H."/>
            <person name="Tanase T.-O."/>
            <person name="Nomura Y."/>
            <person name="Togiya S."/>
            <person name="Komai F."/>
            <person name="Hara R."/>
            <person name="Takeuchi K."/>
            <person name="Arita M."/>
            <person name="Imose N."/>
            <person name="Musashino K."/>
            <person name="Yuuki H."/>
            <person name="Oshima A."/>
            <person name="Sasaki N."/>
            <person name="Aotsuka S."/>
            <person name="Yoshikawa Y."/>
            <person name="Matsunawa H."/>
            <person name="Ichihara T."/>
            <person name="Shiohata N."/>
            <person name="Sano S."/>
            <person name="Moriya S."/>
            <person name="Momiyama H."/>
            <person name="Satoh N."/>
            <person name="Takami S."/>
            <person name="Terashima Y."/>
            <person name="Suzuki O."/>
            <person name="Nakagawa S."/>
            <person name="Senoh A."/>
            <person name="Mizoguchi H."/>
            <person name="Goto Y."/>
            <person name="Shimizu F."/>
            <person name="Wakebe H."/>
            <person name="Hishigaki H."/>
            <person name="Watanabe T."/>
            <person name="Sugiyama A."/>
            <person name="Takemoto M."/>
            <person name="Kawakami B."/>
            <person name="Yamazaki M."/>
            <person name="Watanabe K."/>
            <person name="Kumagai A."/>
            <person name="Itakura S."/>
            <person name="Fukuzumi Y."/>
            <person name="Fujimori Y."/>
            <person name="Komiyama M."/>
            <person name="Tashiro H."/>
            <person name="Tanigami A."/>
            <person name="Fujiwara T."/>
            <person name="Ono T."/>
            <person name="Yamada K."/>
            <person name="Fujii Y."/>
            <person name="Ozaki K."/>
            <person name="Hirao M."/>
            <person name="Ohmori Y."/>
            <person name="Kawabata A."/>
            <person name="Hikiji T."/>
            <person name="Kobatake N."/>
            <person name="Inagaki H."/>
            <person name="Ikema Y."/>
            <person name="Okamoto S."/>
            <person name="Okitani R."/>
            <person name="Kawakami T."/>
            <person name="Noguchi S."/>
            <person name="Itoh T."/>
            <person name="Shigeta K."/>
            <person name="Senba T."/>
            <person name="Matsumura K."/>
            <person name="Nakajima Y."/>
            <person name="Mizuno T."/>
            <person name="Morinaga M."/>
            <person name="Sasaki M."/>
            <person name="Togashi T."/>
            <person name="Oyama M."/>
            <person name="Hata H."/>
            <person name="Watanabe M."/>
            <person name="Komatsu T."/>
            <person name="Mizushima-Sugano J."/>
            <person name="Satoh T."/>
            <person name="Shirai Y."/>
            <person name="Takahashi Y."/>
            <person name="Nakagawa K."/>
            <person name="Okumura K."/>
            <person name="Nagase T."/>
            <person name="Nomura N."/>
            <person name="Kikuchi H."/>
            <person name="Masuho Y."/>
            <person name="Yamashita R."/>
            <person name="Nakai K."/>
            <person name="Yada T."/>
            <person name="Nakamura Y."/>
            <person name="Ohara O."/>
            <person name="Isogai T."/>
            <person name="Sugano S."/>
        </authorList>
    </citation>
    <scope>NUCLEOTIDE SEQUENCE [LARGE SCALE MRNA]</scope>
    <source>
        <tissue>Spleen</tissue>
    </source>
</reference>
<reference key="17">
    <citation type="submission" date="2004-06" db="EMBL/GenBank/DDBJ databases">
        <title>Cloning of human full open reading frames in Gateway(TM) system entry vector (pDONR201).</title>
        <authorList>
            <person name="Halleck A."/>
            <person name="Ebert L."/>
            <person name="Mkoundinya M."/>
            <person name="Schick M."/>
            <person name="Eisenstein S."/>
            <person name="Neubert P."/>
            <person name="Kstrang K."/>
            <person name="Schatten R."/>
            <person name="Shen B."/>
            <person name="Henze S."/>
            <person name="Mar W."/>
            <person name="Korn B."/>
            <person name="Zuo D."/>
            <person name="Hu Y."/>
            <person name="LaBaer J."/>
        </authorList>
    </citation>
    <scope>NUCLEOTIDE SEQUENCE [LARGE SCALE MRNA]</scope>
</reference>
<reference key="18">
    <citation type="submission" date="2005-09" db="EMBL/GenBank/DDBJ databases">
        <authorList>
            <person name="Mural R.J."/>
            <person name="Istrail S."/>
            <person name="Sutton G.G."/>
            <person name="Florea L."/>
            <person name="Halpern A.L."/>
            <person name="Mobarry C.M."/>
            <person name="Lippert R."/>
            <person name="Walenz B."/>
            <person name="Shatkay H."/>
            <person name="Dew I."/>
            <person name="Miller J.R."/>
            <person name="Flanigan M.J."/>
            <person name="Edwards N.J."/>
            <person name="Bolanos R."/>
            <person name="Fasulo D."/>
            <person name="Halldorsson B.V."/>
            <person name="Hannenhalli S."/>
            <person name="Turner R."/>
            <person name="Yooseph S."/>
            <person name="Lu F."/>
            <person name="Nusskern D.R."/>
            <person name="Shue B.C."/>
            <person name="Zheng X.H."/>
            <person name="Zhong F."/>
            <person name="Delcher A.L."/>
            <person name="Huson D.H."/>
            <person name="Kravitz S.A."/>
            <person name="Mouchard L."/>
            <person name="Reinert K."/>
            <person name="Remington K.A."/>
            <person name="Clark A.G."/>
            <person name="Waterman M.S."/>
            <person name="Eichler E.E."/>
            <person name="Adams M.D."/>
            <person name="Hunkapiller M.W."/>
            <person name="Myers E.W."/>
            <person name="Venter J.C."/>
        </authorList>
    </citation>
    <scope>NUCLEOTIDE SEQUENCE [LARGE SCALE GENOMIC DNA]</scope>
</reference>
<reference key="19">
    <citation type="journal article" date="2004" name="Genome Res.">
        <title>The status, quality, and expansion of the NIH full-length cDNA project: the Mammalian Gene Collection (MGC).</title>
        <authorList>
            <consortium name="The MGC Project Team"/>
        </authorList>
    </citation>
    <scope>NUCLEOTIDE SEQUENCE [LARGE SCALE MRNA]</scope>
    <source>
        <tissue>Skeletal muscle</tissue>
    </source>
</reference>
<reference key="20">
    <citation type="journal article" date="1961" name="Hoppe-Seyler's Z. Physiol. Chem.">
        <title>The constitution of normal adult human haemoglobin.</title>
        <authorList>
            <person name="Braunitzer G."/>
            <person name="Gehring-Muller R."/>
            <person name="Hilschmann N."/>
            <person name="Hilse K."/>
            <person name="Hobom G."/>
            <person name="Rudloff V."/>
            <person name="Wittmann-Liebold B."/>
        </authorList>
    </citation>
    <scope>PROTEIN SEQUENCE OF 2-147</scope>
</reference>
<reference key="21">
    <citation type="journal article" date="1957" name="Nature">
        <title>Gene mutations in human haemoglobin: the chemical difference between normal and sickle cell haemoglobin.</title>
        <authorList>
            <person name="Ingram V.M."/>
        </authorList>
    </citation>
    <scope>PROTEIN SEQUENCE OF 3-9</scope>
    <scope>INVOLVEMENT IN SKCA</scope>
    <scope>VARIANT SKCA VAL-7</scope>
</reference>
<reference key="22">
    <citation type="journal article" date="2015" name="J. Proteome Res.">
        <title>Human basal tear peptidome characterization by CID, HCD, and ETD followed by in silico and in vitro analyses for antimicrobial peptide identification.</title>
        <authorList>
            <person name="Azkargorta M."/>
            <person name="Soria J."/>
            <person name="Ojeda C."/>
            <person name="Guzman F."/>
            <person name="Acera A."/>
            <person name="Iloro I."/>
            <person name="Suarez T."/>
            <person name="Elortza F."/>
        </authorList>
    </citation>
    <scope>PROTEIN SEQUENCE OF 19-31</scope>
    <scope>IDENTIFICATION BY MASS SPECTROMETRY</scope>
    <source>
        <tissue>Tear</tissue>
    </source>
</reference>
<reference key="23">
    <citation type="journal article" date="1992" name="Biochem. Biophys. Res. Commun.">
        <title>Isolation of a hemoglobin-derived opioid peptide from cerebrospinal fluid of patients with cerebrovascular bleedings.</title>
        <authorList>
            <person name="Glaemsta E.-L."/>
            <person name="Meyerson B."/>
            <person name="Silberring J."/>
            <person name="Terenius L."/>
            <person name="Nyberg F."/>
        </authorList>
    </citation>
    <scope>PROTEIN SEQUENCE OF 33-42</scope>
    <scope>MASS SPECTROMETRY</scope>
</reference>
<reference key="24">
    <citation type="submission" date="2007-06" db="UniProtKB">
        <authorList>
            <person name="Ianzer D."/>
            <person name="Konno K."/>
            <person name="Xavier C.H."/>
            <person name="Stoecklin R."/>
            <person name="Santos R.A.S."/>
            <person name="de Camargo A.C.M."/>
            <person name="Pimenta D.C."/>
        </authorList>
    </citation>
    <scope>PROTEIN SEQUENCE OF 33-42</scope>
</reference>
<reference key="25">
    <citation type="journal article" date="1993" name="Biochem. Mol. Biol. Int.">
        <title>Globin chain synthesis in hemolytic anemia reticulocytes. A case of hemoglobin Burke.</title>
        <authorList>
            <person name="Suzuki H."/>
            <person name="Wada C."/>
            <person name="Kamata K."/>
            <person name="Takahashi E."/>
            <person name="Sato N."/>
            <person name="Kunitomo T."/>
        </authorList>
    </citation>
    <scope>PROTEIN SEQUENCE OF 97-121</scope>
    <scope>NUCLEOTIDE SEQUENCE [MRNA] OF 106-113</scope>
    <scope>VARIANT BURKE ARG-108</scope>
</reference>
<reference key="26">
    <citation type="journal article" date="1985" name="Gene">
        <title>Cloning specific complete polyadenylylated 3'-terminal cDNA segments.</title>
        <authorList>
            <person name="Lang K.M."/>
            <person name="Spritz R.A."/>
        </authorList>
    </citation>
    <scope>NUCLEOTIDE SEQUENCE [MRNA] OF 122-147</scope>
</reference>
<reference key="27">
    <citation type="journal article" date="1972" name="Nature">
        <title>X-ray diffraction study of binding of 2,3-diphosphoglycerate to human deoxyhaemoglobin.</title>
        <authorList>
            <person name="Arnone A."/>
        </authorList>
    </citation>
    <scope>BISPHOSPHOGLYCERATE BINDING</scope>
</reference>
<reference key="28">
    <citation type="journal article" date="1974" name="Proc. Natl. Acad. Sci. U.S.A.">
        <title>Sites of acetylation of sickle cell hemoglobin by aspirin.</title>
        <authorList>
            <person name="Shamsuddin M."/>
            <person name="Mason R.G."/>
            <person name="Ritchey J.M."/>
            <person name="Honig G.R."/>
            <person name="Klotz I.M."/>
        </authorList>
    </citation>
    <scope>ACETYLATION AT LYS-60; LYS-83 AND LYS-145</scope>
</reference>
<reference key="29">
    <citation type="journal article" date="1978" name="Science">
        <title>The glycosylation of hemoglobin: relevance to diabetes mellitus.</title>
        <authorList>
            <person name="Bunn H.F."/>
            <person name="Gabbay K.H."/>
            <person name="Gallop P.M."/>
        </authorList>
    </citation>
    <scope>GLYCATION AT VAL-2</scope>
</reference>
<reference key="30">
    <citation type="journal article" date="1980" name="J. Biol. Chem.">
        <title>Sites of nonenzymatic glycosylation of human hemoglobin A.</title>
        <authorList>
            <person name="Shapiro R."/>
            <person name="McManus M.J."/>
            <person name="Zalut C."/>
            <person name="Bunn H.F."/>
        </authorList>
    </citation>
    <scope>GLYCATION AT LYS-9; LYS-18; LYS-67; LYS-121 AND LYS-145</scope>
    <scope>LACK OF GLYCATION AT LYS-60; LYS-83 AND LYS-96</scope>
</reference>
<reference key="31">
    <citation type="journal article" date="1981" name="J. Clin. Invest.">
        <title>Molecular analysis of the beta-thalassemia phenotype associated with inheritance of hemoglobin E (alpha 2 beta2(26)Glu leads to Lys).</title>
        <authorList>
            <person name="Benz E.J. Jr."/>
            <person name="Berman B.W."/>
            <person name="Tonkonow B.L."/>
            <person name="Coupal E."/>
            <person name="Coates T."/>
            <person name="Boxer L.A."/>
            <person name="Altman A."/>
            <person name="Adams J.G. III"/>
        </authorList>
    </citation>
    <scope>INVOLVEMENT IN B-THAL</scope>
    <scope>VARIANT B-THAL LYS-27</scope>
</reference>
<reference key="32">
    <citation type="journal article" date="1984" name="J. Biol. Chem.">
        <title>Human hemoglobin Portland II (zeta 2 beta 2). Isolation and characterization of Portland hemoglobin components and their constituent globin chains.</title>
        <authorList>
            <person name="Randhawa Z.I."/>
            <person name="Jones R.T."/>
            <person name="Lie-Injo L.E."/>
        </authorList>
    </citation>
    <scope>SUBUNIT</scope>
    <scope>TISSUE SPECIFICITY</scope>
    <scope>PARTIAL PROTEIN SEQUENCE</scope>
</reference>
<reference key="33">
    <citation type="journal article" date="1986" name="Biochem. J.">
        <title>Haemoglobin binding with haptoglobin. Localization of the haptoglobin-binding sites on the beta-chain of human haemoglobin by synthetic overlapping peptides encompassing the entire chain.</title>
        <authorList>
            <person name="Yoshioka N."/>
            <person name="Atassi M.Z."/>
        </authorList>
    </citation>
    <scope>INTERACTION WITH HAPTOGLOBIN</scope>
</reference>
<reference key="34">
    <citation type="journal article" date="1992" name="Br. J. Haematol.">
        <title>Beta 141 Leu is not deleted in the unstable haemoglobin Atlanta-Coventry but is replaced by a novel amino acid of mass 129 daltons.</title>
        <authorList>
            <person name="Brennan S.O."/>
            <person name="Shaw J."/>
            <person name="Allen J."/>
            <person name="George P.M."/>
        </authorList>
    </citation>
    <scope>MODIFICATION AT LEU-142</scope>
</reference>
<reference key="35">
    <citation type="journal article" date="1996" name="Nature">
        <title>S-nitrosohaemoglobin: a dynamic activity of blood involved in vascular control.</title>
        <authorList>
            <person name="Jia L."/>
            <person name="Bonaventura C."/>
            <person name="Bonaventura J."/>
            <person name="Stamler J.S."/>
        </authorList>
    </citation>
    <scope>S-NITROSYLATION AT CYS-94</scope>
</reference>
<reference key="36">
    <citation type="journal article" date="1998" name="Biochemistry">
        <title>Crystal structure of the S-nitroso form of liganded human hemoglobin.</title>
        <authorList>
            <person name="Chan N.L."/>
            <person name="Rogers P.H."/>
            <person name="Arnone A."/>
        </authorList>
    </citation>
    <scope>S-NITROSYLATION AT CYS-94</scope>
</reference>
<reference key="37">
    <citation type="journal article" date="1999" name="Proc. Natl. Acad. Sci. U.S.A.">
        <title>Ancient origins of nitric oxide signaling in biological systems.</title>
        <authorList>
            <person name="Durner J."/>
            <person name="Gow A.J."/>
            <person name="Stamler J.S."/>
            <person name="Glazebrook J."/>
        </authorList>
    </citation>
    <scope>NITRIC OXIDE-BINDING</scope>
</reference>
<reference key="38">
    <citation type="journal article" date="2000" name="Blood">
        <title>Hemoglobin C associated with protection from severe malaria in the Dogon of Mali, a West African population with a low prevalence of hemoglobin S.</title>
        <authorList>
            <person name="Agarwal A."/>
            <person name="Guindo A."/>
            <person name="Cissoko Y."/>
            <person name="Taylor J.G."/>
            <person name="Coulibaly D."/>
            <person name="Kone A."/>
            <person name="Kayentao K."/>
            <person name="Djimde A."/>
            <person name="Plowe C.V."/>
            <person name="Doumbo O."/>
            <person name="Wellems T.E."/>
            <person name="Diallo D."/>
        </authorList>
    </citation>
    <scope>POLYMORPHISM</scope>
    <scope>ASSOCIATION OF VARIANT LYS-7 WITH RESISTANCE TO MALARIA</scope>
</reference>
<reference key="39">
    <citation type="journal article" date="2001" name="Biochemistry">
        <title>The role of beta chains in the control of the hemoglobin oxygen binding function: chimeric human/mouse proteins, structure, and function.</title>
        <authorList>
            <person name="Kidd R.D."/>
            <person name="Russell J.E."/>
            <person name="Watmough N.J."/>
            <person name="Baker E.N."/>
            <person name="Brittain T."/>
        </authorList>
    </citation>
    <scope>SUBUNIT</scope>
</reference>
<reference key="40">
    <citation type="journal article" date="2002" name="Blood">
        <title>Hemoglobin E: a balanced polymorphism protective against high parasitemias and thus severe P falciparum malaria.</title>
        <authorList>
            <person name="Chotivanich K."/>
            <person name="Udomsangpetch R."/>
            <person name="Pattanapanyasat K."/>
            <person name="Chierakul W."/>
            <person name="Simpson J."/>
            <person name="Looareesuwan S."/>
            <person name="White N."/>
        </authorList>
    </citation>
    <scope>POLYMORPHISM</scope>
    <scope>ASSOCIATION OF VARIANT B-THAL LYS-27 WITH RESISTANCE TO MALARIA</scope>
</reference>
<reference key="41">
    <citation type="journal article" date="2002" name="Curr. Protein Pept. Sci.">
        <title>Spinorphin as an endogenous inhibitor of enkephalin-degrading enzymes: roles in pain and inflammation.</title>
        <authorList>
            <person name="Yamamoto Y."/>
            <person name="Ono H."/>
            <person name="Ueda A."/>
            <person name="Shimamura M."/>
            <person name="Nishimura K."/>
            <person name="Hazato T."/>
        </authorList>
    </citation>
    <scope>REVIEW ON FUNCTION OF SPINORPHIN</scope>
</reference>
<reference key="42">
    <citation type="journal article" date="2003" name="J. Infect. Dis.">
        <title>Hookworm aspartic protease, Na-APR-2, cleaves human hemoglobin and serum proteins in a host-specific fashion.</title>
        <authorList>
            <person name="Williamson A.L."/>
            <person name="Brindley P.J."/>
            <person name="Abbenante G."/>
            <person name="Datu B.J."/>
            <person name="Prociv P."/>
            <person name="Berry C."/>
            <person name="Girdwood K."/>
            <person name="Pritchard D.I."/>
            <person name="Fairlie D.P."/>
            <person name="Hotez P.J."/>
            <person name="Zhan B."/>
            <person name="Loukas A."/>
        </authorList>
    </citation>
    <scope>PROTEOLYTIC CLEAVAGE (MICROBIAL INFECTION) BY N.AMERICANUS APR-2</scope>
    <scope>PARTIAL PROTEIN SEQUENCE</scope>
</reference>
<reference key="43">
    <citation type="journal article" date="2005" name="Am. J. Hum. Genet.">
        <title>How malaria has affected the human genome and what human genetics can teach us about malaria.</title>
        <authorList>
            <person name="Kwiatkowski D.P."/>
        </authorList>
    </citation>
    <scope>POLYMORPHISM</scope>
    <scope>ASSOCIATION OF VARIANT SKCA VAL-7 WITH RESISTANCE TO MALARIA</scope>
</reference>
<reference key="44">
    <citation type="journal article" date="2006" name="Peptides">
        <title>Hemorphin and hemorphin-like peptides isolated from dog pancreas and sheep brain are able to potentiate bradykinin activity in vivo.</title>
        <authorList>
            <person name="Ianzer D."/>
            <person name="Konno K."/>
            <person name="Xavier C.H."/>
            <person name="Stoecklin R."/>
            <person name="Santos R.A.S."/>
            <person name="de Camargo A.C.M."/>
            <person name="Pimenta D.C."/>
        </authorList>
    </citation>
    <scope>SYNTHESIS OF 33-42</scope>
    <scope>FUNCTION</scope>
</reference>
<reference key="45">
    <citation type="journal article" date="2007" name="J. Med. Chem.">
        <title>Structure-activity relationship studies of spinorphin as a potent and selective human P2X(3) receptor antagonist.</title>
        <authorList>
            <person name="Jung K.Y."/>
            <person name="Moon H.D."/>
            <person name="Lee G.E."/>
            <person name="Lim H.H."/>
            <person name="Park C.S."/>
            <person name="Kim Y.C."/>
        </authorList>
    </citation>
    <scope>FUNCTION OF SPINORPHIN</scope>
</reference>
<reference key="46">
    <citation type="journal article" date="2011" name="BMC Syst. Biol.">
        <title>Initial characterization of the human central proteome.</title>
        <authorList>
            <person name="Burkard T.R."/>
            <person name="Planyavsky M."/>
            <person name="Kaupe I."/>
            <person name="Breitwieser F.P."/>
            <person name="Buerckstuemmer T."/>
            <person name="Bennett K.L."/>
            <person name="Superti-Furga G."/>
            <person name="Colinge J."/>
        </authorList>
    </citation>
    <scope>IDENTIFICATION BY MASS SPECTROMETRY [LARGE SCALE ANALYSIS]</scope>
</reference>
<reference key="47">
    <citation type="journal article" date="2014" name="J. Proteomics">
        <title>An enzyme assisted RP-RPLC approach for in-depth analysis of human liver phosphoproteome.</title>
        <authorList>
            <person name="Bian Y."/>
            <person name="Song C."/>
            <person name="Cheng K."/>
            <person name="Dong M."/>
            <person name="Wang F."/>
            <person name="Huang J."/>
            <person name="Sun D."/>
            <person name="Wang L."/>
            <person name="Ye M."/>
            <person name="Zou H."/>
        </authorList>
    </citation>
    <scope>PHOSPHORYLATION [LARGE SCALE ANALYSIS] AT SER-10; THR-13; SER-45; THR-51 AND THR-88</scope>
    <scope>IDENTIFICATION BY MASS SPECTROMETRY [LARGE SCALE ANALYSIS]</scope>
    <source>
        <tissue>Liver</tissue>
    </source>
</reference>
<reference key="48">
    <citation type="journal article" date="1973" name="Proc. Natl. Acad. Sci. U.S.A.">
        <title>Structure of sickled erythrocytes and of sickle-cell hemoglobin fibers.</title>
        <authorList>
            <person name="Finch J.T."/>
            <person name="Perutz M.F."/>
            <person name="Bertles J.F."/>
            <person name="Doebler J."/>
        </authorList>
    </citation>
    <scope>ELECTRON MICROSCOPY OF SICKLE-CELL HEMOGLOBIN FIBERS</scope>
</reference>
<reference key="49">
    <citation type="journal article" date="1975" name="J. Mol. Biol.">
        <title>Crystal structure of sickle-cell deoxyhemoglobin at 5 A resolution.</title>
        <authorList>
            <person name="Wishner B.C."/>
            <person name="Ward K.B."/>
            <person name="Lattman E.E."/>
            <person name="Love W.E."/>
        </authorList>
    </citation>
    <scope>X-RAY CRYSTALLOGRAPHY (5 ANGSTROMS) OF VARIANT SKCA VAL-7</scope>
</reference>
<reference key="50">
    <citation type="journal article" date="1975" name="J. Mol. Biol.">
        <title>Three-dimensional Fourier synthesis of human deoxyhaemoglobin at 2.5-A resolution: refinement of the atomic model.</title>
        <authorList>
            <person name="Fermi G."/>
        </authorList>
    </citation>
    <scope>X-RAY CRYSTALLOGRAPHY (2.5 ANGSTROMS) OF DEOXYHEMOGLOBIN</scope>
</reference>
<reference key="51">
    <citation type="journal article" date="1980" name="J. Mol. Biol.">
        <title>The structure of human carbonmonoxy haemoglobin at 2.7-A resolution.</title>
        <authorList>
            <person name="Baldwin J.M."/>
        </authorList>
    </citation>
    <scope>X-RAY CRYSTALLOGRAPHY (2.7 ANGSTROMS) OF CARBONMONOXY HEMOGLOBIN</scope>
</reference>
<reference key="52">
    <citation type="journal article" date="1984" name="J. Mol. Biol.">
        <title>The crystal structure of human deoxyhaemoglobin at 1.74 A resolution.</title>
        <authorList>
            <person name="Fermi G."/>
            <person name="Perutz M.F."/>
            <person name="Shaanan B."/>
            <person name="Fourme R."/>
        </authorList>
    </citation>
    <scope>X-RAY CRYSTALLOGRAPHY (1.74 ANGSTROMS) OF DEOXYHEMOGLOBIN</scope>
</reference>
<reference key="53">
    <citation type="journal article" date="1992" name="Biochemistry">
        <title>High-resolution X-ray study of deoxyhemoglobin Rothschild 37 beta Trp--&gt;Arg: a mutation that creates an intersubunit chloride-binding site.</title>
        <authorList>
            <person name="Kavanaugh J.S."/>
            <person name="Rogers P.H."/>
            <person name="Case D.A."/>
            <person name="Arnone A."/>
        </authorList>
    </citation>
    <scope>X-RAY CRYSTALLOGRAPHY (1.9 ANGSTROMS) OF VARIANT ROTHSCHILD ARG-38</scope>
</reference>
<reference key="54">
    <citation type="journal article" date="1992" name="J. Mol. Biol.">
        <title>Structure-function relationships in the low-affinity mutant haemoglobin Aalborg (Gly74 (E18)beta--&gt;Arg).</title>
        <authorList>
            <person name="Fermi G."/>
            <person name="Perutz M.F."/>
            <person name="Williamson D."/>
            <person name="Stein P."/>
            <person name="Shih D.T."/>
        </authorList>
    </citation>
    <scope>X-RAY CRYSTALLOGRAPHY (2.8 ANGSTROMS) OF MUTANT ARG-75</scope>
</reference>
<reference key="55">
    <citation type="journal article" date="1993" name="J. Mol. Biol.">
        <title>Human deoxyhaemoglobin-2,3-diphosphoglycerate complex low-salt structure at 2.5 A resolution.</title>
        <authorList>
            <person name="Richard V."/>
            <person name="Dodson G.G."/>
            <person name="Mauguen Y."/>
        </authorList>
    </citation>
    <scope>X-RAY CRYSTALLOGRAPHY (2.5 ANGSTROMS)</scope>
    <scope>BISPHOSPHOGLYCERATE BINDING</scope>
</reference>
<reference key="56">
    <citation type="journal article" date="1996" name="J. Mol. Biol.">
        <title>Crystal structure of T state haemoglobin with oxygen bound at all four haems.</title>
        <authorList>
            <person name="Paoli M."/>
            <person name="Liddington R."/>
            <person name="Tame J."/>
            <person name="Wilkinson A."/>
            <person name="Dodson G."/>
        </authorList>
    </citation>
    <scope>X-RAY CRYSTALLOGRAPHY (2.1 ANGSTROMS)</scope>
</reference>
<reference key="57">
    <citation type="journal article" date="1998" name="Biochemistry">
        <title>High-resolution crystal structures of human hemoglobin with mutations at tryptophan 37beta: structural basis for a high-affinity T-state.</title>
        <authorList>
            <person name="Kavanaugh J.S."/>
            <person name="Weydert J.A."/>
            <person name="Rogers P.H."/>
            <person name="Arnone A."/>
        </authorList>
    </citation>
    <scope>X-RAY CRYSTALLOGRAPHY (1.8 ANGSTROMS) OF MUTANTS ALA-38; GLU-38; GLY-38 AND TYR-38</scope>
</reference>
<reference key="58">
    <citation type="journal article" date="1998" name="J. Biol. Chem.">
        <title>Crystal structure of deoxy-human hemoglobin beta6 Glu--&gt;Trp. Implications for the structure and formation of the sickle cell fiber.</title>
        <authorList>
            <person name="Harrington D.J."/>
            <person name="Adachi K."/>
            <person name="Royer W.E. Jr."/>
        </authorList>
    </citation>
    <scope>X-RAY CRYSTALLOGRAPHY (2.0 ANGSTROMS) OF MUTANT TRP-7</scope>
</reference>
<reference key="59">
    <citation type="journal article" date="2002" name="Acta Crystallogr. D">
        <title>Structure of mutant human carbonmonoxyhemoglobin C (betaE6K) at 2.0 A resolution.</title>
        <authorList>
            <person name="Dewan J.C."/>
            <person name="Feeling-Taylor A."/>
            <person name="Puius Y.A."/>
            <person name="Patskovska L."/>
            <person name="Patskovsky Y."/>
            <person name="Nagel R.L."/>
            <person name="Almo S.C."/>
            <person name="Hirsch R.E."/>
        </authorList>
    </citation>
    <scope>X-RAY CRYSTALLOGRAPHY (2.0 ANGSTROMS) OF VARIANT LYS-7</scope>
</reference>
<reference key="60">
    <citation type="journal article" date="2013" name="Acta Crystallogr. D">
        <title>Structure of fully liganded Hb zeta2beta2s trapped in a tense conformation.</title>
        <authorList>
            <person name="Safo M.K."/>
            <person name="Ko T.P."/>
            <person name="Abdulmalik O."/>
            <person name="He Z."/>
            <person name="Wang A.H."/>
            <person name="Schreiter E.R."/>
            <person name="Russell J.E."/>
        </authorList>
    </citation>
    <scope>X-RAY CRYSTALLOGRAPHY (1.95 ANGSTROMS) OF VARIANT SKCA VAL-7 IN COMPLEX WITH HEME AND HBZ</scope>
    <scope>SUBUNIT</scope>
</reference>
<reference key="61">
    <citation type="journal article" date="1966" name="Science">
        <title>Hemoglobin Freiburg: abnormal hemoglobin due to deletion of a single amino acid residue.</title>
        <authorList>
            <person name="Jones R.T."/>
            <person name="Brimhall B."/>
            <person name="Huisman T.H."/>
            <person name="Kleihauer E."/>
            <person name="Betke K."/>
        </authorList>
    </citation>
    <scope>VARIANT FREIBURG VAL-24 DEL</scope>
</reference>
<reference key="62">
    <citation type="journal article" date="1975" name="Biochim. Biophys. Acta">
        <title>Two new hemoglobins. Hemoglobin Alabama (beta39(C5)Gln leads to Lys) and hemoglobin Montgomery (alpha 48(CD 6) Leu leads to Arg).</title>
        <authorList>
            <person name="Brimhall B."/>
            <person name="Jones R.T."/>
            <person name="Schneider R.G."/>
            <person name="Hosty T.S."/>
            <person name="Tomlin G."/>
            <person name="Atkins R."/>
        </authorList>
    </citation>
    <scope>VARIANT ALABAMA LYS-40</scope>
</reference>
<reference key="63">
    <citation type="journal article" date="1976" name="J. Clin. Invest.">
        <title>Functional and physicochemical studies of hemoglobin St. Louis beta 28 (B10) Leu replaced by Gln: a variant with ferric beta heme iron.</title>
        <authorList>
            <person name="Thillet J."/>
            <person name="Cohen-Solal M."/>
            <person name="Seligmann M."/>
            <person name="Rosa J."/>
        </authorList>
    </citation>
    <scope>INVOLVEMENT IN HEIBAN</scope>
    <scope>VARIANT ST LOUIS GLN-29</scope>
</reference>
<reference key="64">
    <citation type="journal article" date="1990" name="Proc. Natl. Acad. Sci. U.S.A.">
        <title>Molecular basis for dominantly inherited inclusion body beta-thalassemia.</title>
        <authorList>
            <person name="Thein S.L."/>
            <person name="Hesketh C."/>
            <person name="Taylor P."/>
            <person name="Temperley I.J."/>
            <person name="Hutchinson R.M."/>
            <person name="Old J.M."/>
            <person name="Wood W.G."/>
            <person name="Clegg J.B."/>
            <person name="Weatherall D.J."/>
        </authorList>
    </citation>
    <scope>INVOLVEMENT IN B-THALIB</scope>
</reference>
<reference key="65">
    <citation type="journal article" date="1993" name="Hemoglobin">
        <title>Hb Alesha or alpha 2 beta (2)67(E11)Val--&gt;Met: a new unstable hemoglobin variant identified through sequencing of amplified DNA.</title>
        <authorList>
            <person name="Molchanova T.P."/>
            <person name="Postnikov Y.V."/>
            <person name="Pobedimskaya D.D."/>
            <person name="Smetanina N.S."/>
            <person name="Moschan A.A."/>
            <person name="Kazanetz E.G."/>
            <person name="Tokarev Y.N."/>
            <person name="Huisman T.H.J."/>
        </authorList>
    </citation>
    <scope>VARIANT ALESHA MET-68</scope>
</reference>
<reference key="66">
    <citation type="journal article" date="1978" name="Hemoglobin">
        <title>Hemoglobin J Altgeld Gardens. A hemoglobin variant with a substitution of the proximal histidine of the beta-chain.</title>
        <authorList>
            <person name="Adams J.G. III"/>
            <person name="Przywara K.P."/>
            <person name="Heller P."/>
            <person name="Shamsuddin M."/>
        </authorList>
    </citation>
    <scope>VARIANT J-ALTGELDS GARDENS ASP-93</scope>
</reference>
<reference key="67">
    <citation type="journal article" date="1974" name="FEBS Lett.">
        <title>A new haemoglobin J from Turkey -- Hb Ankara (beta10 (A7) Ala-Asp).</title>
        <authorList>
            <person name="Arcasoy A."/>
            <person name="Casey R."/>
            <person name="Lehmann H."/>
            <person name="Cavdar A.O."/>
            <person name="Berki A."/>
        </authorList>
    </citation>
    <scope>VARIANT ANKARA ASP-11</scope>
</reference>
<reference key="68">
    <citation type="journal article" date="1986" name="Biochim. Biophys. Acta">
        <title>Hb J-Antakya or alpha 2 beta (2)65(E9)Lys--&gt;Met in a Turkish family and Hb complutense or alpha 2 beta (2)127(H5)Gln--&gt;Glu in a Spanish family; correction of a previously published identification.</title>
        <authorList>
            <person name="Huisman T.H.J."/>
            <person name="Wilson J.B."/>
            <person name="Kutlar A."/>
            <person name="Yang K.-G."/>
            <person name="Chen S.-S."/>
            <person name="Webber B.B."/>
            <person name="Altay C."/>
            <person name="Martinez A.V."/>
        </authorList>
    </citation>
    <scope>VARIANT J-ANTAKYA MET-66</scope>
    <scope>VARIANT COMPLUTENSE GLU-128</scope>
</reference>
<reference key="69">
    <citation type="journal article" date="1987" name="Hemoglobin">
        <title>A new unstable and low oxygen affinity hemoglobin variant: Hb J-Auckland [beta 25(B7)Gly--&gt;Asp].</title>
        <authorList>
            <person name="Williamson D."/>
            <person name="Wells R.M.G."/>
            <person name="Anderson R."/>
            <person name="Matthews J."/>
        </authorList>
    </citation>
    <scope>VARIANT J-AUCKLAND ASP-26</scope>
</reference>
<reference key="70">
    <citation type="journal article" date="1995" name="Hemoglobin">
        <title>Identification of a new high oxygen affinity hemoglobin variant: Hb Aurora [beta 139(H17) Asn--&gt;Tyr].</title>
        <authorList>
            <person name="Lafferty J."/>
            <person name="Ali M."/>
            <person name="Matthew K."/>
            <person name="Eng B."/>
            <person name="Patterson M."/>
            <person name="Waye J.S."/>
        </authorList>
    </citation>
    <scope>VARIANT AURORA TYR-140</scope>
</reference>
<reference key="71">
    <citation type="journal article" date="1988" name="Hemoglobin">
        <title>Hemoglobin Brest [beta 127 (H5)Gln--&gt;Lys] a new unstable human hemoglobin variant located at the alpha 1 beta 1 interface with specific electrophoretic behavior.</title>
        <authorList>
            <person name="Baudin-Chich V."/>
            <person name="Wajcman H."/>
            <person name="Gombaud-Saintonge G."/>
            <person name="Arous N."/>
            <person name="Riou J."/>
            <person name="Briere J."/>
            <person name="Galacteros F."/>
        </authorList>
    </citation>
    <scope>VARIANT BREST LYS-128</scope>
</reference>
<reference key="72">
    <citation type="journal article" date="1981" name="Hemoglobin">
        <title>Hemoglobin Brisbane: beta68 Leu replaced by His. A new high oxygen affinity variant.</title>
        <authorList>
            <person name="Brennan S.O."/>
            <person name="Wells R.M."/>
            <person name="Smith H."/>
            <person name="Carrell R.W."/>
        </authorList>
    </citation>
    <scope>VARIANT BRISBANE HIS-69</scope>
</reference>
<reference key="73">
    <citation type="journal article" date="1983" name="Hemoglobin">
        <title>A new hemoglobin with high oxygen affinity -- hemoglobin Bunbury: alpha 2 beta 2 [94 (FG1) Asp replaced by Asn].</title>
        <authorList>
            <person name="Como P.F."/>
            <person name="Kennett D."/>
            <person name="Wilkinson T."/>
            <person name="Kronenberg H."/>
        </authorList>
    </citation>
    <scope>VARIANT BUNBURY ASN-95</scope>
</reference>
<reference key="74">
    <citation type="journal article" date="1976" name="Biochim. Biophys. Acta">
        <title>Hemoglobin J Cairo: beta 65 (E9) Lys leads to Gln, A new hemoglobin variant discovered in an Egyptian family.</title>
        <authorList>
            <person name="Garel M.-C."/>
            <person name="Hassan W."/>
            <person name="Coquelet M.T."/>
            <person name="Goossens M."/>
            <person name="Rosa J."/>
            <person name="Arous N."/>
        </authorList>
    </citation>
    <scope>VARIANT J-CAIRO GLN-66</scope>
</reference>
<reference key="75">
    <citation type="journal article" date="1975" name="Biochim. Biophys. Acta">
        <title>A new haemoglobin variant, haemoglobin Camperdown (beta 104 (G6) arginine-&gt;serine).</title>
        <authorList>
            <person name="Wilkinson T."/>
            <person name="Chua C.G."/>
            <person name="Carrell R.W."/>
            <person name="Robin H."/>
            <person name="Exner T."/>
            <person name="Lee K.M."/>
            <person name="Kronenberg H."/>
        </authorList>
    </citation>
    <scope>VARIANT CAMPERDOWN SER-105</scope>
</reference>
<reference key="76">
    <citation type="journal article" date="1976" name="FEBS Lett.">
        <title>Haemoglobin caribbean beta91 (F7) Leu replaced by Arg: a mildly haemoglobin with a low oxygen affinity.</title>
        <authorList>
            <person name="Ahern E."/>
            <person name="Ahern V."/>
            <person name="Hilton T."/>
            <person name="Serjeant G.R."/>
            <person name="Serjeant B.E."/>
            <person name="Seakins M."/>
            <person name="Lang A."/>
            <person name="Middleton A."/>
            <person name="Lehmann H."/>
        </authorList>
    </citation>
    <scope>VARIANT CARIBBEAN ARG-92</scope>
</reference>
<reference key="77">
    <citation type="journal article" date="1984" name="Hemoglobin">
        <title>A silent hemoglobin variant detected by HPLC: hemoglobin City of Hope beta 69 (E13) Gly--&gt;Ser.</title>
        <authorList>
            <person name="Rahbar S."/>
            <person name="Asmerom Y."/>
            <person name="Blume K.G."/>
        </authorList>
    </citation>
    <scope>VARIANT CITY OF HOPE SER-70</scope>
</reference>
<reference key="78">
    <citation type="journal article" date="1991" name="Hemoglobin">
        <title>Hb Coimbra or alpha 2 beta (2)99(G1)Asp--&gt;Glu, a newly discovered high oxygen affinity variant.</title>
        <authorList>
            <person name="Tamagnini G.P."/>
            <person name="Ribeiro M.L."/>
            <person name="Valente V."/>
            <person name="Ramachandran M."/>
            <person name="Wilson J.B."/>
            <person name="Baysal E."/>
            <person name="Gu L.H."/>
            <person name="Huisman T.H.J."/>
        </authorList>
    </citation>
    <scope>VARIANT COIMBRA GLU-100</scope>
</reference>
<reference key="79">
    <citation type="journal article" date="1996" name="Hum. Genet.">
        <title>Hb Costa Rica or alpha 2 beta 2 77(EF1)His--&gt;Arg: the first example of a somatic cell mutation in a globin gene.</title>
        <authorList>
            <person name="Romero W.E.R."/>
            <person name="Castillo M."/>
            <person name="Chaves M.A."/>
            <person name="Saenz G.F."/>
            <person name="Gu L.-H."/>
            <person name="Wilson J.B."/>
            <person name="Baysal E."/>
            <person name="Smetanina N.S."/>
            <person name="Leonova J.Y."/>
            <person name="Huisman T.H.J."/>
        </authorList>
    </citation>
    <scope>VARIANT COSTA RICA ARG-78</scope>
</reference>
<reference key="80">
    <citation type="journal article" date="1996" name="Am. J. Hematol.">
        <title>Hemoglobin Debrousse (beta 96[FG3]Leu--&gt;Pro): a new unstable hemoglobin with twofold increased oxygen affinity.</title>
        <authorList>
            <person name="Lacan P."/>
            <person name="Kister J."/>
            <person name="Francina A."/>
            <person name="Souillet G."/>
            <person name="Galacteros F."/>
            <person name="Delaunay J."/>
            <person name="Wajcman H."/>
        </authorList>
    </citation>
    <scope>VARIANT DEBROUSSE PRO-97</scope>
</reference>
<reference key="81">
    <citation type="journal article" date="1990" name="Am. J. Hematol.">
        <title>Hemoglobin Dhonburi alpha 2 beta 2 126 (H4) Val--&gt;Gly: a new unstable beta variant producing a beta-thalassemia intermedia phenotype in association with beta zero-thalassemia.</title>
        <authorList>
            <person name="Bardakdjian-Michau J."/>
            <person name="Fucharoen S."/>
            <person name="Delanoe-Garin J."/>
            <person name="Kister J."/>
            <person name="Lacombe C."/>
            <person name="Winichagoon P."/>
            <person name="Blouquit Y."/>
            <person name="Riou J."/>
            <person name="Wasi P."/>
            <person name="Galacteros F."/>
        </authorList>
    </citation>
    <scope>VARIANT B-THAL GLY-127</scope>
</reference>
<reference key="82">
    <citation type="journal article" date="1992" name="Hum. Genet.">
        <title>Two new human hemoglobin variants caused by unusual mutational events: Hb Zaire contains a five residue repetition within the alpha-chain and Hb Duino has two residues substituted in the beta-chain.</title>
        <authorList>
            <person name="Wajcman H."/>
            <person name="Blouquit Y."/>
            <person name="Vasseur C."/>
            <person name="le Querrec A."/>
            <person name="Laniece M."/>
            <person name="Melevendi C."/>
            <person name="Rasore A."/>
            <person name="Galacteros F."/>
        </authorList>
    </citation>
    <scope>VARIANT NEWCASTLE PRO-93</scope>
    <scope>VARIANT CAMPERDOWN SER-105</scope>
    <scope>DESCRIPTION OF VARIANT DUINO</scope>
</reference>
<reference key="83">
    <citation type="journal article" date="1992" name="Hum. Mutat.">
        <title>A novel beta-globin structural mutant, Hb Brescia (beta 114 Leu-Pro), causing a severe beta-thalassemia intermedia phenotype.</title>
        <authorList>
            <person name="Murru S."/>
            <person name="Poddie D."/>
            <person name="Sciarratta G.V."/>
            <person name="Agosti S."/>
            <person name="Baffico M."/>
            <person name="Melevendi C."/>
            <person name="Pirastu M."/>
            <person name="Cao A."/>
        </authorList>
    </citation>
    <scope>VARIANT DURHAM-N.C. PRO-115</scope>
</reference>
<reference key="84">
    <citation type="journal article" date="1994" name="Blood">
        <title>A novel beta-globin mutation, beta Durham-NC [beta 114 Leu--&gt;Pro], produces a dominant thalassemia-like phenotype.</title>
        <authorList>
            <person name="de Castro C.M."/>
            <person name="Devlin B."/>
            <person name="Fleenor D.E."/>
            <person name="Lee M.E."/>
            <person name="Kaufman R.E."/>
        </authorList>
    </citation>
    <scope>VARIANT DURHAM-N.C. PRO-115</scope>
</reference>
<reference key="85">
    <citation type="journal article" date="1996" name="Hemoglobin">
        <title>Hb J-Europa [beta 62(E6)Ala--&gt;Asp]: normal oxygen binding properties in a new variant involving a residue located distal to the heme.</title>
        <authorList>
            <person name="Kiger L."/>
            <person name="Kister J."/>
            <person name="Groff P."/>
            <person name="Kalmes G."/>
            <person name="Prome D."/>
            <person name="Galacteros F."/>
            <person name="Wajcman H."/>
        </authorList>
    </citation>
    <scope>VARIANT J-EUROPA ASP-63</scope>
</reference>
<reference key="86">
    <citation type="journal article" date="1991" name="Hemoglobin">
        <title>Hb Geelong [beta 139(H17)Asn--&gt;Asp].</title>
        <authorList>
            <person name="Como P.F."/>
            <person name="Hocking D.R."/>
            <person name="Swinton G.W."/>
            <person name="Trent R.J."/>
            <person name="Holland R.A.B."/>
            <person name="Tibben E.A."/>
            <person name="Wilkinson T."/>
            <person name="Kronenberg H."/>
        </authorList>
    </citation>
    <scope>VARIANT GEELONG ASP-140</scope>
</reference>
<reference key="87">
    <citation type="journal article" date="1987" name="FEBS Lett.">
        <title>Hemoglobin Grange-Blanche [beta 27(B9) Ala--&gt;Val], a new variant with normal expression and increased affinity for oxygen.</title>
        <authorList>
            <person name="Baklouti F."/>
            <person name="Giraud Y."/>
            <person name="Francina A."/>
            <person name="Richard G."/>
            <person name="Perier C."/>
            <person name="Geyssant A."/>
            <person name="Jaubert J."/>
            <person name="Brizard C."/>
            <person name="Delaunay J."/>
        </authorList>
    </citation>
    <scope>VARIANT GRANGE-BLANCHE VAL-28</scope>
</reference>
<reference key="88">
    <citation type="journal article" date="1992" name="Hemoglobin">
        <title>Hb Graz or alpha 2 beta 2(2)(NA2)His--&gt;Leu; a new beta chain variant observed in four families from southern Austria.</title>
        <authorList>
            <person name="Liu J.S."/>
            <person name="Molchanova T.P."/>
            <person name="Gu L.H."/>
            <person name="Wilson J.B."/>
            <person name="Hopmeier P."/>
            <person name="Schnedl W."/>
            <person name="Balaun E."/>
            <person name="Krejs G.J."/>
            <person name="Huisman T.H.J."/>
        </authorList>
    </citation>
    <scope>VARIANT GRAZ LEU-3</scope>
</reference>
<reference key="89">
    <citation type="journal article" date="1976" name="Acta Haematol.">
        <title>Hb Helsinki: a variant with a high oxygen affinity and a substitution at a 2,3-DPG binding site (beta82[EF6] Lys replaced by Met).</title>
        <authorList>
            <person name="Ikkala E."/>
            <person name="Koskela J."/>
            <person name="Pikkarainen P."/>
            <person name="Rahiala E.-L."/>
            <person name="El-Hazmi M.A.F."/>
            <person name="Nagai K."/>
            <person name="Lang A."/>
            <person name="Lehmann H."/>
        </authorList>
    </citation>
    <scope>VARIANT HELSINKI MET-83</scope>
</reference>
<reference key="90">
    <citation type="journal article" date="1986" name="Hemoglobin">
        <title>Hb Himeji or beta 140 (H18) Ala--&gt;Asp. A slightly unstable hemoglobin with increased beta N-terminal glycation.</title>
        <authorList>
            <person name="Ohba Y."/>
            <person name="Miyaji T."/>
            <person name="Murakami M."/>
            <person name="Kadowaki S."/>
            <person name="Fujita T."/>
            <person name="Oimomi M."/>
            <person name="Hatanaka H."/>
            <person name="Ishikawa K."/>
            <person name="Baba S."/>
            <person name="Hitaka K."/>
            <person name="Imai K."/>
        </authorList>
    </citation>
    <scope>VARIANT HIMEJI ASP-141</scope>
</reference>
<reference key="91">
    <citation type="journal article" date="1989" name="Hemoglobin">
        <title>Hb Hinsdale [beta 139 (H17)Asn--&gt;Lys]: a variant in the central cavity showing reduced affinity for oxygen and 2,3-diphosphoglycerate.</title>
        <authorList>
            <person name="Moo-Penn W.F."/>
            <person name="Johnson M.H."/>
            <person name="Jue D.L."/>
            <person name="Lonser R."/>
        </authorList>
    </citation>
    <scope>VARIANT HINSDALE LYS-140</scope>
</reference>
<reference key="92">
    <citation type="journal article" date="1996" name="Hemoglobin">
        <title>HB Hinwil or beta 38(C4)Thr--&gt;Asn: a new beta chain variant detected in a Swiss family.</title>
        <authorList>
            <person name="Frischknecht H."/>
            <person name="Ventruto M."/>
            <person name="Hess D."/>
            <person name="Hunziker P."/>
            <person name="Rosatelli M.C."/>
            <person name="Cao A."/>
            <person name="Breitenstein U."/>
            <person name="Fehr J."/>
            <person name="Tuchschmid P."/>
        </authorList>
    </citation>
    <scope>VARIANT HINWIL ASN-39</scope>
</reference>
<reference key="93">
    <citation type="journal article" date="1993" name="Hemoglobin">
        <title>Hb Howick [beta 37(C3)Trp--&gt;Gly]: a new high oxygen affinity variant of the alpha 1 beta 2 contact.</title>
        <authorList>
            <person name="Owen M.C."/>
            <person name="Ockelford P.A."/>
            <person name="Wells R.M.G."/>
        </authorList>
    </citation>
    <scope>VARIANT HOWICK GLY-38</scope>
</reference>
<reference key="94">
    <citation type="journal article" date="1979" name="J. Biol. Chem.">
        <title>The structure of hemoglobin Indianapolis [beta112(G14) arginine]. An unstable variant detectable only by isotopic labeling.</title>
        <authorList>
            <person name="Adams J.G. III"/>
            <person name="Steinberg M.H."/>
            <person name="Boxer L.A."/>
            <person name="Baehner R.L."/>
            <person name="Forget B.G."/>
            <person name="Tsistrakis G.A."/>
        </authorList>
    </citation>
    <scope>VARIANT INDIANAPOLIS ARG-113</scope>
</reference>
<reference key="95">
    <citation type="journal article" date="1991" name="Hemoglobin">
        <title>Hb Isehara (or Hb Redondo) [beta 92 (F8) His--&gt;Asn]: an unstable variant with a proximal histidine substitution at the heme contact.</title>
        <authorList>
            <person name="Harano T."/>
            <person name="Harano K."/>
            <person name="Kushida Y."/>
            <person name="Ueda S."/>
            <person name="Yoshii A."/>
            <person name="Nishinarita M."/>
        </authorList>
    </citation>
    <scope>VARIANT ISEHARA ASN-93</scope>
</reference>
<reference key="96">
    <citation type="journal article" date="1972" name="J. Clin. Invest.">
        <title>Hemoglobin Istanbul: substitution of glutamine for histidine in a proximal histidine (F8(92)).</title>
        <authorList>
            <person name="Aksoy M."/>
            <person name="Erdem S."/>
            <person name="Efremov G.D."/>
            <person name="Wilson J.B."/>
            <person name="Huisman T.H.J."/>
            <person name="Schroeder W.A."/>
            <person name="Shelton J.R."/>
            <person name="Shelton J.B."/>
            <person name="Ulitin O.N."/>
            <person name="Muftuoglu A."/>
        </authorList>
    </citation>
    <scope>VARIANT ISTAMBUL GLN-93</scope>
</reference>
<reference key="97">
    <citation type="journal article" date="1990" name="Hemoglobin">
        <title>Hb Jacksonville [alpha 2 beta 2(54)(D5)Val--&gt;Asp]: a new unstable variant found in a patient with hemolytic anemia.</title>
        <authorList>
            <person name="Gaudry C.L. Jr."/>
            <person name="Pitel P.A."/>
            <person name="Jue D.L."/>
            <person name="Hine T.K."/>
            <person name="Johnson M.H."/>
            <person name="Moo-Penn W.F."/>
        </authorList>
    </citation>
    <scope>VARIANT JACKSONVILLE ASP-55</scope>
</reference>
<reference key="98">
    <citation type="journal article" date="1983" name="Hemoglobin">
        <title>Hemoglobin Jianghua [beta 120(GH3) Lys leads to Ile]: a new fast-moving variant found in China.</title>
        <authorList>
            <person name="Lu Y.Q."/>
            <person name="Fan J.L."/>
            <person name="Liu J.F."/>
            <person name="Hu H.L."/>
            <person name="Peng X.H."/>
            <person name="Huang C.-H."/>
            <person name="Huang P.Y."/>
            <person name="Chen S.S."/>
            <person name="Jai P.C."/>
            <person name="Yang K.G."/>
        </authorList>
    </citation>
    <scope>VARIANT JIANGHUA ILE-121</scope>
</reference>
<reference key="99">
    <citation type="journal article" date="1993" name="Hemoglobin">
        <title>Hb Karlskoga or alpha 2 beta (2)21(B3) Asp--&gt;His: a new slow-moving variant found in Sweden.</title>
        <authorList>
            <person name="Landin B."/>
        </authorList>
    </citation>
    <scope>VARIANT KARLSKOGA HIS-22</scope>
</reference>
<reference key="100">
    <citation type="journal article" date="1982" name="FEBS Lett.">
        <title>Structural study of hemoglobin Knossos, beta 27 (B9) Ala leads to Ser. A new abnormal hemoglobin present as a silent beta-thalassemia.</title>
        <authorList>
            <person name="Arous N."/>
            <person name="Galacteros F."/>
            <person name="Fessas P."/>
            <person name="Loukopoulos D."/>
            <person name="Blouquit Y."/>
            <person name="Komis G."/>
            <person name="Sellaye M."/>
            <person name="Boussiou M."/>
            <person name="Rosa J."/>
        </authorList>
    </citation>
    <scope>VARIANT KNOSSOS SER-28</scope>
</reference>
<reference key="101">
    <citation type="journal article" date="1992" name="Hemoglobin">
        <title>Hb Kodaira [beta 146(HC3)His--&gt;Gln]: a new beta chain variant with an amino acid substitution at the C-terminus.</title>
        <authorList>
            <person name="Harano T."/>
            <person name="Harano K."/>
            <person name="Kushida Y."/>
            <person name="Imai K."/>
            <person name="Nishinakamura R."/>
            <person name="Matsunaga T."/>
        </authorList>
    </citation>
    <scope>VARIANT KODAIRA GLN-147</scope>
</reference>
<reference key="102">
    <citation type="journal article" date="1986" name="Hemoglobin">
        <title>A new electrophoretically-silent hemoglobin variant: hemoglobin Kofu or alpha 2 beta 2 84 (EF8) Thr--&gt;Ile.</title>
        <authorList>
            <person name="Harano T."/>
            <person name="Harano K."/>
            <person name="Ueda S."/>
            <person name="Imai N."/>
            <person name="Kitazumi T."/>
        </authorList>
    </citation>
    <scope>VARIANT KOFU ILE-85</scope>
</reference>
<reference key="103">
    <citation type="journal article" date="1993" name="Hemoglobin">
        <title>Hb Hradec Kralove (Hb HK) or alpha 2 beta 2 115(G17)Ala--&gt;Asp, a severely unstable hemoglobin variant resulting in a dominant beta-thalassemia trait in a Czech family.</title>
        <authorList>
            <person name="Divoky V."/>
            <person name="Svobodova M."/>
            <person name="Indrak K."/>
            <person name="Chrobak L."/>
            <person name="Molchanova T.P."/>
            <person name="Huisman T.H.J."/>
        </authorList>
    </citation>
    <scope>VARIANT B-THAL ASP-116</scope>
</reference>
<reference key="104">
    <citation type="journal article" date="1986" name="Hemoglobin">
        <title>Hemoglobin La Desirade alpha A2 beta 2 129 (H7) Ala--&gt;Val: a new unstable hemoglobin.</title>
        <authorList>
            <person name="Merault G."/>
            <person name="Keclard L."/>
            <person name="Garin J."/>
            <person name="Poyart C."/>
            <person name="Blouquit Y."/>
            <person name="Arous N."/>
            <person name="Galacteros F."/>
            <person name="Feingold J."/>
            <person name="Rosa J."/>
        </authorList>
    </citation>
    <scope>VARIANT LA DESIRADE VAL-130</scope>
</reference>
<reference key="105">
    <citation type="journal article" date="1992" name="Biochim. Biophys. Acta">
        <title>Structure of the EF corner favors deamidation of asparaginyl residues in hemoglobin: the example of Hb La Roche-sur-Yon [beta 81 (EF5) Leu--&gt;His].</title>
        <authorList>
            <person name="Wajcman H."/>
            <person name="Kister J."/>
            <person name="Vasseur C."/>
            <person name="Blouquit Y."/>
            <person name="Trastour J.C."/>
            <person name="Cottenceau D."/>
            <person name="Galacteros F."/>
        </authorList>
    </citation>
    <scope>VARIANT LA ROCHE-SUR-YON HIS-82</scope>
</reference>
<reference key="106">
    <citation type="journal article" date="1988" name="Hemoglobin">
        <title>Hb Las Palmas or alpha 2 beta 2(49)(CD8)Ser--&gt;Phe, a mildly unstable hemoglobin variant.</title>
        <authorList>
            <person name="Malcorra-Azpiazu J.J."/>
            <person name="Balda-Aguirre M.I."/>
            <person name="Diaz-Chico J.C."/>
            <person name="Hu H."/>
            <person name="Wilson J.B."/>
            <person name="Webber B.B."/>
            <person name="Kutlar F."/>
            <person name="Kutlar A."/>
            <person name="Huisman T.H.J."/>
        </authorList>
    </citation>
    <scope>VARIANT LAS PALMAS PHE-50</scope>
</reference>
<reference key="107">
    <citation type="journal article" date="1987" name="Eur. J. Haematol.">
        <title>Hb Linkoping (beta 36 Pro--&gt;Thr): a new high oxygen affinity hemoglobin variant found in two families of Finnish origin.</title>
        <authorList>
            <person name="Berlin G."/>
            <person name="Wranne B."/>
            <person name="Jeppsson J.-O."/>
        </authorList>
    </citation>
    <scope>VARIANT LINKOPING THR-37</scope>
</reference>
<reference key="108">
    <citation type="journal article" date="1983" name="Hemoglobin">
        <title>Hemoglobin Maputo: a new beta-chain variant (alpha 2 beta 2 47 (CD6) Asp replaced by Tyr) in combination with hemoglobin S, identified by high performance liquid chromatography (HPLC).</title>
        <authorList>
            <person name="Marinucci M."/>
            <person name="Boissel J.P."/>
            <person name="Massa A."/>
            <person name="Wajcman H."/>
            <person name="Tentori L."/>
            <person name="Labie D."/>
        </authorList>
    </citation>
    <scope>VARIANT MAPUTO TYR-48</scope>
</reference>
<reference key="109">
    <citation type="journal article" date="1990" name="Hemoglobin">
        <title>Hb Matera [beta 55(D6)Met--&gt;Lys]: a new unstable hemoglobin variant in an Italian family.</title>
        <authorList>
            <person name="Sciarratta G.V."/>
            <person name="Ivaldi G."/>
        </authorList>
    </citation>
    <scope>VARIANT MATERA LYS-56</scope>
</reference>
<reference key="110">
    <citation type="journal article" date="1981" name="Hemoglobin">
        <title>Hemoglobin Miyashiro (beta 23[B5] val substituting for gly) an electrophoretically silent variant discovered by the isopropanol test.</title>
        <authorList>
            <person name="Nakatsuji T."/>
            <person name="Miwa S."/>
            <person name="Ohba Y."/>
            <person name="Hattori Y."/>
            <person name="Miyaji T."/>
            <person name="Miyata H."/>
            <person name="Shinohara T."/>
            <person name="Hori T."/>
            <person name="Takayama J."/>
        </authorList>
    </citation>
    <scope>VARIANT MIYASHIRO GLY-24</scope>
</reference>
<reference key="111">
    <citation type="journal article" date="1977" name="Hemoglobin">
        <title>Hemoglobin Mizuho or beta 68 (E 12) leucine leads to proline, a new unstable variant associated with severe hemolytic anemia.</title>
        <authorList>
            <person name="Ohba Y."/>
            <person name="Miyaji T."/>
            <person name="Matsuoka M."/>
            <person name="Sugiyama K."/>
            <person name="Suzuki T."/>
            <person name="Sugiura T."/>
        </authorList>
    </citation>
    <scope>VARIANT MIZUHO PRO-69</scope>
</reference>
<reference key="112">
    <citation type="journal article" date="1992" name="Hemoglobin">
        <title>A new variant, HB Muscat [alpha 2 beta (2)32(B14)Leu--&gt;Val] observed in association with HB S in an Arabian family.</title>
        <authorList>
            <person name="Ramachandran M."/>
            <person name="Gu L.H."/>
            <person name="Wilson J.B."/>
            <person name="Kitundu M.N."/>
            <person name="Adekile A.D."/>
            <person name="Liu J.C."/>
            <person name="McKie K.M."/>
            <person name="Huisman T.H.J."/>
        </authorList>
    </citation>
    <scope>VARIANT MUSCAT VAL-33</scope>
</reference>
<reference key="113">
    <citation type="journal article" date="1989" name="Hemoglobin">
        <title>Hb N-Timone [alpha 2 beta 2(8)(A5)Lys--&gt;Glu]: a new fast-moving variant with normal stability and oxygen affinity.</title>
        <authorList>
            <person name="Lena-Russo D."/>
            <person name="Orsini A."/>
            <person name="Vovan L."/>
            <person name="Bardakdjian-Michau J."/>
            <person name="Lacombe C."/>
            <person name="Blouquit Y."/>
            <person name="Craescu C.T."/>
            <person name="Galacteros F."/>
        </authorList>
    </citation>
    <scope>VARIANT N-TIMONE GLU-9</scope>
</reference>
<reference key="114">
    <citation type="journal article" date="1985" name="Hemoglobin">
        <title>A new unstable, high oxygen affinity hemoglobin: Hb Nagoya or beta 97 (FG4) His--&gt;Pro.</title>
        <authorList>
            <person name="Ohba Y."/>
            <person name="Imanaka M."/>
            <person name="Matsuoka M."/>
            <person name="Hattori Y."/>
            <person name="Miyaji T."/>
            <person name="Funaki C."/>
            <person name="Shibata K."/>
            <person name="Shimokata H."/>
            <person name="Kuzuya F."/>
            <person name="Miwa S."/>
        </authorList>
    </citation>
    <scope>VARIANT NAGOYA PRO-98</scope>
</reference>
<reference key="115">
    <citation type="journal article" date="1993" name="Hemoglobin">
        <title>Hb D-Neath or beta 121 (GH4) Glu--&gt;Ala: a new member of the Hb D family.</title>
        <authorList>
            <person name="Welch S.G."/>
            <person name="Bateman C."/>
        </authorList>
    </citation>
    <scope>VARIANT D-NEATH ALA-122</scope>
</reference>
<reference key="116">
    <citation type="journal article" date="1985" name="Hemoglobin">
        <title>Hemoglobin North Chicago (beta 36 [C2] proline--&gt;serine): a new high affinity hemoglobin.</title>
        <authorList>
            <person name="Rahbar S."/>
            <person name="Louis J."/>
            <person name="Lee T."/>
            <person name="Asmerom Y."/>
        </authorList>
    </citation>
    <scope>VARIANT NORTH CHICAGO SER-37</scope>
</reference>
<reference key="117">
    <citation type="journal article" date="1977" name="FEBS Lett.">
        <title>Haemoglobin North Shore-Caracas beta 134 (H12) valine replaced by glutamic acid.</title>
        <authorList>
            <person name="Arends T."/>
            <person name="Lehmann H."/>
            <person name="Plowman D."/>
            <person name="Stathopoulou R."/>
        </authorList>
    </citation>
    <scope>VARIANT NORTH SHORE-CARACAS GLU-135</scope>
</reference>
<reference key="118">
    <citation type="journal article" date="1987" name="Hemoglobin">
        <title>Hb Olomouc or alpha 2 beta 2(86)(F2)Ala--&gt;Asp, a new high oxygen affinity variant.</title>
        <authorList>
            <person name="Indrak K."/>
            <person name="Wiedermann B.F."/>
            <person name="Batek F."/>
            <person name="Wilson J.B."/>
            <person name="Webber B.B."/>
            <person name="Kutlar A."/>
            <person name="Huisman T.H.J."/>
        </authorList>
    </citation>
    <scope>VARIANT OLOMOUC ASP-87</scope>
</reference>
<reference key="119">
    <citation type="journal article" date="1982" name="Hemoglobin">
        <title>Hemoglobin Palmerston North beta 23 (B5) Val replaced by Phe. A new variant identified in a patient with polycythemia.</title>
        <authorList>
            <person name="Brennan S.O."/>
            <person name="Williamson D."/>
            <person name="Whisson M.E."/>
            <person name="Carrell R.W."/>
        </authorList>
    </citation>
    <scope>VARIANT PALMERSTON NORTH PHE-24</scope>
</reference>
<reference key="120">
    <citation type="journal article" date="1988" name="Hemoglobin">
        <title>Hemoglobin Pierre-Benite [beta 90(F6)Glu--&gt;Asp], a new high affinity variant found in a French family.</title>
        <authorList>
            <person name="Baklouti F."/>
            <person name="Giraud Y."/>
            <person name="Francina A."/>
            <person name="Richard G."/>
            <person name="Favre-Gilly J."/>
            <person name="Delaunay J."/>
        </authorList>
    </citation>
    <scope>VARIANT PIERRE-BENITE ASP-91</scope>
</reference>
<reference key="121">
    <citation type="journal article" date="1978" name="FEBS Lett.">
        <title>Hemoglobin Presbyterian: beta108 (G10) asparagine leads to lysine, A hemoglobin variant with low oxygen affinity.</title>
        <authorList>
            <person name="Moo-Penn W.F."/>
            <person name="Wolff J.A."/>
            <person name="Simon G."/>
            <person name="Vacek M."/>
            <person name="Jue D.L."/>
            <person name="Johnson M.H."/>
        </authorList>
    </citation>
    <scope>VARIANT PRESBYTERIAN LYS-109</scope>
</reference>
<reference key="122">
    <citation type="journal article" date="1995" name="Hum. Genet.">
        <title>Germline mosaicism for an alanine to valine substitution at residue beta 140 in hemoglobin Puttelange, a new variant with high oxygen affinity.</title>
        <authorList>
            <person name="Wajcman H."/>
            <person name="Girodon E."/>
            <person name="Prome D."/>
            <person name="North M.L."/>
            <person name="Plassa F."/>
            <person name="Duwig I."/>
            <person name="Kister J."/>
            <person name="Bergerat J.P."/>
            <person name="Oberling F."/>
            <person name="Lampert E."/>
            <person name="Lonsdorfer J."/>
            <person name="Goossens M."/>
            <person name="Galacteros F."/>
        </authorList>
    </citation>
    <scope>VARIANT PUTTELANGE VAL-141</scope>
</reference>
<reference key="123">
    <citation type="journal article" date="1983" name="Hemoglobin">
        <title>Hemoglobin Quin-Hai, beta 78 (EF2) Leu replaced by Arg, a new abnormal hemoglobin found in Guangdong, China.</title>
        <authorList>
            <person name="Jen P.C."/>
            <person name="Chen L.C."/>
            <person name="Chen P.F."/>
            <person name="Wong Y."/>
            <person name="Chen L.F."/>
            <person name="Guo Y.Y."/>
            <person name="Chang F.Q."/>
            <person name="Chow Y.C."/>
            <person name="Chiu Y."/>
        </authorList>
    </citation>
    <scope>VARIANT QUIN-HAI ARG-79</scope>
</reference>
<reference key="124">
    <citation type="journal article" date="1998" name="Clin. Chem.">
        <title>Hemoglobin Rambam (beta69[E13]Gly--&gt;Asp), a pitfall in the assessment of diabetic control: characterization by electrospray mass spectrometry and HPLC.</title>
        <authorList>
            <person name="Bisse E."/>
            <person name="Zorn N."/>
            <person name="Eigel A."/>
            <person name="Lizama M."/>
            <person name="Huamam-Guillen P."/>
            <person name="Marz W."/>
            <person name="van Dorsselaer A."/>
            <person name="Wieland H."/>
        </authorList>
    </citation>
    <scope>VARIANT RAMBAM ASP-70</scope>
</reference>
<reference key="125">
    <citation type="journal article" date="1988" name="Hemoglobin">
        <title>Hemoglobin Randwick or beta 15 (A12)Trp--&gt;Gly: a new unstable beta-chain hemoglobin variant.</title>
        <authorList>
            <person name="Gilbert A.T."/>
            <person name="Fleming P.J."/>
            <person name="Sumner D.R."/>
            <person name="Hughes W.G."/>
            <person name="Ip F."/>
            <person name="Kwan Y.L."/>
            <person name="Holland R.A.B."/>
        </authorList>
    </citation>
    <scope>VARIANT RANDWICK GLY-16</scope>
</reference>
<reference key="126">
    <citation type="journal article" date="1983" name="Hemoglobin">
        <title>Hemoglobin Rio Grande [beta 8 (A5) Lys leads to Thr] a new variant found in a Mexican-American family.</title>
        <authorList>
            <person name="Moo-Penn W.F."/>
            <person name="Johnson M.H."/>
            <person name="McGuffey J.E."/>
            <person name="Jue D.L."/>
            <person name="Therrell B.L. Jr."/>
        </authorList>
    </citation>
    <scope>VARIANT RIO GRANDE THR-9</scope>
</reference>
<reference key="127">
    <citation type="journal article" date="1974" name="Blood">
        <title>Hemoglobin Rush (beta 101 (g3) glutamine): a new unstable hemoglobin causing mild hemolytic anemia.</title>
        <authorList>
            <person name="Adams J.G. III"/>
            <person name="Winter W.P."/>
            <person name="Tausk K."/>
            <person name="Heller P."/>
        </authorList>
    </citation>
    <scope>VARIANT RUSH GLN-102</scope>
</reference>
<reference key="128">
    <citation type="journal article" date="1983" name="Hemoglobin">
        <title>Hemoglobin Saitama or beta 117 (G19) His leads to Pro, a new variant causing hemolytic disease.</title>
        <authorList>
            <person name="Ohba Y."/>
            <person name="Hasegawa Y."/>
            <person name="Amino H."/>
            <person name="Miwa S."/>
            <person name="Nakatsuji T."/>
            <person name="Hattori Y."/>
            <person name="Miyaji T."/>
        </authorList>
    </citation>
    <scope>VARIANT SAITAMA PRO-118</scope>
</reference>
<reference key="129">
    <citation type="journal article" date="1961" name="Proc. Natl. Acad. Sci. U.S.A.">
        <title>Chemical studies of several varieties of Hb M.</title>
        <authorList>
            <person name="Gerald P.S."/>
            <person name="Efron M.L."/>
        </authorList>
    </citation>
    <scope>VARIANT M-SASKATOON TYR-64</scope>
</reference>
<reference key="130">
    <citation type="journal article" date="1984" name="Hemoglobin">
        <title>Hemoglobin Shelby [beta 131(H9) Gln--&gt;Lys] a correction to the structure of hemoglobin Deaconess and hemoglobin Leslie.</title>
        <authorList>
            <person name="Moo-Penn W.F."/>
            <person name="Johnson M.H."/>
            <person name="McGuffey J.E."/>
            <person name="Jue D.L."/>
        </authorList>
    </citation>
    <scope>VARIANT SHELBY/LESLIE/DEACONESS LYS-132</scope>
</reference>
<reference key="131">
    <citation type="journal article" date="1974" name="FEBS Lett.">
        <title>Hb J Sicilia: beta 65 (E9) Lys-Asn, a beta homologue of Hb Zambia.</title>
        <authorList>
            <person name="Ricco G."/>
            <person name="Pich P.G."/>
            <person name="Mazza U."/>
            <person name="Rossi G."/>
            <person name="Ajmar P."/>
            <person name="Arese P."/>
            <person name="Gallo E."/>
        </authorList>
    </citation>
    <scope>VARIANT J-SICILIA ASN-66</scope>
</reference>
<reference key="132">
    <citation type="journal article" date="1991" name="Hemoglobin">
        <title>A new unstable and low oxygen affinity hemoglobin variant: Hb Stanmore [beta 111(G13)Val--&gt;Ala].</title>
        <authorList>
            <person name="Como P.F."/>
            <person name="Wylie B.R."/>
            <person name="Trent R.J."/>
            <person name="Bruce D."/>
            <person name="Volpato F."/>
            <person name="Wilkinson T."/>
            <person name="Kronenberg H."/>
            <person name="Holland R.A.B."/>
            <person name="Tibben E.A."/>
        </authorList>
    </citation>
    <scope>VARIANT STANMORE ALA-112</scope>
</reference>
<reference key="133">
    <citation type="journal article" date="1981" name="FEBS Lett.">
        <title>Hemoglobin Saint Mande beta 102 (G4) asn replaced by tyr: a new low oxygen affinity variant.</title>
        <authorList>
            <person name="Arous N."/>
            <person name="Braconnier F."/>
            <person name="Thillet J."/>
            <person name="Blouquit Y."/>
            <person name="Galacteros F."/>
            <person name="Chevrier M."/>
            <person name="Bordahandy C."/>
            <person name="Rosa J."/>
        </authorList>
    </citation>
    <scope>VARIANT ST MANDE TYR-103</scope>
</reference>
<reference key="134">
    <citation type="journal article" date="1989" name="Hemoglobin">
        <title>Hemoglobin Windsor or beta 11 (A8)Val--&gt;Asp: a new unstable beta-chain hemoglobin variant producing a hemolytic anemia.</title>
        <authorList>
            <person name="Gilbert A.T."/>
            <person name="Fleming P.J."/>
            <person name="Sumner D.R."/>
            <person name="Hughes W.G."/>
            <person name="Holland R.A.B."/>
            <person name="Tibben E.A."/>
        </authorList>
    </citation>
    <scope>VARIANT WINDSOR ASP-12</scope>
</reference>
<reference key="135">
    <citation type="journal article" date="1991" name="Hemoglobin">
        <title>A new abnormal variant, Hb Yahata or beta 112(G14)Cys--&gt;Tyr, found in a Japanese: structural confirmation by DNA sequencing of the beta-globin gene.</title>
        <authorList>
            <person name="Harano T."/>
            <person name="Harano K."/>
            <person name="Kushida Y."/>
            <person name="Ueda S."/>
        </authorList>
    </citation>
    <scope>VARIANT YAHATA TYR-113</scope>
</reference>
<reference key="136">
    <citation type="journal article" date="1981" name="Hemoglobin">
        <title>A new unstable hemoglobin, Hb Yokohama beta 31 (B13)Leu substituting for Pro, causing hemolytic anemia.</title>
        <authorList>
            <person name="Nakatsuji T."/>
            <person name="Miwa S."/>
            <person name="Ohba Y."/>
            <person name="Hattori Y."/>
            <person name="Miyaji T."/>
            <person name="Hino S."/>
            <person name="Matsumoto N."/>
        </authorList>
    </citation>
    <scope>VARIANT YOKOHAMA PRO-32</scope>
</reference>
<reference key="137">
    <citation type="journal article" date="1981" name="Hemoglobin">
        <title>Hemoglobin Hammersmith (beta 42 (CD1) Phe replaced by Ser) associated with severe hemolytic anemia.</title>
        <authorList>
            <person name="Rahbar S."/>
            <person name="Feagler R.J."/>
            <person name="Beutler E."/>
        </authorList>
    </citation>
    <scope>INVOLVEMENT IN HEIBAN</scope>
    <scope>VARIANT HAMMERSMITH SER-43</scope>
</reference>
<reference key="138">
    <citation type="journal article" date="1989" name="Hemoglobin">
        <title>Hb Bruxelles: alpha 2A beta (2)41 or 42(C7 or CD1)Phe deleted.</title>
        <authorList>
            <person name="Blouquit Y."/>
            <person name="Bardakdjian J."/>
            <person name="Lena-Russo D."/>
            <person name="Arous N."/>
            <person name="Perrimond H."/>
            <person name="Orsini A."/>
            <person name="Rosa J."/>
            <person name="Galacteros F."/>
        </authorList>
    </citation>
    <scope>INVOLVEMENT IN HEIBAN</scope>
    <scope>VARIANTS BRUXELLES PHE-42 DEL AND PHE-43 DEL</scope>
</reference>
<reference key="139">
    <citation type="journal article" date="1990" name="Hemoglobin">
        <title>Hb Zengcheng or alpha 2 beta(2)114(G16)Leu--&gt;Met.</title>
        <authorList>
            <person name="Plaseska D."/>
            <person name="Wilson J.B."/>
            <person name="Gu L.H."/>
            <person name="Kutlar F."/>
            <person name="Huisman T.H.J."/>
            <person name="Zeng Y.T."/>
            <person name="Shen M."/>
        </authorList>
    </citation>
    <scope>VARIANT ZENGCHENG MET-115</scope>
</reference>
<reference key="140">
    <citation type="journal article" date="1991" name="Blood">
        <title>Hb Beckman alpha135 (H13) ala-to-glu: a new unstable variant and reduced oxygen affinity.</title>
        <authorList>
            <person name="Rahbar S."/>
            <person name="Lee T."/>
            <person name="Asmeron Y."/>
        </authorList>
    </citation>
    <scope>VARIANT BECKMAN ASP-136</scope>
</reference>
<reference key="141">
    <citation type="journal article" date="1993" name="Br. J. Haematol.">
        <title>Haemoglobin Manukau beta 67[E11] Val--&gt;Gly: transfusion-dependent haemolytic anaemia ameliorated by coexisting alpha thalassaemia.</title>
        <authorList>
            <person name="Fay K.C."/>
            <person name="Brennan S.O."/>
            <person name="Costello J.M."/>
            <person name="Potter H.C."/>
            <person name="Williamson D.A."/>
            <person name="Trent R.J."/>
            <person name="Ockelford P.A."/>
            <person name="Boswell D.R."/>
        </authorList>
    </citation>
    <scope>VARIANT NON-SPHEROCYTIC HAEMOLITIC ANEMIA GLY-68</scope>
</reference>
<reference key="142">
    <citation type="journal article" date="1996" name="Blood">
        <title>A novel silent posttranslational mechanism converts methionine to aspartate in hemoglobin Bristol (beta 67[E11] Val-Met-&gt;Asp).</title>
        <authorList>
            <person name="Rees D.C."/>
            <person name="Rochette J."/>
            <person name="Schofield C."/>
            <person name="Green B."/>
            <person name="Morris M."/>
            <person name="Parker N.E."/>
            <person name="Sasaki H."/>
            <person name="Tanaka A."/>
            <person name="Ohba Y."/>
            <person name="Clegg J.B."/>
        </authorList>
    </citation>
    <scope>INVOLVEMENT IN HEIBAN</scope>
    <scope>VARIANT BRISTOL ASP-68</scope>
</reference>
<reference key="143">
    <citation type="journal article" date="1999" name="Am. J. Hematol.">
        <title>Hb Iraq-Halabja beta10 (A7) Ala--&gt;Val (GCC--&gt;GTC): a new beta-chain silent variant in a family with multiple Hb disorders.</title>
        <authorList>
            <person name="Deutsch S."/>
            <person name="Darbellay R."/>
            <person name="Offord R.E."/>
            <person name="Frutiger A."/>
            <person name="Kister J."/>
            <person name="Wajcman H."/>
            <person name="Beris P."/>
        </authorList>
    </citation>
    <scope>VARIANT IRAQ-HALABJA VAL-11</scope>
</reference>
<reference key="144">
    <citation type="journal article" date="2001" name="Hemoglobin">
        <title>Identification of Hb Villejuif [beta123(H1)Thr--&gt;Ile] in Southern Italy.</title>
        <authorList>
            <person name="Carbone V."/>
            <person name="Salzano A.M."/>
            <person name="Pagano L."/>
            <person name="Buffardi S."/>
            <person name="De Rosa C."/>
            <person name="Pucci P."/>
        </authorList>
    </citation>
    <scope>VARIANT VILLEJUIF ILE-124</scope>
</reference>
<reference key="145">
    <citation type="journal article" date="2001" name="Hemoglobin">
        <title>Hb Tsukumi [beta117(G19)His--&gt;Tyr] found in a Moroccan woman.</title>
        <authorList>
            <person name="North M.L."/>
            <person name="Duwig I."/>
            <person name="Riou J."/>
            <person name="Prome D."/>
            <person name="Yapo A.P."/>
            <person name="Kister J."/>
            <person name="Bardakdjian-Michau J."/>
            <person name="Cazenave J.-P."/>
            <person name="Wajcman H."/>
        </authorList>
    </citation>
    <scope>VARIANT TSUKUMI TYR-118</scope>
</reference>
<reference key="146">
    <citation type="journal article" date="2002" name="Hemoglobin">
        <title>Hb Canterbury [beta112(G14)Cys--&gt;Phe]: a new, mildly unstable variant.</title>
        <authorList>
            <person name="Brennan S.O."/>
            <person name="Potter H.C."/>
            <person name="Kubala L.M."/>
            <person name="Carnoutsos S.A."/>
            <person name="Ferguson M.M."/>
        </authorList>
    </citation>
    <scope>VARIANT CANTERBURY PHE-113</scope>
</reference>
<reference key="147">
    <citation type="journal article" date="2002" name="Hemoglobin">
        <title>Double heterozygosity for Hb Pyrgos [beta83(EF7)Gly--&gt;Asp] and Hb E [beta26(B8)Glu--&gt;Lys] found in association with alpha-thalassemia.</title>
        <authorList>
            <person name="Sawangareetrakul P."/>
            <person name="Svasti S."/>
            <person name="Yodsowon B."/>
            <person name="Winichagoon P."/>
            <person name="Srisomsap C."/>
            <person name="Svasti J."/>
            <person name="Fucharoen S."/>
        </authorList>
    </citation>
    <scope>VARIANT PYRGOS ASP-84</scope>
    <scope>VARIANT B-THAL LYS-27</scope>
</reference>
<reference key="148">
    <citation type="journal article" date="2003" name="Hemoglobin">
        <title>Hb Santander [beta34(B16)Val--&gt;Asp (GTC--&gt;GAC)]: a new unstable variant found as a de novo mutation in a Spanish patient.</title>
        <authorList>
            <person name="Villegas A."/>
            <person name="Ropero P."/>
            <person name="Nogales A."/>
            <person name="Gonzalez F.A."/>
            <person name="Mateo M."/>
            <person name="Mazo E."/>
            <person name="Rodrigo E."/>
            <person name="Arias M."/>
        </authorList>
    </citation>
    <scope>VARIANT SANTANDER ASP-35</scope>
</reference>
<reference key="149">
    <citation type="journal article" date="2003" name="Hemoglobin">
        <title>Two new hemoglobin variants with increased oxygen affinity: Hb Nantes [beta34(B16)Val--&gt;Leu] and Hb Vexin [beta116(G18)His--&gt;Leu].</title>
        <authorList>
            <person name="Wajcman H."/>
            <person name="Bardakdjian-Michau J."/>
            <person name="Riou J."/>
            <person name="Prehu C."/>
            <person name="Kister J."/>
            <person name="Baudin-Creuza V."/>
            <person name="Prome D."/>
            <person name="Richelme-David S."/>
            <person name="Harousseau J.L."/>
            <person name="Galacteros F."/>
        </authorList>
    </citation>
    <scope>VARIANT NANTES LEU-35</scope>
    <scope>VARIANT VEXIN LEU-117</scope>
</reference>
<reference key="150">
    <citation type="journal article" date="2004" name="Hemoglobin">
        <title>The 'hot-spot' of Hb E [beta26(B8)Glu--&gt;Lys] in Southeast Asia: beta-globin anomalies in the Lao Theung population of southern Laos.</title>
        <authorList>
            <person name="Flatz G."/>
            <person name="Sanguansermsri T."/>
            <person name="Sengchanh S."/>
            <person name="Horst D."/>
            <person name="Horst J."/>
        </authorList>
    </citation>
    <scope>VARIANT B-THAL LYS-27</scope>
</reference>
<reference key="151">
    <citation type="journal article" date="2010" name="Int. J. Lab. Hematol.">
        <title>A novel hemoglobin variant beta135(H13) Ala &gt; Asp identified in an asymptomatic Korean family by direct sequencing: suggesting a new insight into Hb Beckman mutation.</title>
        <authorList>
            <person name="Kim S.Y."/>
            <person name="Kim G.Y."/>
            <person name="Jo S.A."/>
            <person name="Lee E.H."/>
            <person name="Cho E.H."/>
            <person name="Hwang S.H."/>
            <person name="Lee E.Y."/>
        </authorList>
    </citation>
    <scope>VARIANT BECKMAN ASP-136</scope>
</reference>
<reference key="152">
    <citation type="journal article" date="2015" name="Anal. Biochem.">
        <title>Mass spectrometry based characterization of Hb Beckman variant in a falsely elevated HbA(1c) sample.</title>
        <authorList>
            <person name="Das R."/>
            <person name="Muralidharan M."/>
            <person name="Mitra G."/>
            <person name="Bhat V."/>
            <person name="Mathew B."/>
            <person name="Pal D."/>
            <person name="Ross C."/>
            <person name="Mandal A.K."/>
        </authorList>
    </citation>
    <scope>VARIANT BECKMAN ASP-136</scope>
    <scope>MASS SPECTROMETRY</scope>
</reference>
<reference key="153">
    <citation type="journal article" date="2017" name="Am. J. Hematol.">
        <title>Low affinity hemoglobinopathy (Hb Vigo) due to a new mutation of beta globin gene (c200 A&gt;T; Lys&gt;Ile). A cause of rare anemia misdiagnosis.</title>
        <authorList>
            <person name="Manu Pereira M.D."/>
            <person name="Ropero P."/>
            <person name="Loureiro C."/>
            <person name="Vives Corrons J.L."/>
        </authorList>
    </citation>
    <scope>VARIANT VIGO ILE-67</scope>
    <scope>FUNCTION</scope>
</reference>
<name>HBB_HUMAN</name>
<proteinExistence type="evidence at protein level"/>